<accession>P41180</accession>
<accession>Q13912</accession>
<accession>Q16108</accession>
<accession>Q16109</accession>
<accession>Q16110</accession>
<accession>Q16379</accession>
<accession>Q2M1T0</accession>
<accession>Q4PJ19</accession>
<name>CASR_HUMAN</name>
<sequence length="1078" mass="120675">MAFYSCCWVLLALTWHTSAYGPDQRAQKKGDIILGGLFPIHFGVAAKDQDLKSRPESVECIRYNFRGFRWLQAMIFAIEEINSSPALLPNLTLGYRIFDTCNTVSKALEATLSFVAQNKIDSLNLDEFCNCSEHIPSTIAVVGATGSGVSTAVANLLGLFYIPQVSYASSSRLLSNKNQFKSFLRTIPNDEHQATAMADIIEYFRWNWVGTIAADDDYGRPGIEKFREEAEERDICIDFSELISQYSDEEEIQHVVEVIQNSTAKVIVVFSSGPDLEPLIKEIVRRNITGKIWLASEAWASSSLIAMPQYFHVVGGTIGFALKAGQIPGFREFLKKVHPRKSVHNGFAKEFWEETFNCHLQEGAKGPLPVDTFLRGHEESGDRFSNSSTAFRPLCTGDENISSVETPYIDYTHLRISYNVYLAVYSIAHALQDIYTCLPGRGLFTNGSCADIKKVEAWQVLKHLRHLNFTNNMGEQVTFDECGDLVGNYSIINWHLSPEDGSIVFKEVGYYNVYAKKGERLFINEEKILWSGFSREVPFSNCSRDCLAGTRKGIIEGEPTCCFECVECPDGEYSDETDASACNKCPDDFWSNENHTSCIAKEIEFLSWTEPFGIALTLFAVLGIFLTAFVLGVFIKFRNTPIVKATNRELSYLLLFSLLCCFSSSLFFIGEPQDWTCRLRQPAFGISFVLCISCILVKTNRVLLVFEAKIPTSFHRKWWGLNLQFLLVFLCTFMQIVICVIWLYTAPPSSYRNQELEDEIIFITCHEGSLMALGFLIGYTCLLAAICFFFAFKSRKLPENFNEAKFITFSMLIFFIVWISFIPAYASTYGKFVSAVEVIAILAASFGLLACIFFNKIYIILFKPSRNTIEEVRCSTAAHAFKVAARATLRRSNVSRKRSSSLGGSTGSTPSSSISSKSNSEDPFPQPERQKQQQPLALTQQEQQQQPLTLPQQQRSQQQPRCKQKVIFGSGTVTFSLSFDEPQKNAMAHRNSTHQNSLEAQKSSDTLTRHEPLLPLQCGETDLDLTVQETGLQGPVGGDQRPEVEDPEELSPALVVSSSQSFVISGGGSTVTENVVNS</sequence>
<evidence type="ECO:0000250" key="1">
    <source>
        <dbReference type="UniProtKB" id="P48442"/>
    </source>
</evidence>
<evidence type="ECO:0000250" key="2">
    <source>
        <dbReference type="UniProtKB" id="Q9QY96"/>
    </source>
</evidence>
<evidence type="ECO:0000255" key="3"/>
<evidence type="ECO:0000256" key="4">
    <source>
        <dbReference type="SAM" id="MobiDB-lite"/>
    </source>
</evidence>
<evidence type="ECO:0000269" key="5">
    <source>
    </source>
</evidence>
<evidence type="ECO:0000269" key="6">
    <source>
    </source>
</evidence>
<evidence type="ECO:0000269" key="7">
    <source>
    </source>
</evidence>
<evidence type="ECO:0000269" key="8">
    <source>
    </source>
</evidence>
<evidence type="ECO:0000269" key="9">
    <source>
    </source>
</evidence>
<evidence type="ECO:0000269" key="10">
    <source>
    </source>
</evidence>
<evidence type="ECO:0000269" key="11">
    <source>
    </source>
</evidence>
<evidence type="ECO:0000269" key="12">
    <source>
    </source>
</evidence>
<evidence type="ECO:0000269" key="13">
    <source>
    </source>
</evidence>
<evidence type="ECO:0000269" key="14">
    <source>
    </source>
</evidence>
<evidence type="ECO:0000269" key="15">
    <source>
    </source>
</evidence>
<evidence type="ECO:0000269" key="16">
    <source>
    </source>
</evidence>
<evidence type="ECO:0000269" key="17">
    <source>
    </source>
</evidence>
<evidence type="ECO:0000269" key="18">
    <source>
    </source>
</evidence>
<evidence type="ECO:0000269" key="19">
    <source>
    </source>
</evidence>
<evidence type="ECO:0000269" key="20">
    <source>
    </source>
</evidence>
<evidence type="ECO:0000269" key="21">
    <source>
    </source>
</evidence>
<evidence type="ECO:0000269" key="22">
    <source>
    </source>
</evidence>
<evidence type="ECO:0000269" key="23">
    <source>
    </source>
</evidence>
<evidence type="ECO:0000269" key="24">
    <source>
    </source>
</evidence>
<evidence type="ECO:0000269" key="25">
    <source>
    </source>
</evidence>
<evidence type="ECO:0000269" key="26">
    <source>
    </source>
</evidence>
<evidence type="ECO:0000269" key="27">
    <source>
    </source>
</evidence>
<evidence type="ECO:0000269" key="28">
    <source>
    </source>
</evidence>
<evidence type="ECO:0000269" key="29">
    <source>
    </source>
</evidence>
<evidence type="ECO:0000269" key="30">
    <source>
    </source>
</evidence>
<evidence type="ECO:0000269" key="31">
    <source>
    </source>
</evidence>
<evidence type="ECO:0000269" key="32">
    <source>
    </source>
</evidence>
<evidence type="ECO:0000269" key="33">
    <source>
    </source>
</evidence>
<evidence type="ECO:0000269" key="34">
    <source>
    </source>
</evidence>
<evidence type="ECO:0000269" key="35">
    <source>
    </source>
</evidence>
<evidence type="ECO:0000269" key="36">
    <source>
    </source>
</evidence>
<evidence type="ECO:0000269" key="37">
    <source>
    </source>
</evidence>
<evidence type="ECO:0000269" key="38">
    <source>
    </source>
</evidence>
<evidence type="ECO:0000269" key="39">
    <source>
    </source>
</evidence>
<evidence type="ECO:0000269" key="40">
    <source>
    </source>
</evidence>
<evidence type="ECO:0000269" key="41">
    <source>
    </source>
</evidence>
<evidence type="ECO:0000269" key="42">
    <source>
    </source>
</evidence>
<evidence type="ECO:0000269" key="43">
    <source>
    </source>
</evidence>
<evidence type="ECO:0000269" key="44">
    <source>
    </source>
</evidence>
<evidence type="ECO:0000269" key="45">
    <source>
    </source>
</evidence>
<evidence type="ECO:0000269" key="46">
    <source>
    </source>
</evidence>
<evidence type="ECO:0000269" key="47">
    <source>
    </source>
</evidence>
<evidence type="ECO:0000269" key="48">
    <source>
    </source>
</evidence>
<evidence type="ECO:0000269" key="49">
    <source>
    </source>
</evidence>
<evidence type="ECO:0000269" key="50">
    <source>
    </source>
</evidence>
<evidence type="ECO:0000269" key="51">
    <source>
    </source>
</evidence>
<evidence type="ECO:0000269" key="52">
    <source>
    </source>
</evidence>
<evidence type="ECO:0000269" key="53">
    <source>
    </source>
</evidence>
<evidence type="ECO:0000269" key="54">
    <source>
    </source>
</evidence>
<evidence type="ECO:0000269" key="55">
    <source>
    </source>
</evidence>
<evidence type="ECO:0000269" key="56">
    <source>
    </source>
</evidence>
<evidence type="ECO:0000269" key="57">
    <source>
    </source>
</evidence>
<evidence type="ECO:0000269" key="58">
    <source>
    </source>
</evidence>
<evidence type="ECO:0000269" key="59">
    <source>
    </source>
</evidence>
<evidence type="ECO:0000269" key="60">
    <source>
    </source>
</evidence>
<evidence type="ECO:0000269" key="61">
    <source>
    </source>
</evidence>
<evidence type="ECO:0000269" key="62">
    <source>
    </source>
</evidence>
<evidence type="ECO:0000269" key="63">
    <source>
    </source>
</evidence>
<evidence type="ECO:0000269" key="64">
    <source>
    </source>
</evidence>
<evidence type="ECO:0000269" key="65">
    <source>
    </source>
</evidence>
<evidence type="ECO:0000269" key="66">
    <source>
    </source>
</evidence>
<evidence type="ECO:0000269" key="67">
    <source>
    </source>
</evidence>
<evidence type="ECO:0000269" key="68">
    <source>
    </source>
</evidence>
<evidence type="ECO:0000269" key="69">
    <source>
    </source>
</evidence>
<evidence type="ECO:0000269" key="70">
    <source>
    </source>
</evidence>
<evidence type="ECO:0000269" key="71">
    <source>
    </source>
</evidence>
<evidence type="ECO:0000269" key="72">
    <source>
    </source>
</evidence>
<evidence type="ECO:0000269" key="73">
    <source>
    </source>
</evidence>
<evidence type="ECO:0000269" key="74">
    <source>
    </source>
</evidence>
<evidence type="ECO:0000269" key="75">
    <source>
    </source>
</evidence>
<evidence type="ECO:0000269" key="76">
    <source>
    </source>
</evidence>
<evidence type="ECO:0000269" key="77">
    <source>
    </source>
</evidence>
<evidence type="ECO:0000269" key="78">
    <source>
    </source>
</evidence>
<evidence type="ECO:0000269" key="79">
    <source>
    </source>
</evidence>
<evidence type="ECO:0000269" key="80">
    <source>
    </source>
</evidence>
<evidence type="ECO:0000269" key="81">
    <source>
    </source>
</evidence>
<evidence type="ECO:0000269" key="82">
    <source ref="5"/>
</evidence>
<evidence type="ECO:0000303" key="83">
    <source>
    </source>
</evidence>
<evidence type="ECO:0000303" key="84">
    <source>
    </source>
</evidence>
<evidence type="ECO:0000303" key="85">
    <source>
    </source>
</evidence>
<evidence type="ECO:0000303" key="86">
    <source>
    </source>
</evidence>
<evidence type="ECO:0000303" key="87">
    <source>
    </source>
</evidence>
<evidence type="ECO:0000303" key="88">
    <source>
    </source>
</evidence>
<evidence type="ECO:0000303" key="89">
    <source>
    </source>
</evidence>
<evidence type="ECO:0000303" key="90">
    <source>
    </source>
</evidence>
<evidence type="ECO:0000305" key="91"/>
<evidence type="ECO:0000305" key="92">
    <source>
    </source>
</evidence>
<evidence type="ECO:0000312" key="93">
    <source>
        <dbReference type="HGNC" id="HGNC:1514"/>
    </source>
</evidence>
<evidence type="ECO:0007744" key="94">
    <source>
        <dbReference type="PDB" id="5FBH"/>
    </source>
</evidence>
<evidence type="ECO:0007744" key="95">
    <source>
        <dbReference type="PDB" id="5FBK"/>
    </source>
</evidence>
<evidence type="ECO:0007744" key="96">
    <source>
        <dbReference type="PDB" id="5K5S"/>
    </source>
</evidence>
<evidence type="ECO:0007744" key="97">
    <source>
        <dbReference type="PDB" id="5K5T"/>
    </source>
</evidence>
<evidence type="ECO:0007744" key="98">
    <source>
        <dbReference type="PDB" id="7DTT"/>
    </source>
</evidence>
<evidence type="ECO:0007744" key="99">
    <source>
        <dbReference type="PDB" id="7DTU"/>
    </source>
</evidence>
<evidence type="ECO:0007744" key="100">
    <source>
        <dbReference type="PDB" id="7DTV"/>
    </source>
</evidence>
<evidence type="ECO:0007744" key="101">
    <source>
        <dbReference type="PDB" id="7DTW"/>
    </source>
</evidence>
<evidence type="ECO:0007744" key="102">
    <source>
        <dbReference type="PDB" id="7E6T"/>
    </source>
</evidence>
<evidence type="ECO:0007744" key="103">
    <source>
        <dbReference type="PDB" id="7E6U"/>
    </source>
</evidence>
<evidence type="ECO:0007744" key="104">
    <source>
        <dbReference type="PDB" id="7M3E"/>
    </source>
</evidence>
<evidence type="ECO:0007744" key="105">
    <source>
        <dbReference type="PDB" id="7M3F"/>
    </source>
</evidence>
<evidence type="ECO:0007744" key="106">
    <source>
        <dbReference type="PDB" id="7M3G"/>
    </source>
</evidence>
<evidence type="ECO:0007744" key="107">
    <source>
        <dbReference type="PDB" id="7M3J"/>
    </source>
</evidence>
<evidence type="ECO:0007744" key="108">
    <source>
        <dbReference type="PDB" id="7SIL"/>
    </source>
</evidence>
<evidence type="ECO:0007744" key="109">
    <source>
        <dbReference type="PDB" id="7SIM"/>
    </source>
</evidence>
<evidence type="ECO:0007744" key="110">
    <source>
        <dbReference type="PDB" id="7SIN"/>
    </source>
</evidence>
<evidence type="ECO:0007744" key="111">
    <source>
        <dbReference type="PDB" id="8SZF"/>
    </source>
</evidence>
<evidence type="ECO:0007744" key="112">
    <source>
        <dbReference type="PDB" id="8SZG"/>
    </source>
</evidence>
<evidence type="ECO:0007744" key="113">
    <source>
        <dbReference type="PDB" id="8SZH"/>
    </source>
</evidence>
<evidence type="ECO:0007744" key="114">
    <source>
        <dbReference type="PDB" id="8SZI"/>
    </source>
</evidence>
<evidence type="ECO:0007744" key="115">
    <source>
        <dbReference type="PDB" id="8WPG"/>
    </source>
</evidence>
<evidence type="ECO:0007744" key="116">
    <source>
        <dbReference type="PDB" id="8WPU"/>
    </source>
</evidence>
<evidence type="ECO:0007744" key="117">
    <source>
        <dbReference type="PDB" id="9ASB"/>
    </source>
</evidence>
<evidence type="ECO:0007744" key="118">
    <source>
        <dbReference type="PDB" id="9AVG"/>
    </source>
</evidence>
<evidence type="ECO:0007744" key="119">
    <source>
        <dbReference type="PDB" id="9AVL"/>
    </source>
</evidence>
<evidence type="ECO:0007744" key="120">
    <source>
        <dbReference type="PDB" id="9AXF"/>
    </source>
</evidence>
<evidence type="ECO:0007744" key="121">
    <source>
        <dbReference type="PDB" id="9AYF"/>
    </source>
</evidence>
<evidence type="ECO:0007829" key="122">
    <source>
        <dbReference type="PDB" id="5FBH"/>
    </source>
</evidence>
<evidence type="ECO:0007829" key="123">
    <source>
        <dbReference type="PDB" id="5FBK"/>
    </source>
</evidence>
<evidence type="ECO:0007829" key="124">
    <source>
        <dbReference type="PDB" id="5K5T"/>
    </source>
</evidence>
<evidence type="ECO:0007829" key="125">
    <source>
        <dbReference type="PDB" id="7DTV"/>
    </source>
</evidence>
<evidence type="ECO:0007829" key="126">
    <source>
        <dbReference type="PDB" id="7E6T"/>
    </source>
</evidence>
<evidence type="ECO:0007829" key="127">
    <source>
        <dbReference type="PDB" id="7M3G"/>
    </source>
</evidence>
<evidence type="ECO:0007829" key="128">
    <source>
        <dbReference type="PDB" id="7SIL"/>
    </source>
</evidence>
<evidence type="ECO:0007829" key="129">
    <source>
        <dbReference type="PDB" id="8SZF"/>
    </source>
</evidence>
<evidence type="ECO:0007829" key="130">
    <source>
        <dbReference type="PDB" id="8SZH"/>
    </source>
</evidence>
<evidence type="ECO:0007829" key="131">
    <source>
        <dbReference type="PDB" id="8WPG"/>
    </source>
</evidence>
<protein>
    <recommendedName>
        <fullName evidence="91">Extracellular calcium-sensing receptor</fullName>
        <shortName evidence="88 90">CaR</shortName>
        <shortName evidence="83">CaSR</shortName>
        <shortName evidence="85">hCasR</shortName>
    </recommendedName>
    <alternativeName>
        <fullName evidence="89">Parathyroid cell calcium-sensing receptor 1</fullName>
        <shortName evidence="89">PCaR1</shortName>
    </alternativeName>
</protein>
<reference key="1">
    <citation type="journal article" date="1996" name="N. Engl. J. Med.">
        <title>A familial syndrome of hypocalcemia with hypercalciuria due to mutations in the calcium-sensing receptor.</title>
        <authorList>
            <person name="Pearce S.H.S."/>
            <person name="Williamson C."/>
            <person name="Kifor O."/>
            <person name="Bai M."/>
            <person name="Coulthard M.G."/>
            <person name="Davies M."/>
            <person name="Lewis-Barned N."/>
            <person name="McCredie D."/>
            <person name="Powell H."/>
            <person name="Kendall-Taylor P."/>
            <person name="Brown E.M."/>
            <person name="Thakker R.V."/>
        </authorList>
    </citation>
    <scope>NUCLEOTIDE SEQUENCE [GENOMIC DNA]</scope>
    <scope>VARIANTS HYPOC1 LYS-118; LEU-128; MET-151; LYS-191 AND SER-612</scope>
    <scope>CHARACTERIZATION OF VARIANTS HYPOC1 LEU-128; MET-151 AND LYS-191</scope>
</reference>
<reference key="2">
    <citation type="journal article" date="1995" name="J. Biol. Chem.">
        <title>Molecular cloning and functional expression of human parathyroid calcium receptor cDNAs.</title>
        <authorList>
            <person name="Garrett J.E."/>
            <person name="Capuano I.V."/>
            <person name="Hammerland L.G."/>
            <person name="Hung B.C."/>
            <person name="Brown E.M."/>
            <person name="Hebert S.C."/>
            <person name="Nemeth E.F."/>
            <person name="Fuller F."/>
        </authorList>
    </citation>
    <scope>NUCLEOTIDE SEQUENCE [MRNA] (ISOFORMS 1 AND 2)</scope>
    <scope>FUNCTION</scope>
    <scope>VARIANT GLY-990</scope>
    <source>
        <tissue>Parathyroid</tissue>
    </source>
</reference>
<reference key="3">
    <citation type="journal article" date="1995" name="Biochem. Biophys. Res. Commun.">
        <title>Molecular cloning of a putative Ca(2+)-sensing receptor cDNA from human kidney.</title>
        <authorList>
            <person name="Aida K."/>
            <person name="Koishi S."/>
            <person name="Tawata M."/>
            <person name="Onaya T."/>
        </authorList>
    </citation>
    <scope>NUCLEOTIDE SEQUENCE [MRNA] (ISOFORM 1)</scope>
    <source>
        <tissue>Kidney</tissue>
    </source>
</reference>
<reference key="4">
    <citation type="journal article" date="1996" name="Endocrinology">
        <title>Expression of a calcium-sensing receptor in a human medullary thyroid carcinoma cell line and its contribution to calcitonin secretion.</title>
        <authorList>
            <person name="Freichel M."/>
            <person name="Zink-Lorenz A."/>
            <person name="Holloschi A."/>
            <person name="Hafner M."/>
            <person name="Flockerzi V."/>
            <person name="Raue F."/>
        </authorList>
    </citation>
    <scope>NUCLEOTIDE SEQUENCE [MRNA] (ISOFORM 1)</scope>
</reference>
<reference key="5">
    <citation type="submission" date="2005-06" db="EMBL/GenBank/DDBJ databases">
        <authorList>
            <consortium name="SeattleSNPs variation discovery resource"/>
        </authorList>
    </citation>
    <scope>NUCLEOTIDE SEQUENCE [GENOMIC DNA]</scope>
    <scope>VARIANTS SER-986; GLY-990 AND GLN-1011</scope>
</reference>
<reference key="6">
    <citation type="journal article" date="2004" name="Genome Res.">
        <title>The status, quality, and expansion of the NIH full-length cDNA project: the Mammalian Gene Collection (MGC).</title>
        <authorList>
            <consortium name="The MGC Project Team"/>
        </authorList>
    </citation>
    <scope>NUCLEOTIDE SEQUENCE [LARGE SCALE MRNA] (ISOFORM 1)</scope>
    <source>
        <tissue>Brain</tissue>
    </source>
</reference>
<reference key="7">
    <citation type="journal article" date="1995" name="J. Clin. Endocrinol. Metab.">
        <title>Familial hypocalciuric hypercalcemia associated with mutation in the human Ca(2+)-sensing receptor gene.</title>
        <authorList>
            <person name="Aida K."/>
            <person name="Koishi S."/>
            <person name="Inoue M."/>
            <person name="Nakazato M."/>
            <person name="Tawata M."/>
            <person name="Onaya T."/>
        </authorList>
    </citation>
    <scope>NUCLEOTIDE SEQUENCE [MRNA] OF 1-61</scope>
    <scope>VARIANT HHC1 ALA-39</scope>
</reference>
<reference key="8">
    <citation type="journal article" date="1996" name="J. Clin. Invest.">
        <title>Changes in calcium responsiveness and handling during keratinocyte differentiation. Potential role of the calcium receptor.</title>
        <authorList>
            <person name="Bikle D.D."/>
            <person name="Ratnam A."/>
            <person name="Mauro T."/>
            <person name="Harris J."/>
            <person name="Pillai S."/>
        </authorList>
    </citation>
    <scope>NUCLEOTIDE SEQUENCE [MRNA] OF 643-908</scope>
</reference>
<reference key="9">
    <citation type="journal article" date="1998" name="J. Biol. Chem.">
        <title>Protein kinase C phosphorylation of threonine at position 888 in Ca2+o-sensing receptor (CaR) inhibits coupling to Ca2+ store release.</title>
        <authorList>
            <person name="Bai M."/>
            <person name="Trivedi S."/>
            <person name="Lane C.R."/>
            <person name="Yang Y."/>
            <person name="Quinn S.J."/>
            <person name="Brown E.M."/>
        </authorList>
    </citation>
    <scope>PHOSPHORYLATION AT THR-888</scope>
    <scope>MUTAGENESIS OF THR-888; SER-895 AND SER-915</scope>
</reference>
<reference key="10">
    <citation type="journal article" date="1999" name="Proc. Natl. Acad. Sci. U.S.A.">
        <title>Intermolecular interactions between dimeric calcium-sensing receptor monomers are important for its normal function.</title>
        <authorList>
            <person name="Bai M."/>
            <person name="Trivedi S."/>
            <person name="Kifor O."/>
            <person name="Quinn S.J."/>
            <person name="Brown E.M."/>
        </authorList>
    </citation>
    <scope>SUBUNIT</scope>
    <scope>CHARACTERIZATION OF VARIANTS HHC1 GLU-143 AND LYS-297</scope>
</reference>
<reference key="11">
    <citation type="journal article" date="2006" name="J. Biol. Chem.">
        <title>Calcium-sensing receptor ubiquitination and degradation mediated by the E3 ubiquitin ligase dorfin.</title>
        <authorList>
            <person name="Huang Y."/>
            <person name="Niwa J."/>
            <person name="Sobue G."/>
            <person name="Breitwieser G.E."/>
        </authorList>
    </citation>
    <scope>INTERACTION WITH VCP</scope>
    <scope>GLYCOSYLATION</scope>
    <scope>UBIQUITINATION</scope>
</reference>
<reference key="12">
    <citation type="journal article" date="2007" name="J. Biol. Chem.">
        <title>Protein kinase C-mediated phosphorylation of the calcium-sensing receptor is stimulated by receptor activation and attenuated by calyculin-sensitive phosphatase activity.</title>
        <authorList>
            <person name="Davies S.L."/>
            <person name="Ozawa A."/>
            <person name="McCormick W.D."/>
            <person name="Dvorak M.M."/>
            <person name="Ward D.T."/>
        </authorList>
    </citation>
    <scope>PHOSPHORYLATION AT THR-888</scope>
    <scope>MUTAGENESIS OF THR-888</scope>
</reference>
<reference key="13">
    <citation type="journal article" date="2007" name="Proc. Natl. Acad. Sci. U.S.A.">
        <title>Structures of the extracellular regions of the group II/III metabotropic glutamate receptors.</title>
        <authorList>
            <person name="Muto T."/>
            <person name="Tsuchiya D."/>
            <person name="Morikawa K."/>
            <person name="Jingami H."/>
        </authorList>
    </citation>
    <scope>DOMAIN</scope>
</reference>
<reference key="14">
    <citation type="journal article" date="2010" name="Endocrinology">
        <title>Rab1 small GTP-binding protein regulates cell surface trafficking of the human calcium-sensing receptor.</title>
        <authorList>
            <person name="Zhuang X."/>
            <person name="Adipietro K.A."/>
            <person name="Datta S."/>
            <person name="Northup J.K."/>
            <person name="Ray K."/>
        </authorList>
    </citation>
    <scope>SUBCELLULAR LOCATION</scope>
    <scope>GLYCOSYLATION</scope>
</reference>
<reference key="15">
    <citation type="journal article" date="2015" name="Mol. Pharmacol.">
        <title>Critical cysteine residues in both the calcium-sensing receptor and the allosteric activator AMG 416 underlie the mechanism of action.</title>
        <authorList>
            <person name="Alexander S.T."/>
            <person name="Hunter T."/>
            <person name="Walter S."/>
            <person name="Dong J."/>
            <person name="Maclean D."/>
            <person name="Baruch A."/>
            <person name="Subramanian R."/>
            <person name="Tomlinson J."/>
        </authorList>
    </citation>
    <scope>ACTIVITY REGULATION</scope>
    <scope>MUTAGENESIS OF CYS-482</scope>
</reference>
<reference key="16">
    <citation type="journal article" date="2016" name="J. Biol. Chem.">
        <title>Positive Allosteric Modulation of the Calcium-sensing Receptor by Physiological Concentrations of Glucose.</title>
        <authorList>
            <person name="Medina J."/>
            <person name="Nakagawa Y."/>
            <person name="Nagasawa M."/>
            <person name="Fernandez A."/>
            <person name="Sakaguchi K."/>
            <person name="Kitaguchi T."/>
            <person name="Kojima I."/>
        </authorList>
    </citation>
    <scope>ACTIVITY REGULATION</scope>
</reference>
<reference key="17">
    <citation type="journal article" date="2020" name="Nat. Commun.">
        <title>Calcium-sensing receptor-mediated NLRP3 inflammasome response to calciprotein particles drives inflammation in rheumatoid arthritis.</title>
        <authorList>
            <person name="Jaeger E."/>
            <person name="Murthy S."/>
            <person name="Schmidt C."/>
            <person name="Hahn M."/>
            <person name="Strobel S."/>
            <person name="Peters A."/>
            <person name="Staeubert C."/>
            <person name="Sungur P."/>
            <person name="Venus T."/>
            <person name="Geisler M."/>
            <person name="Radusheva V."/>
            <person name="Raps S."/>
            <person name="Rothe K."/>
            <person name="Scholz R."/>
            <person name="Jung S."/>
            <person name="Wagner S."/>
            <person name="Pierer M."/>
            <person name="Seifert O."/>
            <person name="Chang W."/>
            <person name="Estrela-Lopis I."/>
            <person name="Raulien N."/>
            <person name="Krohn K."/>
            <person name="Straeter N."/>
            <person name="Hoeppener S."/>
            <person name="Schoeneberg T."/>
            <person name="Rossol M."/>
            <person name="Wagner U."/>
        </authorList>
    </citation>
    <scope>FUNCTION</scope>
</reference>
<reference key="18">
    <citation type="journal article" date="2020" name="Proc. Natl. Acad. Sci. U.S.A.">
        <title>Illuminating the allosteric modulation of the calcium-sensing receptor.</title>
        <authorList>
            <person name="Liu H."/>
            <person name="Yi P."/>
            <person name="Zhao W."/>
            <person name="Wu Y."/>
            <person name="Acher F."/>
            <person name="Pin J.P."/>
            <person name="Liu J."/>
            <person name="Rondard P."/>
        </authorList>
    </citation>
    <scope>FUNCTION</scope>
    <scope>SUBUNIT</scope>
    <scope>MUTAGENESIS OF SER-170; ASP-190; GLN-193; ASP-216; TYR-218; SER-272; ASP-275 AND GLU-297</scope>
</reference>
<reference evidence="96 97" key="19">
    <citation type="journal article" date="2016" name="Elife">
        <title>Structural mechanism of ligand activation in human calcium-sensing receptor.</title>
        <authorList>
            <person name="Geng Y."/>
            <person name="Mosyak L."/>
            <person name="Kurinov I."/>
            <person name="Zuo H."/>
            <person name="Sturchler E."/>
            <person name="Cheng T.C."/>
            <person name="Subramanyam P."/>
            <person name="Brown A.P."/>
            <person name="Brennan S.C."/>
            <person name="Mun H.C."/>
            <person name="Bush M."/>
            <person name="Chen Y."/>
            <person name="Nguyen T.X."/>
            <person name="Cao B."/>
            <person name="Chang D.D."/>
            <person name="Quick M."/>
            <person name="Conigrave A.D."/>
            <person name="Colecraft H.M."/>
            <person name="McDonald P."/>
            <person name="Fan Q.R."/>
        </authorList>
    </citation>
    <scope>X-RAY CRYSTALLOGRAPHY (2.60 ANGSTROMS) OF 20-607 IN COMPLEX WITH CALCIUM; PHOSPHATE AND SULFATE ANIONS AND TRYPTOPHAN</scope>
    <scope>FUNCTION</scope>
    <scope>ACTIVITY REGULATION</scope>
    <scope>DOMAIN</scope>
    <scope>DISULFIDE BONDS</scope>
    <scope>GLYCOSYLATION AT ASN-261; ASN-287; ASN-446; ASN-468; ASN-488; ASN-541 AND ASN-594</scope>
    <scope>MUTAGENESIS OF ARG-69; ASN-102; THR-145; SER-147; SER-170; TYR-218; SER-417 AND TRP-458</scope>
    <scope>CHARACTERIZATION OF VARIANTS NSHPT ILE-100; LEU-227 AND LYS-551</scope>
    <scope>CHARACTERIZATION OF VARIANTS HHC1 HIS-66; MET-81; PRO-159; GLY-172; GLY-215; LYS-297 AND GLU-557</scope>
</reference>
<reference evidence="94 95" key="20">
    <citation type="journal article" date="2016" name="Sci. Adv.">
        <title>Structural basis for regulation of human calcium-sensing receptor by magnesium ions and an unexpected tryptophan derivative co-agonist.</title>
        <authorList>
            <person name="Zhang C."/>
            <person name="Zhang T."/>
            <person name="Zou J."/>
            <person name="Miller C.L."/>
            <person name="Gorkhali R."/>
            <person name="Yang J.Y."/>
            <person name="Schilmiller A."/>
            <person name="Wang S."/>
            <person name="Huang K."/>
            <person name="Brown E.M."/>
            <person name="Moremen K.W."/>
            <person name="Hu J."/>
            <person name="Yang J.J."/>
        </authorList>
    </citation>
    <scope>X-RAY CRYSTALLOGRAPHY (2.10 ANGSTROMS) OF 20-541 IN COMPLEX WITH MAGNESIUM AND TRYPTOPHAN</scope>
    <scope>FUNCTION</scope>
    <scope>ACTIVITY REGULATION</scope>
    <scope>DOMAIN</scope>
    <scope>DISULFIDE BONDS</scope>
    <scope>MUTAGENESIS OF GLU-297</scope>
</reference>
<reference evidence="98 99 100 101" key="21">
    <citation type="journal article" date="2021" name="Cell Res.">
        <title>Structural mechanism of cooperative activation of the human calcium-sensing receptor by Ca2+ ions and L-tryptophan.</title>
        <authorList>
            <person name="Ling S."/>
            <person name="Shi P."/>
            <person name="Liu S."/>
            <person name="Meng X."/>
            <person name="Zhou Y."/>
            <person name="Sun W."/>
            <person name="Chang S."/>
            <person name="Zhang X."/>
            <person name="Zhang L."/>
            <person name="Shi C."/>
            <person name="Sun D."/>
            <person name="Liu L."/>
            <person name="Tian C."/>
        </authorList>
    </citation>
    <scope>STRUCTURE BY ELECTRON MICROSCOPY (3.50 ANGSTROMS) OF 20-1078</scope>
    <scope>DISULFIDE BONDS</scope>
    <scope>FUNCTION</scope>
    <scope>GLYCOSYLATION AT ASN-261; ASN-287; ASN-446; ASN-468 AND ASN-488</scope>
    <scope>MUTAGENESIS OF LEU-51; TRP-70; THR-145; SER-147; SER-170; TYR-218; GLU-297; PHE-444; TRP-458; 603-ILE--PHE-605; 761-ILE--ILE-763 AND PHE-762</scope>
    <scope>CHARACTERIZATION OF VARIANT HHC1 GLU-557</scope>
</reference>
<reference evidence="102 103" key="22">
    <citation type="journal article" date="2021" name="Elife">
        <title>Structural insights into the activation of human calcium-sensing receptor.</title>
        <authorList>
            <person name="Chen X."/>
            <person name="Wang L."/>
            <person name="Cui Q."/>
            <person name="Ding Z."/>
            <person name="Han L."/>
            <person name="Kou Y."/>
            <person name="Zhang W."/>
            <person name="Wang H."/>
            <person name="Jia X."/>
            <person name="Dai M."/>
            <person name="Shi Z."/>
            <person name="Li Y."/>
            <person name="Li X."/>
            <person name="Geng Y."/>
        </authorList>
    </citation>
    <scope>STRUCTURE BY ELECTRON MICROSCOPY (3.00 ANGSTROMS) OF 20-870 IN COMPLEX WITH CALCIUM</scope>
    <scope>FUNCTION</scope>
    <scope>SUBUNIT</scope>
    <scope>DISULFIDE BONDS</scope>
    <scope>MUTAGENESIS OF THR-145; SER-147; SER-170; ASP-190; TYR-218 AND TYR-489</scope>
    <scope>CHARACTERIZATION OF VARIANT HHC1 LYS-297</scope>
</reference>
<reference evidence="104 105 106 107" key="23">
    <citation type="journal article" date="2021" name="Nature">
        <title>Asymmetric activation of the calcium-sensing receptor homodimer.</title>
        <authorList>
            <person name="Gao Y."/>
            <person name="Robertson M.J."/>
            <person name="Rahman S.N."/>
            <person name="Seven A.B."/>
            <person name="Zhang C."/>
            <person name="Meyerowitz J.G."/>
            <person name="Panova O."/>
            <person name="Hannan F.M."/>
            <person name="Thakker R.V."/>
            <person name="Braeuner-Osborne H."/>
            <person name="Mathiesen J.M."/>
            <person name="Skiniotis G."/>
        </authorList>
    </citation>
    <scope>STRUCTURE BY ELECTRON MICROSCOPY (2.50 ANGSTROMS) OF 20-894 IN COMPLEX WITH CALCIUM</scope>
    <scope>FUNCTION</scope>
    <scope>ACTIVITY REGULATION</scope>
    <scope>SUBUNIT</scope>
    <scope>DISULFIDE BONDS</scope>
    <scope>MUTAGENESIS OF LEU-773; CYS-781; ILE-822 AND VAL-833</scope>
</reference>
<reference evidence="108 109 110" key="24">
    <citation type="journal article" date="2021" name="Proc. Natl. Acad. Sci. U.S.A.">
        <title>Symmetric activation and modulation of the human calcium-sensing receptor.</title>
        <authorList>
            <person name="Park J."/>
            <person name="Zuo H."/>
            <person name="Frangaj A."/>
            <person name="Fu Z."/>
            <person name="Yen L.Y."/>
            <person name="Zhang Z."/>
            <person name="Mosyak L."/>
            <person name="Slavkovich V.N."/>
            <person name="Liu J."/>
            <person name="Ray K.M."/>
            <person name="Cao B."/>
            <person name="Vallese F."/>
            <person name="Geng Y."/>
            <person name="Chen S."/>
            <person name="Grassucci R."/>
            <person name="Dandey V.P."/>
            <person name="Tan Y.Z."/>
            <person name="Eng E."/>
            <person name="Lee Y."/>
            <person name="Kloss B."/>
            <person name="Liu Z."/>
            <person name="Hendrickson W.A."/>
            <person name="Potter C.S."/>
            <person name="Carragher B."/>
            <person name="Graziano J."/>
            <person name="Conigrave A.D."/>
            <person name="Frank J."/>
            <person name="Clarke O.B."/>
            <person name="Fan Q.R."/>
        </authorList>
    </citation>
    <scope>STRUCTURE BY ELECTRON MICROSCOPY (2.70 ANGSTROMS) OF 1-870</scope>
    <scope>DISULFIDE BONDS</scope>
</reference>
<reference evidence="115 116" key="25">
    <citation type="journal article" date="2024" name="Cell Res.">
        <title>Structural insights into asymmetric activation of the calcium-sensing receptor-Gq complex.</title>
        <authorList>
            <person name="Ling S."/>
            <person name="Meng X."/>
            <person name="Zhang Y."/>
            <person name="Xia Z."/>
            <person name="Zhou Y."/>
            <person name="Yang F."/>
            <person name="Shi P."/>
            <person name="Shi C."/>
            <person name="Tian C."/>
        </authorList>
    </citation>
    <scope>STRUCTURE BY ELECTRON MICROSCOPY (2.70 ANGSTROMS) OF 20-892 IN COMPLEX WITH GNB1 AND GNG2</scope>
    <scope>ACTIVITY REGULATION</scope>
    <scope>SUBUNIT</scope>
    <scope>DISULFIDE BONDS</scope>
</reference>
<reference evidence="111 112 113 114" key="26">
    <citation type="journal article" date="2024" name="Nature">
        <title>Allosteric modulation and G-protein selectivity of the Ca2+-sensing receptor.</title>
        <authorList>
            <person name="He F."/>
            <person name="Wu C.G."/>
            <person name="Gao Y."/>
            <person name="Rahman S.N."/>
            <person name="Zaoralova M."/>
            <person name="Papasergi-Scott M.M."/>
            <person name="Gu T.J."/>
            <person name="Robertson M.J."/>
            <person name="Seven A.B."/>
            <person name="Li L."/>
            <person name="Mathiesen J.M."/>
            <person name="Skiniotis G."/>
        </authorList>
    </citation>
    <scope>STRUCTURE BY ELECTRON MICROSCOPY (2.80 ANGSTROMS) OF 19-894</scope>
    <scope>FUNCTION</scope>
    <scope>ACTIVITY REGULATION</scope>
    <scope>DOMAIN</scope>
    <scope>PHOSPHORYLATION AT THR-888</scope>
    <scope>DISULFIDE BONDS</scope>
    <scope>MUTAGENESIS OF LYS-709; ILE-710; PRO-711; 712-THR--PHE-714; 716-ARG--TRP-719; LYS-805; PHE-809; TYR-825; TYR-829; VAL-833; 881-PHE--THR-888; ALA-884 AND ALA-887</scope>
</reference>
<reference evidence="117 118 119 120 121" key="27">
    <citation type="journal article" date="2024" name="Nature">
        <title>Promiscuous G-protein activation by the calcium-sensing receptor.</title>
        <authorList>
            <person name="Zuo H."/>
            <person name="Park J."/>
            <person name="Frangaj A."/>
            <person name="Ye J."/>
            <person name="Lu G."/>
            <person name="Manning J.J."/>
            <person name="Asher W.B."/>
            <person name="Lu Z."/>
            <person name="Hu G.B."/>
            <person name="Wang L."/>
            <person name="Mendez J."/>
            <person name="Eng E."/>
            <person name="Zhang Z."/>
            <person name="Lin X."/>
            <person name="Grassucci R."/>
            <person name="Hendrickson W.A."/>
            <person name="Clarke O.B."/>
            <person name="Javitch J.A."/>
            <person name="Conigrave A.D."/>
            <person name="Fan Q.R."/>
        </authorList>
    </citation>
    <scope>STRUCTURE BY ELECTRON MICROSCOPY (3.40 ANGSTROMS) OF 1-903</scope>
    <scope>FUNCTION</scope>
    <scope>ACTIVITY REGULATION</scope>
    <scope>DOMAIN</scope>
    <scope>DISULFIDE BONDS</scope>
    <scope>MUTAGENESIS OF PHE-706; PHE-801; LEU-812; ILE-813; ILE-816 AND 873-ARG--THR-876</scope>
</reference>
<reference key="28">
    <citation type="journal article" date="1993" name="Cell">
        <title>Mutations in the human Ca(2+)-sensing receptor gene cause familial hypocalciuric hypercalcemia and neonatal severe hyperparathyroidism.</title>
        <authorList>
            <person name="Pollak M.R."/>
            <person name="Brown E.M."/>
            <person name="Chou Y.-H.W."/>
            <person name="Hebert S.C."/>
            <person name="Marx S.J."/>
            <person name="Steinmann B."/>
            <person name="Levi T."/>
            <person name="Seidman C.E."/>
            <person name="Seidman J.G."/>
        </authorList>
    </citation>
    <scope>VARIANTS HHC1 GLN-185; LYS-297 AND TRP-795</scope>
</reference>
<reference key="29">
    <citation type="journal article" date="1994" name="Nat. Genet.">
        <title>Autosomal dominant hypocalcaemia caused by a Ca(2+)-sensing receptor gene mutation.</title>
        <authorList>
            <person name="Pollak M.R."/>
            <person name="Brown E.M."/>
            <person name="Estep H.L."/>
            <person name="McLaine P.N."/>
            <person name="Kifor O."/>
            <person name="Park J."/>
            <person name="Hebert S.C."/>
            <person name="Seidman C.E."/>
            <person name="Seidman J.G."/>
        </authorList>
    </citation>
    <scope>VARIANT HYPOC1 ALA-127</scope>
</reference>
<reference key="30">
    <citation type="journal article" date="1995" name="Am. J. Hum. Genet.">
        <title>Mutations in the human Ca(2+)-sensing-receptor gene that cause familial hypocalciuric hypercalcemia.</title>
        <authorList>
            <person name="Chou Y.-H.W."/>
            <person name="Pollak M.R."/>
            <person name="Brandi M.L."/>
            <person name="Toss G."/>
            <person name="Arnqvist H."/>
            <person name="Atkinson A.B."/>
            <person name="Papapoulos S.E."/>
            <person name="Marx S."/>
            <person name="Brown E.M."/>
            <person name="Seidman J.G."/>
            <person name="Seidman C.E."/>
        </authorList>
    </citation>
    <scope>VARIANTS HHC1 MET-62; CYS-66; MET-138; GLU-143 AND GLN-227</scope>
</reference>
<reference key="31">
    <citation type="journal article" date="1995" name="J. Clin. Invest.">
        <title>Calcium-sensing receptor mutations in familial benign hypercalcemia and neonatal hyperparathyroidism.</title>
        <authorList>
            <person name="Pearce S.H.S."/>
            <person name="Trump D."/>
            <person name="Wooding C."/>
            <person name="Besser G.M."/>
            <person name="Chew S.L."/>
            <person name="Grant D.B."/>
            <person name="Heath D.A."/>
            <person name="Hughes I.A."/>
            <person name="Paterson C.R."/>
            <person name="Whyte M.P."/>
            <person name="Thakker R.V."/>
        </authorList>
    </citation>
    <scope>VARIANTS NSHPT LEU-227 AND TYR-582</scope>
</reference>
<reference key="32">
    <citation type="journal article" date="1996" name="Hum. Genet.">
        <title>The Ca(2+)-sensing receptor gene (PCAR1) mutation T151M in isolated autosomal dominant hypoparathyroidism.</title>
        <authorList>
            <person name="Lovlie R."/>
            <person name="Eiken H.G."/>
            <person name="Sorheim J.I."/>
            <person name="Boman H."/>
        </authorList>
    </citation>
    <scope>VARIANT FIH MET-151</scope>
</reference>
<reference key="33">
    <citation type="journal article" date="1996" name="Hum. Mol. Genet.">
        <title>Mutations in the Ca(2+)-sensing receptor gene cause autosomal dominant and sporadic hypoparathyroidism.</title>
        <authorList>
            <person name="Baron J."/>
            <person name="Winer K.K."/>
            <person name="Yanovski J.A."/>
            <person name="Cunningham A.W."/>
            <person name="Laue L."/>
            <person name="Zimmerman D."/>
            <person name="Cutler G.B. Jr."/>
        </authorList>
    </citation>
    <scope>VARIANTS HYPOC1 THR-116; HIS-681 AND SER-806</scope>
    <scope>VARIANT SER-851</scope>
</reference>
<reference key="34">
    <citation type="journal article" date="1996" name="J. Biol. Chem.">
        <title>Expression and characterization of inactivating and activating mutations in the human Ca2+o-sensing receptor.</title>
        <authorList>
            <person name="Bai M."/>
            <person name="Quinn S."/>
            <person name="Trivedi S."/>
            <person name="Kifor O."/>
            <person name="Pearce S.H.S."/>
            <person name="Pollak M.R."/>
            <person name="Krapcho K."/>
            <person name="Hebert S.C."/>
            <person name="Brown E.M."/>
        </authorList>
    </citation>
    <scope>VARIANTS HHC1 MET-62; CYS-66; MET-138; GLU-143; GLN-185; LYS-297 AND TRP-795</scope>
    <scope>VARIANT HYPOC1 ALA-127</scope>
    <scope>FUNCTION</scope>
    <scope>SUBCELLULAR LOCATION</scope>
    <scope>GLYCOSYLATION</scope>
    <scope>CHARACTERIZATION OF VARIANTS HHC1 MET-62; CYS-66; MET-138; GLU-143; GLN-185; LYS-297 AND TRP-795</scope>
    <scope>CHARACTERIZATION OF VARIANT HYPOC1 ALA-127</scope>
</reference>
<reference key="35">
    <citation type="journal article" date="1996" name="J. Clin. Endocrinol. Metab.">
        <title>Clustered inactivating mutations and benign polymorphisms of the calcium receptor gene in familial benign hypocalciuric hypercalcemia suggest receptor functional domains.</title>
        <authorList>
            <person name="Heath H. III"/>
            <person name="Odelberg S."/>
            <person name="Jackson C.E."/>
            <person name="Teh B.T."/>
            <person name="Hayward N."/>
            <person name="Larsson C."/>
            <person name="Buist N.R."/>
            <person name="Krapcho K.J."/>
            <person name="Hung B.C."/>
            <person name="Capuano I.V."/>
            <person name="Garrett J.E."/>
            <person name="Leppert M.F."/>
        </authorList>
    </citation>
    <scope>VARIANTS HHC1 PRO-53; LEU-55; GLN-185; GLY-215; TYR-657 AND ARG-748</scope>
    <scope>VARIANTS SER-986; GLY-990 AND GLN-1011</scope>
    <scope>CHARACTERIZATION OF VARIANTS HHC1 PRO-53; LEU-55 AND GLY-215</scope>
</reference>
<reference key="36">
    <citation type="journal article" date="1996" name="J. Clin. Invest.">
        <title>Functional characterization of calcium-sensing receptor mutations expressed in human embryonic kidney cells.</title>
        <authorList>
            <person name="Pearce S.H.S."/>
            <person name="Bai M."/>
            <person name="Quinn S.J."/>
            <person name="Kifor O."/>
            <person name="Brown E.M."/>
            <person name="Thakker R.V."/>
        </authorList>
    </citation>
    <scope>VARIANTS HHC1 LEU-55; ASP-178; SER-221 AND ILE-817</scope>
    <scope>VARIANTS HYPOC1 LEU-128; MET-151 AND LYS-191</scope>
    <scope>VARIANT NSHPT LEU-227</scope>
    <scope>CHARACTERIZATION OF VARIANTS HHC1 LEU-55; ASP-178; SER-221 AND ILE-817</scope>
    <scope>FUNCTION</scope>
    <scope>CHARACTERIZATION OF VARIANTS HYPOC1 LEU-128; MET-151 AND LYS-191</scope>
    <scope>CHARACTERIZATION OF VARIANT NSHPT LEU-227</scope>
</reference>
<reference key="37">
    <citation type="journal article" date="1997" name="Hum. Mutat.">
        <title>A novel mutation (L174R) in the Ca2+-sensing receptor gene associated with familial hypocalciuric hypercalcemia.</title>
        <authorList>
            <person name="Ward B.K."/>
            <person name="Stuckey B.G.A."/>
            <person name="Gutteridge D.H."/>
            <person name="Laing N.G."/>
            <person name="Pullan P.T."/>
            <person name="Ratajczak T."/>
        </authorList>
    </citation>
    <scope>VARIANT HHC1 ARG-174</scope>
</reference>
<reference key="38">
    <citation type="journal article" date="1997" name="J. Clin. Endocrinol. Metab.">
        <title>Sporadic hypoparathyroidism caused by de Novo gain-of-function mutations of the Ca(2+)-sensing receptor.</title>
        <authorList>
            <person name="De Luca F."/>
            <person name="Ray K."/>
            <person name="Mancilla E.E."/>
            <person name="Fan G.-F."/>
            <person name="Winer K.K."/>
            <person name="Gore P."/>
            <person name="Spiegel A.M."/>
            <person name="Baron J."/>
        </authorList>
    </citation>
    <scope>VARIANTS HYPOC1 LYS-118; ARG-773 AND SER-806</scope>
    <scope>CHARACTERIZATION OF VARIANTS HYPOC1 LYS-118; ARG-773 AND SER-806</scope>
</reference>
<reference key="39">
    <citation type="journal article" date="1997" name="J. Clin. Endocrinol. Metab.">
        <title>Two novel missense mutations in calcium-sensing receptor gene associated with neonatal severe hyperparathyroidism.</title>
        <authorList>
            <person name="Kobayashi M."/>
            <person name="Tanaka H."/>
            <person name="Tsuzuki K."/>
            <person name="Tsuyuki M."/>
            <person name="Igaki H."/>
            <person name="Ichinose Y."/>
            <person name="Aya K."/>
            <person name="Nishioka N."/>
            <person name="Seino Y."/>
        </authorList>
    </citation>
    <scope>VARIANT NSHPT GLU-670</scope>
</reference>
<reference key="40">
    <citation type="journal article" date="1998" name="J. Clin. Endocrinol. Metab.">
        <title>Familial hypoparathyroidism: identification of a novel gain of function mutation in transmembrane domain 5 of the calcium-sensing receptor.</title>
        <authorList>
            <person name="Watanabe T."/>
            <person name="Bai M."/>
            <person name="Lane C.R."/>
            <person name="Matsumoto S."/>
            <person name="Minamitani K."/>
            <person name="Minagawa M."/>
            <person name="Niimi H."/>
            <person name="Brown E.M."/>
            <person name="Yasuda T."/>
        </authorList>
    </citation>
    <scope>VARIANT HYPOC1 CYS-788</scope>
    <scope>CHARACTERIZATION OF VARIANT HYPOC1 CYS-788</scope>
</reference>
<reference key="41">
    <citation type="journal article" date="1999" name="Clin. Endocrinol. (Oxf.)">
        <title>An adult patient with severe hypercalcaemia and hypocalciuria due to a novel homozygous inactivating mutation of calcium-sensing receptor.</title>
        <authorList>
            <person name="Chikatsu N."/>
            <person name="Fukumoto S."/>
            <person name="Suzawa M."/>
            <person name="Tanaka Y."/>
            <person name="Takeuchi Y."/>
            <person name="Takeda S."/>
            <person name="Tamura Y."/>
            <person name="Matsumoto T."/>
            <person name="Fujita T."/>
        </authorList>
    </citation>
    <scope>VARIANT ARG-27</scope>
    <scope>CHARACTERIZATION OF VARIANT ARG-27</scope>
    <scope>INVOLVEMENT IN PRIMARY HYPERPARATHYROIDISM</scope>
</reference>
<reference key="42">
    <citation type="journal article" date="1999" name="J. Clin. Endocrinol. Metab.">
        <title>A novel activating mutation in calcium-sensing receptor gene associated with a family of autosomal dominant hypocalcemia.</title>
        <authorList>
            <person name="Okazaki R."/>
            <person name="Chikatsu N."/>
            <person name="Nakatsu M."/>
            <person name="Takeuchi Y."/>
            <person name="Ajima M."/>
            <person name="Miki J."/>
            <person name="Fujita T."/>
            <person name="Arai M."/>
            <person name="Totsuka Y."/>
            <person name="Tanaka K."/>
            <person name="Fukumoto S."/>
        </authorList>
    </citation>
    <scope>VARIANT HYPOC1 ASN-47</scope>
    <scope>CHARACTERIZATION OF VARIANT HYPOC1 ASN-47</scope>
</reference>
<reference key="43">
    <citation type="journal article" date="1999" name="J. Clin. Endocrinol. Metab.">
        <title>Autosomal dominant hypoparathyroidism associated with short stature and premature osteoarthritis.</title>
        <authorList>
            <person name="Stock J.L."/>
            <person name="Brown R.S."/>
            <person name="Baron J."/>
            <person name="Coderre J.A."/>
            <person name="Mancilla E."/>
            <person name="De Luca F."/>
            <person name="Ray K."/>
            <person name="Mericq M.V."/>
        </authorList>
    </citation>
    <scope>VARIANT HYPOC1 VAL-616</scope>
    <scope>CHARACTERIZATION OF VARIANT HYPOC1 VAL-616</scope>
</reference>
<reference key="44">
    <citation type="journal article" date="1999" name="Lancet">
        <title>A986S polymorphism of the calcium-sensing receptor and circulating calcium concentrations.</title>
        <authorList>
            <person name="Cole D.E.C."/>
            <person name="Peltekova V.D."/>
            <person name="Rubin L.A."/>
            <person name="Hawker G.A."/>
            <person name="Vieth R."/>
            <person name="Liew C.C."/>
            <person name="Hwang D.M."/>
            <person name="Evrovski J."/>
            <person name="Hendy G.N."/>
        </authorList>
    </citation>
    <scope>VARIANT SER-986</scope>
    <scope>ASSOCIATION WITH SERUM LEVEL OF CALCIUM</scope>
</reference>
<reference key="45">
    <citation type="journal article" date="2000" name="J. Clin. Endocrinol. Metab.">
        <title>Familial hypercalcemia and hypercalciuria caused by a novel mutation in the cytoplasmic tail of the calcium receptor.</title>
        <authorList>
            <person name="Carling T."/>
            <person name="Szabo E."/>
            <person name="Bai M."/>
            <person name="Ridefelt P."/>
            <person name="Westin G."/>
            <person name="Gustavsson P."/>
            <person name="Trivedi S."/>
            <person name="Hellman P."/>
            <person name="Brown E.M."/>
            <person name="Dahl N."/>
            <person name="Rastad J."/>
        </authorList>
    </citation>
    <scope>VARIANT HYPERCALCIURIC HYPERCALCEMIA LEU-881</scope>
    <scope>CHARACTERIZATION OF VARIANT HYPERCALCIURIC HYPERCALCEMIA LEU-881</scope>
</reference>
<reference key="46">
    <citation type="journal article" date="2001" name="Endocrine">
        <title>A novel mutation in Ca2+-sensing receptor gene in familial hypocalciuric hypercalcemia.</title>
        <authorList>
            <person name="Nakayama T."/>
            <person name="Minato M."/>
            <person name="Nakagawa M."/>
            <person name="Soma M."/>
            <person name="Tobe H."/>
            <person name="Aoi N."/>
            <person name="Kosuge K."/>
            <person name="Sato M."/>
            <person name="Ozawa Y."/>
            <person name="Kanmatsuse K."/>
            <person name="Kokubun S."/>
        </authorList>
    </citation>
    <scope>VARIANT HHC1 GLU-557</scope>
</reference>
<reference key="47">
    <citation type="journal article" date="2001" name="Mol. Genet. Metab.">
        <title>Association between total serum calcium and the A986S polymorphism of the calcium-sensing receptor gene.</title>
        <authorList>
            <person name="Cole D.E.C."/>
            <person name="Vieth R."/>
            <person name="Trang H.M."/>
            <person name="Wong B.Y.-L."/>
            <person name="Hendy G.N."/>
            <person name="Rubin L.A."/>
        </authorList>
    </citation>
    <scope>VARIANT SER-986</scope>
    <scope>ASSOCIATION WITH SERUM LEVEL OF CALCIUM</scope>
    <scope>PREDISPOSING FACTOR IN DISORDERS OF BONE AND MINERAL METABOLISM</scope>
</reference>
<reference key="48">
    <citation type="journal article" date="2002" name="J. Clin. Endocrinol. Metab.">
        <title>A family of autosomal dominant hypocalcemia with a positive correlation between serum calcium and magnesium: identification of a novel gain of function mutation (Ser(820)Phe) in the calcium-sensing receptor.</title>
        <authorList>
            <person name="Nagase T."/>
            <person name="Murakami T."/>
            <person name="Tsukada T."/>
            <person name="Kitamura R."/>
            <person name="Chikatsu N."/>
            <person name="Takeo H."/>
            <person name="Takata N."/>
            <person name="Yasuda H."/>
            <person name="Fukumoto S."/>
            <person name="Tanaka Y."/>
            <person name="Nagata N."/>
            <person name="Yamaguchi K."/>
            <person name="Akatsu T."/>
            <person name="Yamamoto M."/>
        </authorList>
    </citation>
    <scope>VARIANT HYPOC1 PHE-820</scope>
    <scope>CHARACTERIZATION OF VARIANT HYPOC1 PHE-820</scope>
    <scope>VARIANT GLY-990</scope>
</reference>
<reference key="49">
    <citation type="journal article" date="2002" name="J. Clin. Endocrinol. Metab.">
        <title>Hydrochlorothiazide effectively reduces urinary calcium excretion in two Japanese patients with gain-of-function mutations of the calcium-sensing receptor gene.</title>
        <authorList>
            <person name="Sato K."/>
            <person name="Hasegawa Y."/>
            <person name="Nakae J."/>
            <person name="Nanao K."/>
            <person name="Takahashi I."/>
            <person name="Tajima T."/>
            <person name="Shinohara N."/>
            <person name="Fujieda K."/>
        </authorList>
    </citation>
    <scope>VARIANTS HYPOC1 PRO-125 AND GLU-843</scope>
    <scope>CHARACTERIZATION OF VARIANTS HYPOC1 PRO-125 AND GLU-843</scope>
</reference>
<reference key="50">
    <citation type="journal article" date="2002" name="Lancet">
        <title>Association between activating mutations of calcium-sensing receptor and Bartter's syndrome.</title>
        <authorList>
            <person name="Watanabe S."/>
            <person name="Fukumoto S."/>
            <person name="Chang H."/>
            <person name="Takeuchi Y."/>
            <person name="Hasegawa Y."/>
            <person name="Okazaki R."/>
            <person name="Chikatsu N."/>
            <person name="Fujita T."/>
        </authorList>
    </citation>
    <scope>VARIANTS HYPOC1 TRP-131 AND GLU-843</scope>
</reference>
<reference key="51">
    <citation type="journal article" date="2002" name="Medicine (Baltimore)">
        <title>Familial isolated hyperparathyroidism: clinical and genetic characteristics of 36 kindreds.</title>
        <authorList>
            <person name="Simonds W.F."/>
            <person name="James-Newton L.A."/>
            <person name="Agarwal S.K."/>
            <person name="Yang B."/>
            <person name="Skarulis M.C."/>
            <person name="Hendy G.N."/>
            <person name="Marx S.J."/>
        </authorList>
    </citation>
    <scope>VARIANTS HHC1 PRO-159; TRP-220; ALA-445 AND PRO-886</scope>
    <scope>VARIANTS LYS-250; SER-986; GLY-990 AND GLN-1011</scope>
</reference>
<reference key="52">
    <citation type="journal article" date="2003" name="J. Clin. Endocrinol. Metab.">
        <title>Autosomal dominant hypocalcemia: a novel activating mutation (E604K) in the cysteine-rich domain of the calcium-sensing receptor.</title>
        <authorList>
            <person name="Tan Y.M."/>
            <person name="Cardinal J."/>
            <person name="Franks A.H."/>
            <person name="Mun H.-C."/>
            <person name="Lewis N."/>
            <person name="Harris L.B."/>
            <person name="Prins J.B."/>
            <person name="Conigrave A.D."/>
        </authorList>
    </citation>
    <scope>VARIANT HYPOC1 LYS-604</scope>
    <scope>CHARACTERIZATION OF VARIANT HYPOC1 LYS-604</scope>
</reference>
<reference key="53">
    <citation type="journal article" date="2003" name="J. Clin. Endocrinol. Metab.">
        <title>Recurrent familial hypocalcemia due to germline mosaicism for an activating mutation of the calcium-sensing receptor gene.</title>
        <authorList>
            <person name="Hendy G.N."/>
            <person name="Minutti C."/>
            <person name="Canaff L."/>
            <person name="Pidasheva S."/>
            <person name="Yang B."/>
            <person name="Nouhi Z."/>
            <person name="Zimmerman D."/>
            <person name="Wei C."/>
            <person name="Cole D.E.C."/>
        </authorList>
    </citation>
    <scope>VARIANT HYPOC1 LEU-788</scope>
    <scope>CHARACTERIZATION OF VARIANT HYPOC1 LEU-788</scope>
</reference>
<reference key="54">
    <citation type="journal article" date="2004" name="J. Clin. Endocrinol. Metab.">
        <title>Blood ionized calcium is associated with clustered polymorphisms in the carboxyl-terminal tail of the calcium-sensing receptor.</title>
        <authorList>
            <person name="Scillitani A."/>
            <person name="Guarnieri V."/>
            <person name="De Geronimo S."/>
            <person name="Muscarella L.A."/>
            <person name="Battista C."/>
            <person name="D'Agruma L."/>
            <person name="Bertoldo F."/>
            <person name="Florio C."/>
            <person name="Minisola S."/>
            <person name="Hendy G.N."/>
            <person name="Cole D.E.C."/>
        </authorList>
    </citation>
    <scope>VARIANTS SER-986; GLY-990 AND GLN-1011</scope>
    <scope>ASSOCIATION WITH SERUM LEVEL OF CALCIUM</scope>
</reference>
<reference key="55">
    <citation type="journal article" date="2004" name="J. Clin. Endocrinol. Metab.">
        <title>Severe hypercalcemia in a 9-year-old Brazilian girl due to a novel inactivating mutation of the calcium-sensing receptor.</title>
        <authorList>
            <person name="Miyashiro K."/>
            <person name="Kunii I."/>
            <person name="Manna T.D."/>
            <person name="de Menezes Filho H.C."/>
            <person name="Damiani D."/>
            <person name="Setian N."/>
            <person name="Hauache O.M."/>
        </authorList>
    </citation>
    <scope>VARIANT HHC1 PRO-13</scope>
    <scope>CHARACTERIZATION OF VARIANT HHC1 PRO-13</scope>
</reference>
<reference key="56">
    <citation type="journal article" date="2004" name="J. Bone Miner. Res.">
        <title>Autosomal dominant hypocalcemia in monozygotic twins caused by a de novo germline mutation near the amino-terminus of the human calcium receptor.</title>
        <authorList>
            <person name="Hu J."/>
            <person name="Mora S."/>
            <person name="Weber G."/>
            <person name="Zamproni I."/>
            <person name="Proverbio M.C."/>
            <person name="Spiegel A.M."/>
        </authorList>
    </citation>
    <scope>VARIANT HYPOC1 GLU-29</scope>
    <scope>CHARACTERIZATION OF VARIANT HYPOC1 GLU-29</scope>
    <scope>MUTAGENESIS OF LYS-29</scope>
</reference>
<reference key="57">
    <citation type="journal article" date="2004" name="J. Med. Genet.">
        <title>Genetic testing in familial isolated hyperparathyroidism: unexpected results and their implications.</title>
        <authorList>
            <person name="Warner J."/>
            <person name="Epstein M."/>
            <person name="Sweet A."/>
            <person name="Singh D."/>
            <person name="Burgess J."/>
            <person name="Stranks S."/>
            <person name="Hill P."/>
            <person name="Perry-Keene D."/>
            <person name="Learoyd D."/>
            <person name="Robinson B."/>
            <person name="Birdsey P."/>
            <person name="Mackenzie E."/>
            <person name="Teh B.T."/>
            <person name="Prins J.B."/>
            <person name="Cardinal J."/>
        </authorList>
    </citation>
    <scope>VARIANTS NSHPT ILE-100; LYS-336 DEL; PRO-650 AND MET-689</scope>
    <scope>VARIANTS SER-986; GLY-990 AND GLN-1011</scope>
</reference>
<reference key="58">
    <citation type="journal article" date="2005" name="Am. J. Med. Genet. A">
        <title>A novel mutation (E767K) in the second extracellular loop of the calcium sensing receptor in a family with autosomal dominant hypocalcemia.</title>
        <authorList>
            <person name="Uckun-Kitapci A."/>
            <person name="Underwood L.E."/>
            <person name="Zhang J."/>
            <person name="Moats-Staats B."/>
        </authorList>
    </citation>
    <scope>VARIANT HYPOC1 LYS-767</scope>
    <scope>VARIANT GLY-990</scope>
</reference>
<reference key="59">
    <citation type="journal article" date="2005" name="Hum. Mol. Genet.">
        <title>Impaired cotranslational processing of the calcium-sensing receptor due to signal peptide missense mutations in familial hypocalciuric hypercalcemia.</title>
        <authorList>
            <person name="Pidasheva S."/>
            <person name="Canaff L."/>
            <person name="Simonds W.F."/>
            <person name="Marx S.J."/>
            <person name="Hendy G.N."/>
        </authorList>
    </citation>
    <scope>VARIANTS HHC1 SER-11 AND PRO-13</scope>
    <scope>VARIANT ALA-14</scope>
    <scope>CHARACTERIZATION OF VARIANTS HHC1 SER-11 AND PRO-13</scope>
    <scope>CHARACTERIZATION OF VARIANT ALA-14</scope>
</reference>
<reference key="60">
    <citation type="journal article" date="2005" name="J. Clin. Endocrinol. Metab.">
        <title>Functional characterization of calcium-sensing receptor codon 227 mutations presenting as either familial (benign) hypocalciuric hypercalcemia or neonatal hyperparathyroidism.</title>
        <authorList>
            <person name="Wystrychowski A."/>
            <person name="Pidasheva S."/>
            <person name="Canaff L."/>
            <person name="Chudek J."/>
            <person name="Kokot F."/>
            <person name="Wiecek A."/>
            <person name="Hendy G.N."/>
        </authorList>
    </citation>
    <scope>VARIANT HHC1 GLN-227</scope>
    <scope>SUBCELLULAR LOCATION</scope>
    <scope>CHARACTERIZATION OF VARIANT NSHPT LEU-227</scope>
    <scope>CHARACTERIZATION OF VARIANT HHC1 GLN-227</scope>
</reference>
<reference key="61">
    <citation type="journal article" date="2006" name="Biochem. Biophys. Res. Commun.">
        <title>Identification of a novel inactivating R465Q mutation of the calcium-sensing receptor.</title>
        <authorList>
            <person name="Leech C."/>
            <person name="Lohse P."/>
            <person name="Stanojevic V."/>
            <person name="Lechner A."/>
            <person name="Goeke B."/>
            <person name="Spitzweg C."/>
        </authorList>
    </citation>
    <scope>VARIANT HHC1 GLN-465</scope>
    <scope>CHARACTERIZATION OF VARIANT HHC1 GLN-465</scope>
    <scope>VARIANT SER-986</scope>
</reference>
<reference key="62">
    <citation type="journal article" date="2006" name="Hum. Mol. Genet.">
        <title>Calcium-sensing receptor dimerizes in the endoplasmic reticulum: biochemical and biophysical characterization of CASR mutants retained intracellularly.</title>
        <authorList>
            <person name="Pidasheva S."/>
            <person name="Grant M."/>
            <person name="Canaff L."/>
            <person name="Ercan O."/>
            <person name="Kumar U."/>
            <person name="Hendy G.N."/>
        </authorList>
    </citation>
    <scope>VARIANTS HHC1 CYS-66; HIS-66 AND 583-ASN--SER-1078 DEL</scope>
    <scope>SUBCELLULAR LOCATION</scope>
    <scope>SUBUNIT</scope>
    <scope>GLYCOSYLATION</scope>
    <scope>CHARACTERIZATION OF VARIANTS CYS-66; HIS-66 AND 583-ASN--SER-1078 DEL</scope>
</reference>
<reference key="63">
    <citation type="journal article" date="2006" name="J. Clin. Endocrinol. Metab.">
        <title>A hypocalcemic child with a novel activating mutation of the calcium-sensing receptor gene: successful treatment with recombinant human parathyroid hormone.</title>
        <authorList>
            <person name="Mittelman S.D."/>
            <person name="Hendy G.N."/>
            <person name="Fefferman R.A."/>
            <person name="Canaff L."/>
            <person name="Mosesova I."/>
            <person name="Cole D.E."/>
            <person name="Burkett L."/>
            <person name="Geffner M.E."/>
        </authorList>
    </citation>
    <scope>VARIANT HYPOC1 GLN-727</scope>
    <scope>CHARACTERIZATION OF VARIANT HYPOC1 GLN-727</scope>
</reference>
<reference key="64">
    <citation type="journal article" date="2006" name="Scand. J. Gastroenterol.">
        <title>Mutations in the calcium-sensing receptor: a new genetic risk factor for chronic pancreatitis?</title>
        <authorList>
            <person name="Felderbauer P."/>
            <person name="Klein W."/>
            <person name="Bulut K."/>
            <person name="Ansorge N."/>
            <person name="Dekomien G."/>
            <person name="Werner I."/>
            <person name="Epplen J.T."/>
            <person name="Schmitz F."/>
            <person name="Schmidt W.E."/>
        </authorList>
    </citation>
    <scope>VARIANT HIS-896</scope>
</reference>
<reference key="65">
    <citation type="journal article" date="2006" name="J. Nephrol.">
        <title>Autosomal dominant hypocalcemia with mild type 5 Bartter syndrome.</title>
        <authorList>
            <person name="Vezzoli G."/>
            <person name="Arcidiacono T."/>
            <person name="Paloschi V."/>
            <person name="Terranegra A."/>
            <person name="Biasion R."/>
            <person name="Weber G."/>
            <person name="Mora S."/>
            <person name="Syren M.L."/>
            <person name="Coviello D."/>
            <person name="Cusi D."/>
            <person name="Bianchi G."/>
            <person name="Soldati L."/>
        </authorList>
    </citation>
    <scope>VARIANT HYPOC1 GLU-29</scope>
</reference>
<reference key="66">
    <citation type="journal article" date="2007" name="J. Clin. Endocrinol. Metab.">
        <title>Identification and functional characterization of a novel mutation in the calcium-sensing receptor gene in familial hypocalciuric hypercalcemia: modulation of clinical severity by vitamin D status.</title>
        <authorList>
            <person name="Zajickova K."/>
            <person name="Vrbikova J."/>
            <person name="Canaff L."/>
            <person name="Pawelek P.D."/>
            <person name="Goltzman D."/>
            <person name="Hendy G.N."/>
        </authorList>
    </citation>
    <scope>VARIANT HHC1 CYS-180</scope>
    <scope>CHARACTERIZATION OF VARIANT HHC1 CYS-180</scope>
</reference>
<reference key="67">
    <citation type="journal article" date="2007" name="Clin. Endocrinol. (Oxf.)">
        <title>Neonatal severe hyperparathyroidism associated with a novel de novo heterozygous R551K inactivating mutation and a heterozygous A986S polymorphism of the calcium-sensing receptor gene.</title>
        <authorList>
            <person name="Toke J."/>
            <person name="Czirjak G."/>
            <person name="Patocs A."/>
            <person name="Enyedi B."/>
            <person name="Gergics P."/>
            <person name="Csakvary V."/>
            <person name="Enyedi P."/>
            <person name="Toth M."/>
        </authorList>
    </citation>
    <scope>VARIANT NSHPT LYS-551</scope>
    <scope>VARIANT SER-986</scope>
    <scope>FUNCTION</scope>
    <scope>SUBCELLULAR LOCATION</scope>
    <scope>CHARACTERIZATION OF VARIANT NSHPT LYS-551</scope>
</reference>
<reference key="68">
    <citation type="journal article" date="2007" name="J. Clin. Endocrinol. Metab.">
        <title>Molecular genetic analysis of the calcium sensing receptor gene in patients clinically suspected to have familial hypocalciuric hypercalcemia: phenotypic variation and mutation spectrum in a Danish population.</title>
        <authorList>
            <person name="Nissen P.H."/>
            <person name="Christensen S.E."/>
            <person name="Heickendorff L."/>
            <person name="Brixen K."/>
            <person name="Mosekilde L."/>
        </authorList>
    </citation>
    <scope>VARIANTS HHC1 ARG-21; ASN-171; GLN-221; THR-225; PHE-271; ARG-397; ARG-509; ARG-553; VAL-555; TYR-562; PHE-582; TYR-582; ASP-623; ARG-670; PHE-728; ARG-742 AND TRP-886</scope>
    <scope>VARIANTS LYS-250; SER-986; GLY-990 AND GLN-1011</scope>
</reference>
<reference key="69">
    <citation type="journal article" date="2008" name="Ann. Neurol.">
        <title>An idiopathic epilepsy syndrome linked to 3q13.3-q21 and missense mutations in the extracellular calcium sensing receptor gene.</title>
        <authorList>
            <person name="Kapoor A."/>
            <person name="Satishchandra P."/>
            <person name="Ratnapriya R."/>
            <person name="Reddy R."/>
            <person name="Kadandale J."/>
            <person name="Shankar S.K."/>
            <person name="Anand A."/>
        </authorList>
    </citation>
    <scope>VARIANTS EIG8 ALA-354; VAL-686; GLN-898; VAL-988 AND GLY-988</scope>
    <scope>VARIANTS SER-986 AND GLY-990</scope>
    <scope>TISSUE SPECIFICITY</scope>
</reference>
<reference key="70">
    <citation type="journal article" date="2009" name="J. Clin. Endocrinol. Metab.">
        <title>A novel loss-of-function mutation, Gln459Arg, of the calcium-sensing receptor gene associated with apparent autosomal recessive inheritance of familial hypocalciuric hypercalcemia.</title>
        <authorList>
            <person name="Lietman S.A."/>
            <person name="Tenenbaum-Rakover Y."/>
            <person name="Jap T.S."/>
            <person name="Yi-Chi W."/>
            <person name="De-Ming Y."/>
            <person name="Ding C."/>
            <person name="Kussiny N."/>
            <person name="Levine M.A."/>
        </authorList>
    </citation>
    <scope>VARIANT HHC1 ARG-459</scope>
    <scope>VARIANTS SER-986 AND GLN-1011</scope>
    <scope>FUNCTION</scope>
    <scope>CHARACTERIZATION OF VARIANT HHC1 ARG-459</scope>
</reference>
<reference key="71">
    <citation type="journal article" date="2009" name="J. Mol. Endocrinol.">
        <title>Calcium-sensing receptor mutations and denaturing high performance liquid chromatography.</title>
        <authorList>
            <person name="Cole D.E."/>
            <person name="Yun F.H."/>
            <person name="Wong B.Y."/>
            <person name="Shuen A.Y."/>
            <person name="Booth R.A."/>
            <person name="Scillitani A."/>
            <person name="Pidasheva S."/>
            <person name="Zhou X."/>
            <person name="Canaff L."/>
            <person name="Hendy G.N."/>
        </authorList>
    </citation>
    <scope>VARIANTS HHC1 SER-42; LEU-55; HIS-66; MET-81; MET-138; ARG-143; ARG-158; GLY-166; TRP-220; ARG-549; TYR-562; GLY-565; TYR-582; 583-ASN--SER-1078 DEL; TYR-661; HIS-680; ILE-761 DEL AND TRP-795</scope>
    <scope>VARIANTS HYPOC1 LYS-118; PHE-125; ARG-129; LYS-228; LYS-604; ILE-802; SER-830; LEU-832 AND SER-832</scope>
</reference>
<reference key="72">
    <citation type="journal article" date="2010" name="Cell. Physiol. Biochem.">
        <title>Calcium sensing receptor mutations implicated in pancreatitis and idiopathic epilepsy syndrome disrupt an arginine-rich retention motif.</title>
        <authorList>
            <person name="Stepanchick A."/>
            <person name="McKenna J."/>
            <person name="McGovern O."/>
            <person name="Huang Y."/>
            <person name="Breitwieser G.E."/>
        </authorList>
    </citation>
    <scope>CHARACTERIZATION OF VARIANT HHC1 PRO-886</scope>
    <scope>CHARACTERIZATION OF VARIANT HIS-896</scope>
    <scope>CHARACTERIZATION OF VARIANT EIG8 GLN-898</scope>
    <scope>SUBCELLULAR LOCATION</scope>
    <scope>DOMAIN</scope>
    <scope>PHOSPHORYLATION AT SER-892 AND SER-899</scope>
    <scope>MUTAGENESIS OF 890-ARG--ARG-898</scope>
</reference>
<reference key="73">
    <citation type="journal article" date="2010" name="Clin. Endocrinol. (Oxf.)">
        <title>A homozygous inactivating calcium-sensing receptor mutation, Pro339Thr, is associated with isolated primary hyperparathyroidism: correlation between location of mutations and severity of hypercalcaemia.</title>
        <authorList>
            <person name="Hannan F.M."/>
            <person name="Nesbit M.A."/>
            <person name="Christie P.T."/>
            <person name="Lissens W."/>
            <person name="Van der Schueren B."/>
            <person name="Bex M."/>
            <person name="Bouillon R."/>
            <person name="Thakker R.V."/>
        </authorList>
    </citation>
    <scope>VARIANT THR-339</scope>
    <scope>CHARACTERIZATION OF VARIANT THR-339</scope>
    <scope>INVOLVEMENT IN PRIMARY HYPERPARATHYROIDISM</scope>
</reference>
<reference key="74">
    <citation type="journal article" date="2011" name="Eur. J. Endocrinol.">
        <title>A novel mutation in the calcium-sensing receptor in a French family with familial hypocalciuric hypercalcaemia.</title>
        <authorList>
            <person name="Al-Salameh A."/>
            <person name="Cetani F."/>
            <person name="Pardi E."/>
            <person name="Vulpoi C."/>
            <person name="Pierre P."/>
            <person name="de Calan L."/>
            <person name="Guyetant S."/>
            <person name="Jeunemaitre X."/>
            <person name="Lecomte P."/>
        </authorList>
    </citation>
    <scope>VARIANT HHC1 ILE-550</scope>
    <scope>FUNCTION</scope>
    <scope>CHARACTERIZATION OF VARIANT HHC1 ILE-550</scope>
</reference>
<reference key="75">
    <citation type="journal article" date="2011" name="Sci. Signal.">
        <title>Agonist-driven maturation and plasma membrane insertion of calcium-sensing receptors dynamically control signal amplitude.</title>
        <authorList>
            <person name="Grant M.P."/>
            <person name="Stepanchick A."/>
            <person name="Cavanaugh A."/>
            <person name="Breitwieser G.E."/>
        </authorList>
    </citation>
    <scope>VARIANTS HHC1 PRO-159 AND TRP-795</scope>
    <scope>FUNCTION</scope>
    <scope>SUBCELLULAR LOCATION</scope>
    <scope>CHARACTERIZATION OF VARIANTS HHC1 PRO-159 AND TRP-795</scope>
</reference>
<reference key="76">
    <citation type="journal article" date="2012" name="Eur. J. Pediatr.">
        <title>Familial hypocalciuric hypercalcemia: new mutation in the CASR gene converting valine 697 to methionine.</title>
        <authorList>
            <person name="Aparicio Lopez C."/>
            <person name="Anton-Martin P."/>
            <person name="Gil-Fournier B."/>
            <person name="Ramiro-Leon S."/>
            <person name="Perez-Nanclares G."/>
            <person name="Perez de Nanclares G."/>
            <person name="Martinez Menendez B."/>
            <person name="Castano L."/>
        </authorList>
    </citation>
    <scope>VARIANT HHC1 MET-697</scope>
</reference>
<reference key="77">
    <citation type="journal article" date="2013" name="J. Clin. Endocrinol. Metab.">
        <title>Loss-of-function and gain-of-function mutations of calcium-sensing receptor: functional analysis and the effect of allosteric modulators NPS R-568 and NPS 2143.</title>
        <authorList>
            <person name="Nakamura A."/>
            <person name="Hotsubo T."/>
            <person name="Kobayashi K."/>
            <person name="Mochizuki H."/>
            <person name="Ishizu K."/>
            <person name="Tajima T."/>
        </authorList>
    </citation>
    <scope>VARIANTS HHC1 THR-110 AND GLY-172</scope>
    <scope>VARIANTS HYPOC1 CYS-122; HIS-569 AND THR-839</scope>
    <scope>FUNCTION</scope>
    <scope>CHARACTERIZATION OF VARIANTS HHC1 THR-110 AND GLY-172</scope>
    <scope>CHARACTERIZATION OF VARIANTS HYPOC1 CYS-122; HIS-569 AND THR-839</scope>
</reference>
<reference key="78">
    <citation type="journal article" date="2013" name="Eur. J. Endocrinol.">
        <title>Two novel mutations of the calcium-sensing receptor gene affecting the same amino acid position lead to opposite phenotypes and reveal the importance of p.N802 on receptor activity.</title>
        <authorList>
            <person name="Lia-Baldini A.S."/>
            <person name="Magdelaine C."/>
            <person name="Nizou A."/>
            <person name="Airault C."/>
            <person name="Salles J.P."/>
            <person name="Moulin P."/>
            <person name="Delemer B."/>
            <person name="Aitouares M."/>
            <person name="Funalot B."/>
            <person name="Sturtz F."/>
            <person name="Lienhardt-Roussie A."/>
        </authorList>
    </citation>
    <scope>VARIANT HHC1 SER-802</scope>
    <scope>VARIANT HYPOC1 ILE-802</scope>
</reference>
<reference key="79">
    <citation type="journal article" date="2014" name="BMC Endocr. Disord.">
        <title>A novel mutation in calcium-sensing receptor gene associated to hypercalcemia and hypercalciuria.</title>
        <authorList>
            <person name="Mastromatteo E."/>
            <person name="Lamacchia O."/>
            <person name="Campo M.R."/>
            <person name="Conserva A."/>
            <person name="Baorda F."/>
            <person name="Cinque L."/>
            <person name="Guarnieri V."/>
            <person name="Scillitani A."/>
            <person name="Cignarelli M."/>
        </authorList>
    </citation>
    <scope>VARIANT HHC1 MET-972</scope>
    <scope>FUNCTION</scope>
    <scope>CHARACTERIZATION OF VARIANT HHC1 MET-972</scope>
</reference>
<reference key="80">
    <citation type="journal article" date="2014" name="Nephrol. Dial. Transplant.">
        <title>Calcium-sensing-related gene mutations in hypercalcaemic hypocalciuric patients as differential diagnosis from primary hyperparathyroidism: detection of two novel inactivating mutations in an Italian population.</title>
        <authorList>
            <person name="Stratta P."/>
            <person name="Merlotti G."/>
            <person name="Musetti C."/>
            <person name="Quaglia M."/>
            <person name="Pagani A."/>
            <person name="Izzo C."/>
            <person name="Radin E."/>
            <person name="Airoldi A."/>
            <person name="Baorda F."/>
            <person name="Palladino T."/>
            <person name="Leone M.P."/>
            <person name="Guarnieri V."/>
        </authorList>
    </citation>
    <scope>VARIANTS HHC1 VAL-707 AND SER-774</scope>
    <scope>FUNCTION</scope>
    <scope>SUBCELLULAR LOCATION</scope>
    <scope>CHARACTERIZATION OF VARIANTS HHC1 VAL-707 AND SER-774</scope>
</reference>
<reference key="81">
    <citation type="journal article" date="2016" name="J. Bone Miner. Metab.">
        <title>Identification and functional analysis of a novel CaSR mutation in a family with familial hypocalciuric hypercalcemia.</title>
        <authorList>
            <person name="Kim E.S."/>
            <person name="Kim S.Y."/>
            <person name="Lee J.Y."/>
            <person name="Han J.H."/>
            <person name="Sohn T.S."/>
            <person name="Son H.S."/>
            <person name="Moon S.D."/>
        </authorList>
    </citation>
    <scope>VARIANT HHC1 TRP-571</scope>
    <scope>FUNCTION</scope>
    <scope>SUBCELLULAR LOCATION</scope>
    <scope>CHARACTERIZATION OF VARIANT HHC1 TRP-571</scope>
</reference>
<reference key="82">
    <citation type="journal article" date="2015" name="Mol. Cell. Endocrinol.">
        <title>Novel activating mutation of human calcium-sensing receptor in a family with autosomal dominant hypocalcaemia.</title>
        <authorList>
            <person name="Baran N."/>
            <person name="ter Braak M."/>
            <person name="Saffrich R."/>
            <person name="Woelfle J."/>
            <person name="Schmitz U."/>
        </authorList>
    </citation>
    <scope>VARIANT HYPOC1 LEU-136</scope>
    <scope>FUNCTION</scope>
    <scope>SUBCELLULAR LOCATION</scope>
    <scope>CHARACTERIZATION OF VARIANT HYPOC1 LEU-136</scope>
</reference>
<reference key="83">
    <citation type="journal article" date="2012" name="Mol. Genet. Metab.">
        <title>CASR gene activating mutations in two families with autosomal dominant hypocalcemia.</title>
        <authorList>
            <person name="Guarnieri V."/>
            <person name="Valentina D'Elia A."/>
            <person name="Baorda F."/>
            <person name="Pazienza V."/>
            <person name="Benegiamo G."/>
            <person name="Stanziale P."/>
            <person name="Copetti M."/>
            <person name="Battista C."/>
            <person name="Grimaldi F."/>
            <person name="Damante G."/>
            <person name="Pellegrini F."/>
            <person name="D'Agruma L."/>
            <person name="Zelante L."/>
            <person name="Carella M."/>
            <person name="Scillitani A."/>
        </authorList>
    </citation>
    <scope>VARIANTS HYPOC1 LEU-221; ARG-681 AND GLN-727</scope>
    <scope>FUNCTION</scope>
    <scope>SUBCELLULAR LOCATION</scope>
    <scope>CHARACTERIZATION OF VARIANTS HYPOC1 ARG-681 AND GLN-727</scope>
</reference>
<comment type="function">
    <text evidence="1 2 33 37 41 43 44 46 47 48 49 51 52 53 55 56 57 58 59 63 66 69 72 75">G-protein-coupled receptor that senses changes in the extracellular concentration of calcium ions and plays a key role in maintaining calcium homeostasis (PubMed:17555508, PubMed:19789209, PubMed:21566075, PubMed:22114145, PubMed:22789683, PubMed:23966241, PubMed:25104082, PubMed:25292184, PubMed:25766501, PubMed:26386835, PubMed:32817431, PubMed:33603117, PubMed:34194040, PubMed:34467854, PubMed:7759551, PubMed:8636323, PubMed:8702647, PubMed:8878438). Senses fluctuations in the circulating calcium concentration: activated by elevated circulating calcium, leading to decreased parathyroid hormone (PTH) secretion in parathyroid glands (By similarity). In kidneys, acts as a key regulator of renal tubular calcium resorption (By similarity). Ligand binding causes a conformation change that triggers signaling via guanine nucleotide-binding proteins (G-proteins) and modulates the activity of downstream effectors (PubMed:38632411). CASR is coupled with different G(q)/G(11), G(i)/G(o)- or G(s)-classes of G-proteins depending on the context (PubMed:38632411). In the parathyroid and kidney, CASR signals through G(q)/G(11) and G(i)/G(o) G-proteins: G(q)/G(11) coupling activates phospholipase C-beta, releasing diacylglycerol (DAG) and inositol 1,4,5-trisphosphate (IP3) second messengers, while G(i)/G(o) coupling mediates inhibition of adenylate cyclase activity (PubMed:38632411, PubMed:7759551). The G-protein-coupled receptor activity is activated by a co-agonist mechanism: aromatic amino acids, such as Trp or Phe, act concertedly with divalent cations, such as calcium or magnesium, to achieve full receptor activation (PubMed:27386547, PubMed:27434672, PubMed:32817431, PubMed:33603117, PubMed:34194040). Acts as an activator of the NLRP3 inflammasome via G(i)/G(o)-mediated signaling: down-regulation of cyclic AMP (cAMP) relieving NLRP3 inhibition by cAMP (PubMed:32843625). Acts as a regulator of proton-sensing receptor GPR68 in a seesaw manner: CASR-mediated signaling inhibits GPR68 signaling in response to extracellular calcium, while GPR68 inhibits CASR in presence of extracellular protons (By similarity).</text>
</comment>
<comment type="activity regulation">
    <text evidence="50 52 53 54 58 61 62 63">In resting state, adopts an open conformation, anion-binding promoting the inactive configuration (PubMed:27434672). Upon aromatic amino acid-binding, the groove in the extracellular venus flytrap module is closed, thereby inducing the formation of a novel homodimer interface between subunits (PubMed:27386547, PubMed:27434672). Calcium ions stabilize the active state by enhancing homodimer interactions between membrane-proximal domains to fully activate the receptor (PubMed:27386547, PubMed:27434672). Upon activation, the homodimer adopts an asymmetric configuration of the 7-transmembrane region that primes one protomer for G-protein coupling (PubMed:34194040, PubMed:37919470). G-protein binding expands the transmembrane dimer interface; the restriction imposed by the receptor dimer, in combination with intracellular loop 2 (ICL2), enables G-protein activation by facilitating conformational transition of G-protein alpha (PubMed:38326620, PubMed:38632411). Coupling to different classes of G-proteins results in distinct CASR-G-protein interfaces (PubMed:38326620). Activated by glucose, which acts as a positive allosteric modulator (PubMed:27613866). Activated by positive allosteric modulator drugs cinacalcet, evocalcet and etelcalcetide, which are clinically used for the treatment of hyperparathyroidism and familial hypocalciuric hypercalcemia (PubMed:34194040). Inhibited by NPS-2143, a negative allosteric modulator tested for the treatment of hypocalcemia (PubMed:34194040). Activated by velcalcetide (AMG 416), a D-amino acid-containing peptide agonist that is being evaluated for the treatment of secondary hyperparathyroidism in chronic kidney disease patients receiving hemodialysis (PubMed:26290606). Velcalcetide agonist acts by forming a disulfide bond with Cys-482 (PubMed:26290606).</text>
</comment>
<comment type="subunit">
    <text evidence="1 6 26 29 52 53 55 58 59 61">Homodimer; disulfide-linked (PubMed:10077597, PubMed:16740594, PubMed:27386547, PubMed:27434672, PubMed:32817431, PubMed:34194040, PubMed:34467854, PubMed:37919470). Interacts with VCP (PubMed:16513638). Interacts with ARRB1 (By similarity).</text>
</comment>
<comment type="interaction">
    <interactant intactId="EBI-4400127">
        <id>P41180</id>
    </interactant>
    <interactant intactId="EBI-998485">
        <id>Q15363</id>
        <label>TMED2</label>
    </interactant>
    <organismsDiffer>false</organismsDiffer>
    <experiments>3</experiments>
</comment>
<comment type="interaction">
    <interactant intactId="EBI-27048496">
        <id>P41180-1</id>
    </interactant>
    <interactant intactId="EBI-27048496">
        <id>P41180-1</id>
        <label>CASR</label>
    </interactant>
    <organismsDiffer>false</organismsDiffer>
    <experiments>2</experiments>
</comment>
<comment type="subcellular location">
    <subcellularLocation>
        <location evidence="22 29 33 37 38 40 43 44 47 49 51 72">Cell membrane</location>
        <topology evidence="40">Multi-pass membrane protein</topology>
    </subcellularLocation>
</comment>
<comment type="alternative products">
    <event type="alternative splicing"/>
    <isoform>
        <id>P41180-1</id>
        <name>1</name>
        <sequence type="displayed"/>
    </isoform>
    <isoform>
        <id>P41180-2</id>
        <name>2</name>
        <sequence type="described" ref="VSP_002035"/>
    </isoform>
</comment>
<comment type="tissue specificity">
    <text evidence="35">Expressed in the temporal lobe, frontal lobe, parietal lobe, hippocampus, and cerebellum. Also found in kidney, lung, liver, heart, skeletal muscle, placenta.</text>
</comment>
<comment type="domain">
    <text evidence="52 53 84">The extracellular regions of the homodimer interact in a side-by-side fashion while facing opposite directions (PubMed:27386547, PubMed:27434672). Each extracellular region consists of three domains, LB1 (ligand-binding 1), LB2 and CR (cysteine-rich) (PubMed:17360426). The two lobe-shaped domains LB1 and LB2 form a venus flytrap module (PubMed:27386547, PubMed:27434672). In the inactive configuration, the venus flytrap modules of both protomers are in the open conformation associated with the resting state (open-open) and the interdomain cleft is empty (PubMed:27434672). In addition, each protomer contains three anions, which reinforce the inactive conformation, and one calcium ion (PubMed:27434672). In the active configuration, both protomers of extracellular regions have the closed conformation associated with agonist-binding (closed-closed) (PubMed:27386547, PubMed:27434672). The ligand-binding cleft of each protomer is solely occupied by an aromatic amino-acid (PubMed:27386547, PubMed:27434672). Calcium is bound at four novel sites, including one at the homodimer interface (PubMed:27386547, PubMed:27434672). Agonist-binding induces large conformational changes within the extracellular region homodimer: first, the venus flytrap module of each protomer undergoes domain closure (PubMed:27386547, PubMed:27434672). Second, the LB2 regions of the two protomers approach each other, resulting in an expansion of the homodimer interactions involving LB2 domains (PubMed:27386547, PubMed:27434672). Third, the CR regions of the two subunits interact to form a large homodimer interface that is unique to the active state (PubMed:27386547, PubMed:27434672). The CR regions are brought into close contact by the motion involving LB2 since the two domains are rigidly associated within each subunit (PubMed:27386547, PubMed:27434672).</text>
</comment>
<comment type="domain">
    <text evidence="62 63">G-protein recognition is mediated by the intracellular loop 2 (ICL2) and the C-terminus, which contribute differentially towards the binding of the 2 G-protein subtypes G(q)/G(11) and G(i)/G(o), resulting in distinct CASR-G-protein interfaces (PubMed:38326620, PubMed:38632411). The C-terminus confers selectivity for G(q)/G(11), while it contributes less to G(i)/G(o)-coupling (PubMed:38326620). The C-terminus adopts opposing orientations for G(q)/G(11) and G(i)/G(o)-coupling (PubMed:38326620).</text>
</comment>
<comment type="domain">
    <text evidence="38">The arginine-rich retention motif inhibits localization to the plasma membrane, possibly by promoting interaction with 14-3-3 proteins (PubMed:20798521). Phosphorylation at Ser-892 by PKC and Ser-899 by PKA relieve inhibition and promote plasma membrane localization (PubMed:20798521).</text>
</comment>
<comment type="PTM">
    <text evidence="31 38 62 80">Phosphorylation at Thr-888 by PKC impairs coupling with G(q)/G(11) G-proteins, while it does not affect G(i)/G(o)-coupling (PubMed:17376781, PubMed:38326620, PubMed:9694886). Phosphorylation at Ser-892 by PKC and Ser-899 by PKA promote plasma membrane localization (PubMed:20798521).</text>
</comment>
<comment type="PTM">
    <text evidence="26">Ubiquitinated by RNF19A; which induces proteasomal degradation.</text>
</comment>
<comment type="PTM">
    <text evidence="26 29 40 53 72">N-glycosylated.</text>
</comment>
<comment type="disease" evidence="6 11 12 22 23 24 27 29 32 34 36 37 38 41 42 43 45 46 47 48 51 53 57 59 64 65 68 69 72 75 78">
    <disease id="DI-01588">
        <name>Hypocalciuric hypercalcemia, familial 1</name>
        <acronym>HHC1</acronym>
        <description>A form of hypocalciuric hypercalcemia, a disorder of mineral homeostasis that is transmitted as an autosomal dominant trait with a high degree of penetrance. It is characterized biochemically by lifelong elevation of serum calcium concentrations and is associated with inappropriately low urinary calcium excretion and a normal or mildly elevated circulating parathyroid hormone level. Hypermagnesemia is typically present. Affected individuals are usually asymptomatic and the disorder is considered benign. However, chondrocalcinosis and pancreatitis occur in some adults.</description>
        <dbReference type="MIM" id="145980"/>
    </disease>
    <text>The disease is caused by variants affecting the gene represented in this entry.</text>
</comment>
<comment type="disease" evidence="18 22 33 53 70 75 77">
    <disease id="DI-02039">
        <name>Hyperparathyroidism, neonatal severe</name>
        <acronym>NSHPT</acronym>
        <description>A disorder characterized by severe hypercalcemia, bone demineralization, and failure to thrive usually manifesting in the first 6 months of life. If untreated, NSHPT can be a devastating neurodevelopmental disorder, which in some cases is lethal without parathyroidectomy.</description>
        <dbReference type="MIM" id="239200"/>
    </disease>
    <text>The disease is caused by variants affecting the gene represented in this entry.</text>
</comment>
<comment type="disease" evidence="8 13 14 15 16 17 19 21 28 30 36 44 45 46 49 67 72 73 74 75 76 79 81">
    <disease id="DI-03841">
        <name>Hypocalcemia, autosomal dominant 1</name>
        <acronym>HYPOC1</acronym>
        <description>A disorder of mineral homeostasis characterized by blood calcium levels below normal, and low or normal serum parathyroid hormone concentrations. Disease manifestations include mild or asymptomatic hypocalcemia, paresthesias, carpopedal spasm, seizures, hypercalciuria with nephrocalcinosis or kidney stones, and ectopic and basal ganglia calcifications. Few patients manifest hypocalcemia and features of Bartter syndrome, including hypomagnesemia, hypokalemia, metabolic alkalosis, hyperreninemia, and hyperaldosteronemia.</description>
        <dbReference type="MIM" id="601198"/>
    </disease>
    <text>The disease is caused by variants affecting the gene represented in this entry.</text>
</comment>
<comment type="disease" evidence="35 38">
    <disease id="DI-02484">
        <name>Epilepsy, idiopathic generalized 8</name>
        <acronym>EIG8</acronym>
        <description>A disorder characterized by recurring generalized seizures in the absence of detectable brain lesions and/or metabolic abnormalities. Seizure types are variable, but include myoclonic seizures, absence seizures, febrile seizures, complex partial seizures, and generalized tonic-clonic seizures.</description>
        <dbReference type="MIM" id="612899"/>
    </disease>
    <text>Disease susceptibility is associated with variants affecting the gene represented in this entry.</text>
</comment>
<comment type="similarity">
    <text evidence="91">Belongs to the G-protein coupled receptor 3 family.</text>
</comment>
<comment type="caution">
    <text evidence="58 60 61">The active form of the homodimer was initially thought to display a symmetric configuration (PubMed:34916296). However, it was later shown to adopt an asymmetric configuration (PubMed:34194040, PubMed:37919470).</text>
</comment>
<comment type="sequence caution" evidence="91">
    <conflict type="erroneous gene model prediction">
        <sequence resource="EMBL-CDS" id="AAB29413"/>
    </conflict>
</comment>
<dbReference type="EMBL" id="X81086">
    <property type="protein sequence ID" value="CAA56990.1"/>
    <property type="molecule type" value="Genomic_DNA"/>
</dbReference>
<dbReference type="EMBL" id="U20759">
    <property type="protein sequence ID" value="AAA86503.1"/>
    <property type="molecule type" value="mRNA"/>
</dbReference>
<dbReference type="EMBL" id="U20760">
    <property type="protein sequence ID" value="AAA86504.1"/>
    <property type="molecule type" value="mRNA"/>
</dbReference>
<dbReference type="EMBL" id="D50855">
    <property type="protein sequence ID" value="BAA09453.1"/>
    <property type="molecule type" value="mRNA"/>
</dbReference>
<dbReference type="EMBL" id="S83176">
    <property type="protein sequence ID" value="AAB46873.1"/>
    <property type="molecule type" value="mRNA"/>
</dbReference>
<dbReference type="EMBL" id="S79217">
    <property type="protein sequence ID" value="AAB35262.2"/>
    <property type="molecule type" value="mRNA"/>
</dbReference>
<dbReference type="EMBL" id="S81755">
    <property type="protein sequence ID" value="AAD14370.1"/>
    <property type="molecule type" value="mRNA"/>
</dbReference>
<dbReference type="EMBL" id="S68032">
    <property type="protein sequence ID" value="AAB29413.2"/>
    <property type="status" value="ALT_SEQ"/>
    <property type="molecule type" value="Genomic_DNA"/>
</dbReference>
<dbReference type="EMBL" id="S68033">
    <property type="protein sequence ID" value="AAB29414.1"/>
    <property type="molecule type" value="Genomic_DNA"/>
</dbReference>
<dbReference type="EMBL" id="S68036">
    <property type="protein sequence ID" value="AAB29415.1"/>
    <property type="molecule type" value="Genomic_DNA"/>
</dbReference>
<dbReference type="EMBL" id="DQ088967">
    <property type="protein sequence ID" value="AAY68221.1"/>
    <property type="molecule type" value="Genomic_DNA"/>
</dbReference>
<dbReference type="EMBL" id="BC104999">
    <property type="protein sequence ID" value="AAI05000.1"/>
    <property type="molecule type" value="mRNA"/>
</dbReference>
<dbReference type="EMBL" id="BC112236">
    <property type="protein sequence ID" value="AAI12237.1"/>
    <property type="molecule type" value="mRNA"/>
</dbReference>
<dbReference type="CCDS" id="CCDS3010.1">
    <molecule id="P41180-1"/>
</dbReference>
<dbReference type="CCDS" id="CCDS54632.1">
    <molecule id="P41180-2"/>
</dbReference>
<dbReference type="PIR" id="A56715">
    <property type="entry name" value="A56715"/>
</dbReference>
<dbReference type="PIR" id="B56715">
    <property type="entry name" value="B56715"/>
</dbReference>
<dbReference type="RefSeq" id="NP_000379.2">
    <molecule id="P41180-1"/>
    <property type="nucleotide sequence ID" value="NM_000388.3"/>
</dbReference>
<dbReference type="RefSeq" id="NP_001171536.2">
    <molecule id="P41180-2"/>
    <property type="nucleotide sequence ID" value="NM_001178065.2"/>
</dbReference>
<dbReference type="RefSeq" id="XP_006713852.1">
    <molecule id="P41180-1"/>
    <property type="nucleotide sequence ID" value="XM_006713789.4"/>
</dbReference>
<dbReference type="RefSeq" id="XP_016862813.1">
    <molecule id="P41180-1"/>
    <property type="nucleotide sequence ID" value="XM_017007324.2"/>
</dbReference>
<dbReference type="RefSeq" id="XP_016862814.1">
    <molecule id="P41180-1"/>
    <property type="nucleotide sequence ID" value="XM_017007325.2"/>
</dbReference>
<dbReference type="PDB" id="5FBH">
    <property type="method" value="X-ray"/>
    <property type="resolution" value="2.70 A"/>
    <property type="chains" value="A/B=20-541"/>
</dbReference>
<dbReference type="PDB" id="5FBK">
    <property type="method" value="X-ray"/>
    <property type="resolution" value="2.10 A"/>
    <property type="chains" value="A/B=20-541"/>
</dbReference>
<dbReference type="PDB" id="5K5S">
    <property type="method" value="X-ray"/>
    <property type="resolution" value="2.60 A"/>
    <property type="chains" value="A/B=20-607"/>
</dbReference>
<dbReference type="PDB" id="5K5T">
    <property type="method" value="X-ray"/>
    <property type="resolution" value="3.10 A"/>
    <property type="chains" value="A=20-607"/>
</dbReference>
<dbReference type="PDB" id="7DTT">
    <property type="method" value="EM"/>
    <property type="resolution" value="3.80 A"/>
    <property type="chains" value="A/B=20-1078"/>
</dbReference>
<dbReference type="PDB" id="7DTU">
    <property type="method" value="EM"/>
    <property type="resolution" value="4.40 A"/>
    <property type="chains" value="A/B=20-1078"/>
</dbReference>
<dbReference type="PDB" id="7DTV">
    <property type="method" value="EM"/>
    <property type="resolution" value="3.50 A"/>
    <property type="chains" value="A/B=20-1078"/>
</dbReference>
<dbReference type="PDB" id="7DTW">
    <property type="method" value="EM"/>
    <property type="resolution" value="4.50 A"/>
    <property type="chains" value="A/B=20-1078"/>
</dbReference>
<dbReference type="PDB" id="7E6T">
    <property type="method" value="EM"/>
    <property type="resolution" value="3.00 A"/>
    <property type="chains" value="A/B=20-870"/>
</dbReference>
<dbReference type="PDB" id="7E6U">
    <property type="method" value="EM"/>
    <property type="resolution" value="6.00 A"/>
    <property type="chains" value="A/C=20-870"/>
</dbReference>
<dbReference type="PDB" id="7M3E">
    <property type="method" value="EM"/>
    <property type="resolution" value="3.20 A"/>
    <property type="chains" value="A/B=20-894"/>
</dbReference>
<dbReference type="PDB" id="7M3F">
    <property type="method" value="EM"/>
    <property type="resolution" value="2.80 A"/>
    <property type="chains" value="A/B=20-894"/>
</dbReference>
<dbReference type="PDB" id="7M3G">
    <property type="method" value="EM"/>
    <property type="resolution" value="2.50 A"/>
    <property type="chains" value="A/B=20-894"/>
</dbReference>
<dbReference type="PDB" id="7M3J">
    <property type="method" value="EM"/>
    <property type="resolution" value="4.10 A"/>
    <property type="chains" value="A/B=20-894"/>
</dbReference>
<dbReference type="PDB" id="7SIL">
    <property type="method" value="EM"/>
    <property type="resolution" value="2.70 A"/>
    <property type="chains" value="A/B=1-870"/>
</dbReference>
<dbReference type="PDB" id="7SIM">
    <property type="method" value="EM"/>
    <property type="resolution" value="2.70 A"/>
    <property type="chains" value="A/B=1-870"/>
</dbReference>
<dbReference type="PDB" id="7SIN">
    <property type="method" value="EM"/>
    <property type="resolution" value="5.90 A"/>
    <property type="chains" value="A/B=1-870"/>
</dbReference>
<dbReference type="PDB" id="8SZF">
    <property type="method" value="EM"/>
    <property type="resolution" value="2.80 A"/>
    <property type="chains" value="A/B=19-894"/>
</dbReference>
<dbReference type="PDB" id="8SZG">
    <property type="method" value="EM"/>
    <property type="resolution" value="3.60 A"/>
    <property type="chains" value="A/B=19-894"/>
</dbReference>
<dbReference type="PDB" id="8SZH">
    <property type="method" value="EM"/>
    <property type="resolution" value="3.10 A"/>
    <property type="chains" value="A/B=19-894"/>
</dbReference>
<dbReference type="PDB" id="8SZI">
    <property type="method" value="EM"/>
    <property type="resolution" value="3.50 A"/>
    <property type="chains" value="A/B=19-894"/>
</dbReference>
<dbReference type="PDB" id="8WPG">
    <property type="method" value="EM"/>
    <property type="resolution" value="2.70 A"/>
    <property type="chains" value="A/B=20-892"/>
</dbReference>
<dbReference type="PDB" id="8WPU">
    <property type="method" value="EM"/>
    <property type="resolution" value="3.10 A"/>
    <property type="chains" value="A/B=20-907"/>
</dbReference>
<dbReference type="PDB" id="9ASB">
    <property type="method" value="EM"/>
    <property type="resolution" value="3.40 A"/>
    <property type="chains" value="Q/R=1-903"/>
</dbReference>
<dbReference type="PDB" id="9AVG">
    <property type="method" value="EM"/>
    <property type="resolution" value="3.60 A"/>
    <property type="chains" value="Q/R=1-903"/>
</dbReference>
<dbReference type="PDB" id="9AVL">
    <property type="method" value="EM"/>
    <property type="resolution" value="3.80 A"/>
    <property type="chains" value="Q/R=1-903"/>
</dbReference>
<dbReference type="PDB" id="9AXF">
    <property type="method" value="EM"/>
    <property type="resolution" value="3.50 A"/>
    <property type="chains" value="Q/R=1-903"/>
</dbReference>
<dbReference type="PDB" id="9AYF">
    <property type="method" value="EM"/>
    <property type="resolution" value="3.60 A"/>
    <property type="chains" value="Q/R=1-903"/>
</dbReference>
<dbReference type="PDB" id="9C1P">
    <property type="method" value="EM"/>
    <property type="resolution" value="2.80 A"/>
    <property type="chains" value="A/B=19-894"/>
</dbReference>
<dbReference type="PDB" id="9C2F">
    <property type="method" value="EM"/>
    <property type="resolution" value="2.80 A"/>
    <property type="chains" value="A/B=19-894"/>
</dbReference>
<dbReference type="PDB" id="9J7I">
    <property type="method" value="EM"/>
    <property type="resolution" value="3.55 A"/>
    <property type="chains" value="A=19-894"/>
</dbReference>
<dbReference type="PDBsum" id="5FBH"/>
<dbReference type="PDBsum" id="5FBK"/>
<dbReference type="PDBsum" id="5K5S"/>
<dbReference type="PDBsum" id="5K5T"/>
<dbReference type="PDBsum" id="7DTT"/>
<dbReference type="PDBsum" id="7DTU"/>
<dbReference type="PDBsum" id="7DTV"/>
<dbReference type="PDBsum" id="7DTW"/>
<dbReference type="PDBsum" id="7E6T"/>
<dbReference type="PDBsum" id="7E6U"/>
<dbReference type="PDBsum" id="7M3E"/>
<dbReference type="PDBsum" id="7M3F"/>
<dbReference type="PDBsum" id="7M3G"/>
<dbReference type="PDBsum" id="7M3J"/>
<dbReference type="PDBsum" id="7SIL"/>
<dbReference type="PDBsum" id="7SIM"/>
<dbReference type="PDBsum" id="7SIN"/>
<dbReference type="PDBsum" id="8SZF"/>
<dbReference type="PDBsum" id="8SZG"/>
<dbReference type="PDBsum" id="8SZH"/>
<dbReference type="PDBsum" id="8SZI"/>
<dbReference type="PDBsum" id="8WPG"/>
<dbReference type="PDBsum" id="8WPU"/>
<dbReference type="PDBsum" id="9ASB"/>
<dbReference type="PDBsum" id="9AVG"/>
<dbReference type="PDBsum" id="9AVL"/>
<dbReference type="PDBsum" id="9AXF"/>
<dbReference type="PDBsum" id="9AYF"/>
<dbReference type="PDBsum" id="9C1P"/>
<dbReference type="PDBsum" id="9C2F"/>
<dbReference type="PDBsum" id="9J7I"/>
<dbReference type="EMDB" id="EMD-23652"/>
<dbReference type="EMDB" id="EMD-23653"/>
<dbReference type="EMDB" id="EMD-23654"/>
<dbReference type="EMDB" id="EMD-23655"/>
<dbReference type="EMDB" id="EMD-30853"/>
<dbReference type="EMDB" id="EMD-30854"/>
<dbReference type="EMDB" id="EMD-30855"/>
<dbReference type="EMDB" id="EMD-30856"/>
<dbReference type="EMDB" id="EMD-30996"/>
<dbReference type="EMDB" id="EMD-30997"/>
<dbReference type="EMDB" id="EMD-37716"/>
<dbReference type="EMDB" id="EMD-37724"/>
<dbReference type="EMDB" id="EMD-40914"/>
<dbReference type="EMDB" id="EMD-40915"/>
<dbReference type="EMDB" id="EMD-40916"/>
<dbReference type="EMDB" id="EMD-40917"/>
<dbReference type="EMDB" id="EMD-43811"/>
<dbReference type="EMDB" id="EMD-43901"/>
<dbReference type="EMDB" id="EMD-43908"/>
<dbReference type="EMDB" id="EMD-43966"/>
<dbReference type="EMDB" id="EMD-43990"/>
<dbReference type="EMDB" id="EMD-45127"/>
<dbReference type="EMDB" id="EMD-45156"/>
<dbReference type="EMDB" id="EMD-61204"/>
<dbReference type="SMR" id="P41180"/>
<dbReference type="BioGRID" id="107296">
    <property type="interactions" value="22"/>
</dbReference>
<dbReference type="CORUM" id="P41180"/>
<dbReference type="DIP" id="DIP-5975N"/>
<dbReference type="ELM" id="P41180"/>
<dbReference type="FunCoup" id="P41180">
    <property type="interactions" value="785"/>
</dbReference>
<dbReference type="IntAct" id="P41180">
    <property type="interactions" value="1"/>
</dbReference>
<dbReference type="STRING" id="9606.ENSP00000420194"/>
<dbReference type="BindingDB" id="P41180"/>
<dbReference type="ChEMBL" id="CHEMBL1878"/>
<dbReference type="DrugBank" id="DB11093">
    <property type="generic name" value="Calcium citrate"/>
</dbReference>
<dbReference type="DrugBank" id="DB11348">
    <property type="generic name" value="Calcium Phosphate"/>
</dbReference>
<dbReference type="DrugBank" id="DB14481">
    <property type="generic name" value="Calcium phosphate dihydrate"/>
</dbReference>
<dbReference type="DrugBank" id="DB01012">
    <property type="generic name" value="Cinacalcet"/>
</dbReference>
<dbReference type="DrugBank" id="DB18096">
    <property type="generic name" value="Encaleret"/>
</dbReference>
<dbReference type="DrugBank" id="DB12865">
    <property type="generic name" value="Etelcalcetide"/>
</dbReference>
<dbReference type="DrugBank" id="DB00994">
    <property type="generic name" value="Neomycin"/>
</dbReference>
<dbReference type="DrugBank" id="DB05695">
    <property type="generic name" value="NPS-2143"/>
</dbReference>
<dbReference type="DrugBank" id="DB05255">
    <property type="generic name" value="Ronacaleret"/>
</dbReference>
<dbReference type="DrugBank" id="DB00127">
    <property type="generic name" value="Spermine"/>
</dbReference>
<dbReference type="DrugBank" id="DB18268">
    <property type="generic name" value="TAK-075 Free base"/>
</dbReference>
<dbReference type="DrugCentral" id="P41180"/>
<dbReference type="GuidetoPHARMACOLOGY" id="54"/>
<dbReference type="TCDB" id="9.A.14.7.2">
    <property type="family name" value="the g-protein-coupled receptor (gpcr) family"/>
</dbReference>
<dbReference type="GlyConnect" id="1227">
    <property type="glycosylation" value="2 N-Linked glycans (1 site)"/>
</dbReference>
<dbReference type="GlyCosmos" id="P41180">
    <property type="glycosylation" value="11 sites, 2 glycans"/>
</dbReference>
<dbReference type="GlyGen" id="P41180">
    <property type="glycosylation" value="14 sites, 10 N-linked glycans (2 sites)"/>
</dbReference>
<dbReference type="iPTMnet" id="P41180"/>
<dbReference type="PhosphoSitePlus" id="P41180"/>
<dbReference type="BioMuta" id="CASR"/>
<dbReference type="DMDM" id="1168781"/>
<dbReference type="jPOST" id="P41180"/>
<dbReference type="MassIVE" id="P41180"/>
<dbReference type="PaxDb" id="9606-ENSP00000420194"/>
<dbReference type="PeptideAtlas" id="P41180"/>
<dbReference type="ProteomicsDB" id="55410">
    <molecule id="P41180-1"/>
</dbReference>
<dbReference type="ProteomicsDB" id="55411">
    <molecule id="P41180-2"/>
</dbReference>
<dbReference type="Antibodypedia" id="16753">
    <property type="antibodies" value="691 antibodies from 43 providers"/>
</dbReference>
<dbReference type="DNASU" id="846"/>
<dbReference type="Ensembl" id="ENST00000498619.4">
    <molecule id="P41180-2"/>
    <property type="protein sequence ID" value="ENSP00000420194.1"/>
    <property type="gene ID" value="ENSG00000036828.17"/>
</dbReference>
<dbReference type="Ensembl" id="ENST00000638421.1">
    <molecule id="P41180-1"/>
    <property type="protein sequence ID" value="ENSP00000492190.1"/>
    <property type="gene ID" value="ENSG00000036828.17"/>
</dbReference>
<dbReference type="Ensembl" id="ENST00000639785.2">
    <molecule id="P41180-1"/>
    <property type="protein sequence ID" value="ENSP00000491584.2"/>
    <property type="gene ID" value="ENSG00000036828.17"/>
</dbReference>
<dbReference type="GeneID" id="846"/>
<dbReference type="KEGG" id="hsa:846"/>
<dbReference type="MANE-Select" id="ENST00000639785.2">
    <property type="protein sequence ID" value="ENSP00000491584.2"/>
    <property type="RefSeq nucleotide sequence ID" value="NM_000388.4"/>
    <property type="RefSeq protein sequence ID" value="NP_000379.3"/>
</dbReference>
<dbReference type="UCSC" id="uc003eev.5">
    <molecule id="P41180-1"/>
    <property type="organism name" value="human"/>
</dbReference>
<dbReference type="AGR" id="HGNC:1514"/>
<dbReference type="CTD" id="846"/>
<dbReference type="DisGeNET" id="846"/>
<dbReference type="GeneCards" id="CASR"/>
<dbReference type="GeneReviews" id="CASR"/>
<dbReference type="HGNC" id="HGNC:1514">
    <property type="gene designation" value="CASR"/>
</dbReference>
<dbReference type="HPA" id="ENSG00000036828">
    <property type="expression patterns" value="Tissue enriched (parathyroid)"/>
</dbReference>
<dbReference type="MalaCards" id="CASR"/>
<dbReference type="MIM" id="145980">
    <property type="type" value="phenotype"/>
</dbReference>
<dbReference type="MIM" id="239200">
    <property type="type" value="phenotype"/>
</dbReference>
<dbReference type="MIM" id="601198">
    <property type="type" value="phenotype"/>
</dbReference>
<dbReference type="MIM" id="601199">
    <property type="type" value="gene"/>
</dbReference>
<dbReference type="MIM" id="612899">
    <property type="type" value="phenotype"/>
</dbReference>
<dbReference type="neXtProt" id="NX_P41180"/>
<dbReference type="OpenTargets" id="ENSG00000036828"/>
<dbReference type="Orphanet" id="428">
    <property type="disease" value="Autosomal dominant hypocalcemia"/>
</dbReference>
<dbReference type="Orphanet" id="93372">
    <property type="disease" value="Familial hypocalciuric hypercalcemia type 1"/>
</dbReference>
<dbReference type="Orphanet" id="676">
    <property type="disease" value="Hereditary chronic pancreatitis"/>
</dbReference>
<dbReference type="Orphanet" id="417">
    <property type="disease" value="Neonatal severe primary hyperparathyroidism"/>
</dbReference>
<dbReference type="PharmGKB" id="PA26097"/>
<dbReference type="VEuPathDB" id="HostDB:ENSG00000036828"/>
<dbReference type="eggNOG" id="KOG1056">
    <property type="taxonomic scope" value="Eukaryota"/>
</dbReference>
<dbReference type="GeneTree" id="ENSGT00940000157596"/>
<dbReference type="HOGENOM" id="CLU_005389_0_0_1"/>
<dbReference type="InParanoid" id="P41180"/>
<dbReference type="OMA" id="KCPDDSW"/>
<dbReference type="OrthoDB" id="5984008at2759"/>
<dbReference type="PAN-GO" id="P41180">
    <property type="GO annotations" value="6 GO annotations based on evolutionary models"/>
</dbReference>
<dbReference type="PhylomeDB" id="P41180"/>
<dbReference type="PathwayCommons" id="P41180"/>
<dbReference type="Reactome" id="R-HSA-416476">
    <property type="pathway name" value="G alpha (q) signalling events"/>
</dbReference>
<dbReference type="Reactome" id="R-HSA-418594">
    <property type="pathway name" value="G alpha (i) signalling events"/>
</dbReference>
<dbReference type="Reactome" id="R-HSA-420499">
    <property type="pathway name" value="Class C/3 (Metabotropic glutamate/pheromone receptors)"/>
</dbReference>
<dbReference type="SignaLink" id="P41180"/>
<dbReference type="SIGNOR" id="P41180"/>
<dbReference type="BioGRID-ORCS" id="846">
    <property type="hits" value="28 hits in 1156 CRISPR screens"/>
</dbReference>
<dbReference type="ChiTaRS" id="CASR">
    <property type="organism name" value="human"/>
</dbReference>
<dbReference type="GeneWiki" id="Calcium-sensing_receptor"/>
<dbReference type="GenomeRNAi" id="846"/>
<dbReference type="Pharos" id="P41180">
    <property type="development level" value="Tclin"/>
</dbReference>
<dbReference type="PRO" id="PR:P41180"/>
<dbReference type="Proteomes" id="UP000005640">
    <property type="component" value="Chromosome 3"/>
</dbReference>
<dbReference type="RNAct" id="P41180">
    <property type="molecule type" value="protein"/>
</dbReference>
<dbReference type="Bgee" id="ENSG00000036828">
    <property type="expression patterns" value="Expressed in islet of Langerhans and 52 other cell types or tissues"/>
</dbReference>
<dbReference type="ExpressionAtlas" id="P41180">
    <property type="expression patterns" value="baseline and differential"/>
</dbReference>
<dbReference type="GO" id="GO:0016324">
    <property type="term" value="C:apical plasma membrane"/>
    <property type="evidence" value="ECO:0007669"/>
    <property type="project" value="Ensembl"/>
</dbReference>
<dbReference type="GO" id="GO:0043679">
    <property type="term" value="C:axon terminus"/>
    <property type="evidence" value="ECO:0007669"/>
    <property type="project" value="Ensembl"/>
</dbReference>
<dbReference type="GO" id="GO:0016323">
    <property type="term" value="C:basolateral plasma membrane"/>
    <property type="evidence" value="ECO:0007669"/>
    <property type="project" value="Ensembl"/>
</dbReference>
<dbReference type="GO" id="GO:0009986">
    <property type="term" value="C:cell surface"/>
    <property type="evidence" value="ECO:0007669"/>
    <property type="project" value="Ensembl"/>
</dbReference>
<dbReference type="GO" id="GO:0098978">
    <property type="term" value="C:glutamatergic synapse"/>
    <property type="evidence" value="ECO:0007669"/>
    <property type="project" value="Ensembl"/>
</dbReference>
<dbReference type="GO" id="GO:0043025">
    <property type="term" value="C:neuronal cell body"/>
    <property type="evidence" value="ECO:0007669"/>
    <property type="project" value="Ensembl"/>
</dbReference>
<dbReference type="GO" id="GO:0005886">
    <property type="term" value="C:plasma membrane"/>
    <property type="evidence" value="ECO:0000314"/>
    <property type="project" value="UniProtKB"/>
</dbReference>
<dbReference type="GO" id="GO:0042734">
    <property type="term" value="C:presynaptic membrane"/>
    <property type="evidence" value="ECO:0007669"/>
    <property type="project" value="Ensembl"/>
</dbReference>
<dbReference type="GO" id="GO:0016597">
    <property type="term" value="F:amino acid binding"/>
    <property type="evidence" value="ECO:0000314"/>
    <property type="project" value="UniProtKB"/>
</dbReference>
<dbReference type="GO" id="GO:0005509">
    <property type="term" value="F:calcium ion binding"/>
    <property type="evidence" value="ECO:0000314"/>
    <property type="project" value="UniProtKB"/>
</dbReference>
<dbReference type="GO" id="GO:0004930">
    <property type="term" value="F:G protein-coupled receptor activity"/>
    <property type="evidence" value="ECO:0000314"/>
    <property type="project" value="UniProtKB"/>
</dbReference>
<dbReference type="GO" id="GO:0042802">
    <property type="term" value="F:identical protein binding"/>
    <property type="evidence" value="ECO:0000353"/>
    <property type="project" value="IntAct"/>
</dbReference>
<dbReference type="GO" id="GO:0005178">
    <property type="term" value="F:integrin binding"/>
    <property type="evidence" value="ECO:0007669"/>
    <property type="project" value="Ensembl"/>
</dbReference>
<dbReference type="GO" id="GO:0004435">
    <property type="term" value="F:phosphatidylinositol-4,5-bisphosphate phospholipase C activity"/>
    <property type="evidence" value="ECO:0000304"/>
    <property type="project" value="ProtInc"/>
</dbReference>
<dbReference type="GO" id="GO:0042803">
    <property type="term" value="F:protein homodimerization activity"/>
    <property type="evidence" value="ECO:0000314"/>
    <property type="project" value="UniProtKB"/>
</dbReference>
<dbReference type="GO" id="GO:0019901">
    <property type="term" value="F:protein kinase binding"/>
    <property type="evidence" value="ECO:0007669"/>
    <property type="project" value="Ensembl"/>
</dbReference>
<dbReference type="GO" id="GO:0044325">
    <property type="term" value="F:transmembrane transporter binding"/>
    <property type="evidence" value="ECO:0007669"/>
    <property type="project" value="Ensembl"/>
</dbReference>
<dbReference type="GO" id="GO:0007193">
    <property type="term" value="P:adenylate cyclase-inhibiting G protein-coupled receptor signaling pathway"/>
    <property type="evidence" value="ECO:0007669"/>
    <property type="project" value="Ensembl"/>
</dbReference>
<dbReference type="GO" id="GO:0009653">
    <property type="term" value="P:anatomical structure morphogenesis"/>
    <property type="evidence" value="ECO:0000304"/>
    <property type="project" value="ProtInc"/>
</dbReference>
<dbReference type="GO" id="GO:0032782">
    <property type="term" value="P:bile acid secretion"/>
    <property type="evidence" value="ECO:0007669"/>
    <property type="project" value="Ensembl"/>
</dbReference>
<dbReference type="GO" id="GO:0048754">
    <property type="term" value="P:branching morphogenesis of an epithelial tube"/>
    <property type="evidence" value="ECO:0007669"/>
    <property type="project" value="Ensembl"/>
</dbReference>
<dbReference type="GO" id="GO:0070509">
    <property type="term" value="P:calcium ion import"/>
    <property type="evidence" value="ECO:0000314"/>
    <property type="project" value="UniProtKB"/>
</dbReference>
<dbReference type="GO" id="GO:0071333">
    <property type="term" value="P:cellular response to glucose stimulus"/>
    <property type="evidence" value="ECO:0007669"/>
    <property type="project" value="Ensembl"/>
</dbReference>
<dbReference type="GO" id="GO:0035729">
    <property type="term" value="P:cellular response to hepatocyte growth factor stimulus"/>
    <property type="evidence" value="ECO:0007669"/>
    <property type="project" value="Ensembl"/>
</dbReference>
<dbReference type="GO" id="GO:0071456">
    <property type="term" value="P:cellular response to hypoxia"/>
    <property type="evidence" value="ECO:0007669"/>
    <property type="project" value="Ensembl"/>
</dbReference>
<dbReference type="GO" id="GO:0071404">
    <property type="term" value="P:cellular response to low-density lipoprotein particle stimulus"/>
    <property type="evidence" value="ECO:0007669"/>
    <property type="project" value="Ensembl"/>
</dbReference>
<dbReference type="GO" id="GO:1901653">
    <property type="term" value="P:cellular response to peptide"/>
    <property type="evidence" value="ECO:0007669"/>
    <property type="project" value="Ensembl"/>
</dbReference>
<dbReference type="GO" id="GO:0071305">
    <property type="term" value="P:cellular response to vitamin D"/>
    <property type="evidence" value="ECO:0007669"/>
    <property type="project" value="Ensembl"/>
</dbReference>
<dbReference type="GO" id="GO:0007635">
    <property type="term" value="P:chemosensory behavior"/>
    <property type="evidence" value="ECO:0000304"/>
    <property type="project" value="ProtInc"/>
</dbReference>
<dbReference type="GO" id="GO:1902476">
    <property type="term" value="P:chloride transmembrane transport"/>
    <property type="evidence" value="ECO:0007669"/>
    <property type="project" value="Ensembl"/>
</dbReference>
<dbReference type="GO" id="GO:0005513">
    <property type="term" value="P:detection of calcium ion"/>
    <property type="evidence" value="ECO:0000314"/>
    <property type="project" value="UniProtKB"/>
</dbReference>
<dbReference type="GO" id="GO:0060613">
    <property type="term" value="P:fat pad development"/>
    <property type="evidence" value="ECO:0007669"/>
    <property type="project" value="Ensembl"/>
</dbReference>
<dbReference type="GO" id="GO:0007186">
    <property type="term" value="P:G protein-coupled receptor signaling pathway"/>
    <property type="evidence" value="ECO:0000314"/>
    <property type="project" value="UniProtKB"/>
</dbReference>
<dbReference type="GO" id="GO:0006874">
    <property type="term" value="P:intracellular calcium ion homeostasis"/>
    <property type="evidence" value="ECO:0000314"/>
    <property type="project" value="UniProtKB"/>
</dbReference>
<dbReference type="GO" id="GO:0007254">
    <property type="term" value="P:JNK cascade"/>
    <property type="evidence" value="ECO:0007669"/>
    <property type="project" value="Ensembl"/>
</dbReference>
<dbReference type="GO" id="GO:0001503">
    <property type="term" value="P:ossification"/>
    <property type="evidence" value="ECO:0000304"/>
    <property type="project" value="ProtInc"/>
</dbReference>
<dbReference type="GO" id="GO:0007200">
    <property type="term" value="P:phospholipase C-activating G protein-coupled receptor signaling pathway"/>
    <property type="evidence" value="ECO:0007669"/>
    <property type="project" value="Ensembl"/>
</dbReference>
<dbReference type="GO" id="GO:0090280">
    <property type="term" value="P:positive regulation of calcium ion import"/>
    <property type="evidence" value="ECO:0007669"/>
    <property type="project" value="Ensembl"/>
</dbReference>
<dbReference type="GO" id="GO:0008284">
    <property type="term" value="P:positive regulation of cell population proliferation"/>
    <property type="evidence" value="ECO:0007669"/>
    <property type="project" value="Ensembl"/>
</dbReference>
<dbReference type="GO" id="GO:0070374">
    <property type="term" value="P:positive regulation of ERK1 and ERK2 cascade"/>
    <property type="evidence" value="ECO:0007669"/>
    <property type="project" value="Ensembl"/>
</dbReference>
<dbReference type="GO" id="GO:0010628">
    <property type="term" value="P:positive regulation of gene expression"/>
    <property type="evidence" value="ECO:0007669"/>
    <property type="project" value="Ensembl"/>
</dbReference>
<dbReference type="GO" id="GO:0032024">
    <property type="term" value="P:positive regulation of insulin secretion"/>
    <property type="evidence" value="ECO:0007669"/>
    <property type="project" value="Ensembl"/>
</dbReference>
<dbReference type="GO" id="GO:0050927">
    <property type="term" value="P:positive regulation of positive chemotaxis"/>
    <property type="evidence" value="ECO:0007669"/>
    <property type="project" value="Ensembl"/>
</dbReference>
<dbReference type="GO" id="GO:0045907">
    <property type="term" value="P:positive regulation of vasoconstriction"/>
    <property type="evidence" value="ECO:0007669"/>
    <property type="project" value="Ensembl"/>
</dbReference>
<dbReference type="GO" id="GO:0051924">
    <property type="term" value="P:regulation of calcium ion transport"/>
    <property type="evidence" value="ECO:0000318"/>
    <property type="project" value="GO_Central"/>
</dbReference>
<dbReference type="GO" id="GO:0099505">
    <property type="term" value="P:regulation of presynaptic membrane potential"/>
    <property type="evidence" value="ECO:0007669"/>
    <property type="project" value="Ensembl"/>
</dbReference>
<dbReference type="GO" id="GO:0071774">
    <property type="term" value="P:response to fibroblast growth factor"/>
    <property type="evidence" value="ECO:0007669"/>
    <property type="project" value="Ensembl"/>
</dbReference>
<dbReference type="GO" id="GO:0002931">
    <property type="term" value="P:response to ischemia"/>
    <property type="evidence" value="ECO:0007669"/>
    <property type="project" value="Ensembl"/>
</dbReference>
<dbReference type="GO" id="GO:0042311">
    <property type="term" value="P:vasodilation"/>
    <property type="evidence" value="ECO:0007669"/>
    <property type="project" value="Ensembl"/>
</dbReference>
<dbReference type="CDD" id="cd15282">
    <property type="entry name" value="7tmC_CaSR"/>
    <property type="match status" value="1"/>
</dbReference>
<dbReference type="CDD" id="cd06364">
    <property type="entry name" value="PBP1_CaSR"/>
    <property type="match status" value="1"/>
</dbReference>
<dbReference type="FunFam" id="3.40.50.2300:FF:000016">
    <property type="entry name" value="Taste 1 receptor member 2"/>
    <property type="match status" value="1"/>
</dbReference>
<dbReference type="FunFam" id="2.10.50.30:FF:000002">
    <property type="entry name" value="Vomeronasal 2 receptor, h1"/>
    <property type="match status" value="1"/>
</dbReference>
<dbReference type="FunFam" id="3.40.50.2300:FF:000388">
    <property type="entry name" value="Vomeronasal 2, receptor 23"/>
    <property type="match status" value="1"/>
</dbReference>
<dbReference type="Gene3D" id="3.40.50.2300">
    <property type="match status" value="2"/>
</dbReference>
<dbReference type="Gene3D" id="2.10.50.30">
    <property type="entry name" value="GPCR, family 3, nine cysteines domain"/>
    <property type="match status" value="1"/>
</dbReference>
<dbReference type="InterPro" id="IPR001828">
    <property type="entry name" value="ANF_lig-bd_rcpt"/>
</dbReference>
<dbReference type="InterPro" id="IPR000337">
    <property type="entry name" value="GPCR_3"/>
</dbReference>
<dbReference type="InterPro" id="IPR011500">
    <property type="entry name" value="GPCR_3_9-Cys_dom"/>
</dbReference>
<dbReference type="InterPro" id="IPR038550">
    <property type="entry name" value="GPCR_3_9-Cys_sf"/>
</dbReference>
<dbReference type="InterPro" id="IPR017978">
    <property type="entry name" value="GPCR_3_C"/>
</dbReference>
<dbReference type="InterPro" id="IPR000068">
    <property type="entry name" value="GPCR_3_Ca_sens_rcpt-rel"/>
</dbReference>
<dbReference type="InterPro" id="IPR017979">
    <property type="entry name" value="GPCR_3_CS"/>
</dbReference>
<dbReference type="InterPro" id="IPR028082">
    <property type="entry name" value="Peripla_BP_I"/>
</dbReference>
<dbReference type="PANTHER" id="PTHR24061">
    <property type="entry name" value="CALCIUM-SENSING RECEPTOR-RELATED"/>
    <property type="match status" value="1"/>
</dbReference>
<dbReference type="PANTHER" id="PTHR24061:SF358">
    <property type="entry name" value="EXTRACELLULAR CALCIUM-SENSING RECEPTOR"/>
    <property type="match status" value="1"/>
</dbReference>
<dbReference type="Pfam" id="PF00003">
    <property type="entry name" value="7tm_3"/>
    <property type="match status" value="1"/>
</dbReference>
<dbReference type="Pfam" id="PF01094">
    <property type="entry name" value="ANF_receptor"/>
    <property type="match status" value="1"/>
</dbReference>
<dbReference type="Pfam" id="PF07562">
    <property type="entry name" value="NCD3G"/>
    <property type="match status" value="1"/>
</dbReference>
<dbReference type="PRINTS" id="PR00592">
    <property type="entry name" value="CASENSINGR"/>
</dbReference>
<dbReference type="PRINTS" id="PR00248">
    <property type="entry name" value="GPCRMGR"/>
</dbReference>
<dbReference type="SUPFAM" id="SSF53822">
    <property type="entry name" value="Periplasmic binding protein-like I"/>
    <property type="match status" value="1"/>
</dbReference>
<dbReference type="PROSITE" id="PS00979">
    <property type="entry name" value="G_PROTEIN_RECEP_F3_1"/>
    <property type="match status" value="1"/>
</dbReference>
<dbReference type="PROSITE" id="PS00980">
    <property type="entry name" value="G_PROTEIN_RECEP_F3_2"/>
    <property type="match status" value="1"/>
</dbReference>
<dbReference type="PROSITE" id="PS00981">
    <property type="entry name" value="G_PROTEIN_RECEP_F3_3"/>
    <property type="match status" value="1"/>
</dbReference>
<dbReference type="PROSITE" id="PS50259">
    <property type="entry name" value="G_PROTEIN_RECEP_F3_4"/>
    <property type="match status" value="1"/>
</dbReference>
<proteinExistence type="evidence at protein level"/>
<keyword id="KW-0002">3D-structure</keyword>
<keyword id="KW-0025">Alternative splicing</keyword>
<keyword id="KW-0106">Calcium</keyword>
<keyword id="KW-1003">Cell membrane</keyword>
<keyword id="KW-0225">Disease variant</keyword>
<keyword id="KW-1015">Disulfide bond</keyword>
<keyword id="KW-0887">Epilepsy</keyword>
<keyword id="KW-0297">G-protein coupled receptor</keyword>
<keyword id="KW-0325">Glycoprotein</keyword>
<keyword id="KW-0472">Membrane</keyword>
<keyword id="KW-0479">Metal-binding</keyword>
<keyword id="KW-0597">Phosphoprotein</keyword>
<keyword id="KW-1267">Proteomics identification</keyword>
<keyword id="KW-0675">Receptor</keyword>
<keyword id="KW-1185">Reference proteome</keyword>
<keyword id="KW-0732">Signal</keyword>
<keyword id="KW-0807">Transducer</keyword>
<keyword id="KW-0812">Transmembrane</keyword>
<keyword id="KW-1133">Transmembrane helix</keyword>
<keyword id="KW-0832">Ubl conjugation</keyword>
<feature type="signal peptide" evidence="3">
    <location>
        <begin position="1"/>
        <end position="19"/>
    </location>
</feature>
<feature type="chain" id="PRO_0000012946" description="Extracellular calcium-sensing receptor">
    <location>
        <begin position="20"/>
        <end position="1078"/>
    </location>
</feature>
<feature type="topological domain" description="Extracellular" evidence="58 104 105 106 107">
    <location>
        <begin position="20"/>
        <end position="610"/>
    </location>
</feature>
<feature type="transmembrane region" description="Helical; Name=1" evidence="58 104 105 106 107">
    <location>
        <begin position="611"/>
        <end position="636"/>
    </location>
</feature>
<feature type="topological domain" description="Cytoplasmic" evidence="58 104 105 106 107">
    <location>
        <begin position="637"/>
        <end position="648"/>
    </location>
</feature>
<feature type="transmembrane region" description="Helical; Name=2" evidence="58 104 105 106 107">
    <location>
        <begin position="649"/>
        <end position="668"/>
    </location>
</feature>
<feature type="topological domain" description="Extracellular" evidence="58 104 105 106 107">
    <location>
        <begin position="669"/>
        <end position="674"/>
    </location>
</feature>
<feature type="transmembrane region" description="Helical; Name=3" evidence="58 104 105 106 107">
    <location>
        <begin position="675"/>
        <end position="698"/>
    </location>
</feature>
<feature type="topological domain" description="Cytoplasmic" evidence="58 104 105 106 107">
    <location>
        <begin position="699"/>
        <end position="722"/>
    </location>
</feature>
<feature type="transmembrane region" description="Helical; Name=4" evidence="58 104 105 106 107">
    <location>
        <begin position="723"/>
        <end position="745"/>
    </location>
</feature>
<feature type="topological domain" description="Extracellular" evidence="58 104 105 106 107">
    <location>
        <begin position="746"/>
        <end position="769"/>
    </location>
</feature>
<feature type="transmembrane region" description="Helical; Name=5" evidence="58 104 105 106 107">
    <location>
        <begin position="770"/>
        <end position="789"/>
    </location>
</feature>
<feature type="topological domain" description="Cytoplasmic" evidence="58 104 105 106 107">
    <location>
        <begin position="790"/>
        <end position="805"/>
    </location>
</feature>
<feature type="transmembrane region" description="Helical; Name=6" evidence="58 104 105 106 107">
    <location>
        <begin position="806"/>
        <end position="828"/>
    </location>
</feature>
<feature type="topological domain" description="Extracellular" evidence="58 104 105 106 107">
    <location>
        <begin position="829"/>
        <end position="832"/>
    </location>
</feature>
<feature type="transmembrane region" description="Helical; Name=7" evidence="58 104 105 106 107">
    <location>
        <begin position="833"/>
        <end position="854"/>
    </location>
</feature>
<feature type="topological domain" description="Cytoplasmic" evidence="58 104 105 106 107">
    <location>
        <begin position="855"/>
        <end position="1078"/>
    </location>
</feature>
<feature type="region of interest" description="Ligand-binding 1 (LB1)" evidence="84">
    <location>
        <begin position="22"/>
        <end position="188"/>
    </location>
</feature>
<feature type="region of interest" description="Ligand-binding 2 (LB2)" evidence="84">
    <location>
        <begin position="189"/>
        <end position="324"/>
    </location>
</feature>
<feature type="region of interest" description="Cysteine-rich (CR)" evidence="84">
    <location>
        <begin position="542"/>
        <end position="612"/>
    </location>
</feature>
<feature type="region of interest" description="Intracellular loop 1 (ICL1)" evidence="87">
    <location>
        <begin position="637"/>
        <end position="648"/>
    </location>
</feature>
<feature type="region of interest" description="Intracellular loop 2 (ICL2)" evidence="87">
    <location>
        <begin position="699"/>
        <end position="722"/>
    </location>
</feature>
<feature type="region of interest" description="Intracellular loop 3 (ICL3)" evidence="87">
    <location>
        <begin position="790"/>
        <end position="805"/>
    </location>
</feature>
<feature type="region of interest" description="C-terminus" evidence="86">
    <location>
        <begin position="855"/>
        <end position="1078"/>
    </location>
</feature>
<feature type="region of interest" description="Interaction with RNF19A" evidence="26">
    <location>
        <begin position="880"/>
        <end position="900"/>
    </location>
</feature>
<feature type="region of interest" description="Arginine-rich retention motif" evidence="38">
    <location>
        <begin position="890"/>
        <end position="898"/>
    </location>
</feature>
<feature type="region of interest" description="Disordered" evidence="4">
    <location>
        <begin position="892"/>
        <end position="963"/>
    </location>
</feature>
<feature type="region of interest" description="Disordered" evidence="4">
    <location>
        <begin position="986"/>
        <end position="1006"/>
    </location>
</feature>
<feature type="region of interest" description="Disordered" evidence="4">
    <location>
        <begin position="1030"/>
        <end position="1055"/>
    </location>
</feature>
<feature type="compositionally biased region" description="Low complexity" evidence="4">
    <location>
        <begin position="900"/>
        <end position="918"/>
    </location>
</feature>
<feature type="compositionally biased region" description="Low complexity" evidence="4">
    <location>
        <begin position="932"/>
        <end position="960"/>
    </location>
</feature>
<feature type="compositionally biased region" description="Polar residues" evidence="4">
    <location>
        <begin position="993"/>
        <end position="1006"/>
    </location>
</feature>
<feature type="binding site" evidence="53 96">
    <location>
        <begin position="66"/>
        <end position="70"/>
    </location>
    <ligand>
        <name>phosphate</name>
        <dbReference type="ChEBI" id="CHEBI:43474"/>
        <note>required for structural stability of the receptor</note>
    </ligand>
</feature>
<feature type="binding site" evidence="53 58 92 94 95 96 104 105 106">
    <location>
        <position position="81"/>
    </location>
    <ligand>
        <name>Ca(2+)</name>
        <dbReference type="ChEBI" id="CHEBI:29108"/>
    </ligand>
</feature>
<feature type="binding site" evidence="53 58 62 92 95 96 104 105 106 111">
    <location>
        <position position="84"/>
    </location>
    <ligand>
        <name>Ca(2+)</name>
        <dbReference type="ChEBI" id="CHEBI:29108"/>
    </ligand>
</feature>
<feature type="binding site" evidence="53 58 62 92 94 95 96 104 105 106 111">
    <location>
        <position position="87"/>
    </location>
    <ligand>
        <name>Ca(2+)</name>
        <dbReference type="ChEBI" id="CHEBI:29108"/>
    </ligand>
</feature>
<feature type="binding site" evidence="53 58 62 92 94 95 96 104 105 106 111">
    <location>
        <position position="88"/>
    </location>
    <ligand>
        <name>Ca(2+)</name>
        <dbReference type="ChEBI" id="CHEBI:29108"/>
    </ligand>
</feature>
<feature type="binding site" evidence="53 59 96 97 102">
    <location>
        <position position="100"/>
    </location>
    <ligand>
        <name>Ca(2+)</name>
        <dbReference type="ChEBI" id="CHEBI:29108"/>
    </ligand>
</feature>
<feature type="binding site" evidence="53 96">
    <location>
        <position position="145"/>
    </location>
    <ligand>
        <name>Ca(2+)</name>
        <dbReference type="ChEBI" id="CHEBI:29108"/>
    </ligand>
</feature>
<feature type="binding site" evidence="52 53 57 58 94 95 96 99">
    <location>
        <position position="147"/>
    </location>
    <ligand>
        <name>L-tryptophan</name>
        <dbReference type="ChEBI" id="CHEBI:57912"/>
    </ligand>
</feature>
<feature type="binding site" evidence="52 53 57 58 62 94 95 96 99 100 112">
    <location>
        <position position="168"/>
    </location>
    <ligand>
        <name>L-tryptophan</name>
        <dbReference type="ChEBI" id="CHEBI:57912"/>
    </ligand>
</feature>
<feature type="binding site" evidence="59 102">
    <location>
        <position position="170"/>
    </location>
    <ligand>
        <name>Ca(2+)</name>
        <dbReference type="ChEBI" id="CHEBI:29108"/>
    </ligand>
</feature>
<feature type="binding site" evidence="52 53 57 58 62 94 95 96 99 112">
    <location>
        <position position="170"/>
    </location>
    <ligand>
        <name>L-tryptophan</name>
        <dbReference type="ChEBI" id="CHEBI:57912"/>
    </ligand>
</feature>
<feature type="binding site" evidence="59 102">
    <location>
        <position position="188"/>
    </location>
    <ligand>
        <name>Ca(2+)</name>
        <dbReference type="ChEBI" id="CHEBI:29108"/>
    </ligand>
</feature>
<feature type="binding site" evidence="59 102">
    <location>
        <position position="190"/>
    </location>
    <ligand>
        <name>Ca(2+)</name>
        <dbReference type="ChEBI" id="CHEBI:29108"/>
    </ligand>
</feature>
<feature type="binding site" evidence="53 96">
    <location>
        <position position="231"/>
    </location>
    <ligand>
        <name>Ca(2+)</name>
        <dbReference type="ChEBI" id="CHEBI:29108"/>
    </ligand>
</feature>
<feature type="binding site" evidence="53 57 59 96 98 102">
    <location>
        <position position="234"/>
    </location>
    <ligand>
        <name>Ca(2+)</name>
        <dbReference type="ChEBI" id="CHEBI:29108"/>
    </ligand>
</feature>
<feature type="binding site" evidence="62 111">
    <location>
        <position position="238"/>
    </location>
    <ligand>
        <name>spermine</name>
        <dbReference type="ChEBI" id="CHEBI:45725"/>
    </ligand>
</feature>
<feature type="binding site" evidence="62 111">
    <location>
        <position position="240"/>
    </location>
    <ligand>
        <name>spermine</name>
        <dbReference type="ChEBI" id="CHEBI:45725"/>
    </ligand>
</feature>
<feature type="binding site" evidence="59 102">
    <location>
        <position position="297"/>
    </location>
    <ligand>
        <name>Ca(2+)</name>
        <dbReference type="ChEBI" id="CHEBI:29108"/>
    </ligand>
</feature>
<feature type="binding site" evidence="52 53 94 95 96">
    <location>
        <position position="297"/>
    </location>
    <ligand>
        <name>L-tryptophan</name>
        <dbReference type="ChEBI" id="CHEBI:57912"/>
    </ligand>
</feature>
<feature type="binding site" evidence="53 96">
    <location>
        <begin position="415"/>
        <end position="417"/>
    </location>
    <ligand>
        <name>phosphate</name>
        <dbReference type="ChEBI" id="CHEBI:43474"/>
        <note>required for structural stability of the receptor</note>
    </ligand>
</feature>
<feature type="binding site" evidence="59 102">
    <location>
        <position position="489"/>
    </location>
    <ligand>
        <name>Ca(2+)</name>
        <dbReference type="ChEBI" id="CHEBI:29108"/>
    </ligand>
</feature>
<feature type="binding site" evidence="53 57 58 62 96 98 105 106 111">
    <location>
        <position position="557"/>
    </location>
    <ligand>
        <name>Ca(2+)</name>
        <dbReference type="ChEBI" id="CHEBI:29108"/>
    </ligand>
</feature>
<feature type="site" description="Important for ability of agonist AMG 416 to activate G-protein-coupled receptor activity" evidence="50">
    <location>
        <position position="482"/>
    </location>
</feature>
<feature type="modified residue" description="Phosphothreonine; by PKC" evidence="31 62 80">
    <location>
        <position position="888"/>
    </location>
</feature>
<feature type="modified residue" description="Phosphoserine; by PKC" evidence="38">
    <location>
        <position position="892"/>
    </location>
</feature>
<feature type="modified residue" description="Phosphoserine; by PKA" evidence="38">
    <location>
        <position position="899"/>
    </location>
</feature>
<feature type="modified residue" description="Phosphoserine" evidence="2">
    <location>
        <position position="920"/>
    </location>
</feature>
<feature type="modified residue" description="Phosphoserine" evidence="2">
    <location>
        <position position="1061"/>
    </location>
</feature>
<feature type="glycosylation site" description="N-linked (GlcNAc...) asparagine" evidence="3">
    <location>
        <position position="90"/>
    </location>
</feature>
<feature type="glycosylation site" description="N-linked (GlcNAc...) asparagine" evidence="3">
    <location>
        <position position="130"/>
    </location>
</feature>
<feature type="glycosylation site" description="N-linked (GlcNAc...) asparagine" evidence="3 53 57 98">
    <location>
        <position position="261"/>
    </location>
</feature>
<feature type="glycosylation site" description="N-linked (GlcNAc...) asparagine" evidence="3 53 57 98">
    <location>
        <position position="287"/>
    </location>
</feature>
<feature type="glycosylation site" description="N-linked (GlcNAc...) asparagine" evidence="3">
    <location>
        <position position="386"/>
    </location>
</feature>
<feature type="glycosylation site" description="N-linked (GlcNAc...) asparagine" evidence="3">
    <location>
        <position position="400"/>
    </location>
</feature>
<feature type="glycosylation site" description="N-linked (GlcNAc...) asparagine" evidence="3 53 57 98">
    <location>
        <position position="446"/>
    </location>
</feature>
<feature type="glycosylation site" description="N-linked (GlcNAc...) asparagine" evidence="3 53 57 98">
    <location>
        <position position="468"/>
    </location>
</feature>
<feature type="glycosylation site" description="N-linked (GlcNAc...) asparagine" evidence="3 53 57 98">
    <location>
        <position position="488"/>
    </location>
</feature>
<feature type="glycosylation site" description="N-linked (GlcNAc...) asparagine" evidence="3 53">
    <location>
        <position position="541"/>
    </location>
</feature>
<feature type="glycosylation site" description="N-linked (GlcNAc...) asparagine" evidence="3 53">
    <location>
        <position position="594"/>
    </location>
</feature>
<feature type="disulfide bond" evidence="52 53 58 60 94 95 96 104 105 106 109 110">
    <location>
        <begin position="60"/>
        <end position="101"/>
    </location>
</feature>
<feature type="disulfide bond" description="Interchain" evidence="53 60 92 110">
    <location>
        <position position="129"/>
    </location>
</feature>
<feature type="disulfide bond" description="Interchain" evidence="53 60 92 110">
    <location>
        <position position="131"/>
    </location>
</feature>
<feature type="disulfide bond" evidence="53 58 60 104 105 106 109 110">
    <location>
        <begin position="236"/>
        <end position="561"/>
    </location>
</feature>
<feature type="disulfide bond" evidence="52 53 58 60 94 95 96 104 105 106 109 110">
    <location>
        <begin position="358"/>
        <end position="395"/>
    </location>
</feature>
<feature type="disulfide bond" evidence="52 53 58 60 94 95 96 104 105 106 109 110">
    <location>
        <begin position="437"/>
        <end position="449"/>
    </location>
</feature>
<feature type="disulfide bond" evidence="53 60 109 110">
    <location>
        <begin position="542"/>
        <end position="562"/>
    </location>
</feature>
<feature type="disulfide bond" evidence="53 59 60 102 103 109 110">
    <location>
        <begin position="546"/>
        <end position="565"/>
    </location>
</feature>
<feature type="disulfide bond" evidence="53 59 60 102 103 109 110">
    <location>
        <begin position="568"/>
        <end position="582"/>
    </location>
</feature>
<feature type="disulfide bond" evidence="53">
    <location>
        <begin position="585"/>
        <end position="598"/>
    </location>
</feature>
<feature type="splice variant" id="VSP_002035" description="In isoform 2." evidence="88">
    <original>E</original>
    <variation>EPLTFVLSVLQ</variation>
    <location>
        <position position="536"/>
    </location>
</feature>
<feature type="sequence variant" id="VAR_058046" description="In HHC1; demonstrates reduced intracellular and plasma membrane expression and signaling to the MAPK pathway in response to extracellular calcium relative to wild-type; fails to be inserted in the microsomes and does not undergo proper glycosylation; dbSNP:rs200673016." evidence="24">
    <original>L</original>
    <variation>S</variation>
    <location>
        <position position="11"/>
    </location>
</feature>
<feature type="sequence variant" id="VAR_058047" description="In HHC1; has a dose-response curve shifted to the right relative to that of wild-type; demonstrates reduced intracellular and plasma membrane expression and signaling to the MAPK pathway in response to extracellular calcium relative to wild-type; fails to be inserted in the microsomes and does not undergo proper glycosylation; dbSNP:rs104893717." evidence="23 24">
    <original>L</original>
    <variation>P</variation>
    <location>
        <position position="13"/>
    </location>
</feature>
<feature type="sequence variant" id="VAR_058048" description="Does not demonstrate reduced intracellular and plasma membrane expression and signaling to the MAPK pathway in response to extracellular calcium relative to wild-type; does not fail to be inserted in the microsomes and does undergo proper glycosylation; dbSNP:rs199515839." evidence="24">
    <original>T</original>
    <variation>A</variation>
    <location>
        <position position="14"/>
    </location>
</feature>
<feature type="sequence variant" id="VAR_058049" description="In HHC1; dbSNP:rs1064794290." evidence="34">
    <original>G</original>
    <variation>R</variation>
    <location>
        <position position="21"/>
    </location>
</feature>
<feature type="sequence variant" id="VAR_065198" description="Found in a patient with primary hyperparathyroidism detected at adulthood; mutant CASR is activated by a higher calcium concentrations than the wild-type." evidence="7">
    <original>Q</original>
    <variation>R</variation>
    <location>
        <position position="27"/>
    </location>
</feature>
<feature type="sequence variant" id="VAR_090416" description="In HYPOC1; increased calcium sensitivity." evidence="19 30">
    <original>K</original>
    <variation>E</variation>
    <location>
        <position position="29"/>
    </location>
</feature>
<feature type="sequence variant" id="VAR_003585" description="In HHC1; dbSNP:rs121909262." evidence="64">
    <original>P</original>
    <variation>A</variation>
    <location>
        <position position="39"/>
    </location>
</feature>
<feature type="sequence variant" id="VAR_078139" description="In HHC1; dbSNP:rs1553765909." evidence="36">
    <original>F</original>
    <variation>S</variation>
    <location>
        <position position="42"/>
    </location>
</feature>
<feature type="sequence variant" id="VAR_058050" description="In HYPOC1; the EC(50) of the mutant is significantly lower than that of wild-type; dbSNP:rs104893702." evidence="81">
    <original>K</original>
    <variation>N</variation>
    <location>
        <position position="47"/>
    </location>
</feature>
<feature type="sequence variant" id="VAR_078140" description="In HHC1; decreased G-protein coupled receptor signaling pathway." evidence="69">
    <original>S</original>
    <variation>P</variation>
    <location>
        <position position="53"/>
    </location>
</feature>
<feature type="sequence variant" id="VAR_078141" description="In HHC1; decreased G-protein coupled receptor signaling pathway; dbSNP:rs886041154." evidence="36 69 75">
    <original>P</original>
    <variation>L</variation>
    <location>
        <position position="55"/>
    </location>
</feature>
<feature type="sequence variant" id="VAR_003586" description="In HHC1; mild; decreased G-protein coupled receptor signaling pathway; dbSNP:rs121909265." evidence="65 72">
    <original>R</original>
    <variation>M</variation>
    <location>
        <position position="62"/>
    </location>
</feature>
<feature type="sequence variant" id="VAR_003587" description="In HHC1; does not affect homodimerization; impaired N-glycosylation; impaired cell membrane localization; decreased G-protein coupled receptor signaling pathway; dbSNP:rs121909266." evidence="29 65 72">
    <original>R</original>
    <variation>C</variation>
    <location>
        <position position="66"/>
    </location>
</feature>
<feature type="sequence variant" id="VAR_078142" description="In HHC1; does not affect homodimerization; impaired N-glycosylation; impaired cell membrane localization; decreased G-protein coupled receptor signaling pathway; dbSNP:rs1276839362." evidence="29 36 53">
    <original>R</original>
    <variation>H</variation>
    <location>
        <position position="66"/>
    </location>
</feature>
<feature type="sequence variant" id="VAR_078143" description="In HHC1; decreased G-protein coupled receptor signaling pathway." evidence="36 53">
    <original>I</original>
    <variation>M</variation>
    <location>
        <position position="81"/>
    </location>
</feature>
<feature type="sequence variant" id="VAR_065199" description="In NSHPT; Abolished G-protein coupled receptor activity." evidence="18 53">
    <original>T</original>
    <variation>I</variation>
    <location>
        <position position="100"/>
    </location>
</feature>
<feature type="sequence variant" id="VAR_078144" description="In HHC1; decreased G-protein coupled receptor signaling pathway." evidence="46">
    <original>A</original>
    <variation>T</variation>
    <location>
        <position position="110"/>
    </location>
</feature>
<feature type="sequence variant" id="VAR_003588" description="In HYPOC1; dbSNP:rs104893691." evidence="73">
    <original>A</original>
    <variation>T</variation>
    <location>
        <position position="116"/>
    </location>
</feature>
<feature type="sequence variant" id="VAR_058051" description="In HYPOC1; the mutation shifts the concentration-response curve to the left and increases maximal activity; dbSNP:rs104893695." evidence="36 74 76">
    <original>N</original>
    <variation>K</variation>
    <location>
        <position position="118"/>
    </location>
</feature>
<feature type="sequence variant" id="VAR_078145" description="In HYPOC1; increased G-protein coupled receptor signaling pathway." evidence="46">
    <original>S</original>
    <variation>C</variation>
    <location>
        <position position="122"/>
    </location>
</feature>
<feature type="sequence variant" id="VAR_078146" description="In HYPOC1." evidence="36">
    <original>L</original>
    <variation>F</variation>
    <location>
        <position position="125"/>
    </location>
</feature>
<feature type="sequence variant" id="VAR_058052" description="In HYPOC1; shifts the concentration-response curve of calcium ions to the left; dbSNP:rs104893708." evidence="14">
    <original>L</original>
    <variation>P</variation>
    <location>
        <position position="125"/>
    </location>
</feature>
<feature type="sequence variant" id="VAR_003589" description="In HYPOC1; increased G-protein coupled receptor signaling pathway; dbSNP:rs121909260." evidence="67 72">
    <original>E</original>
    <variation>A</variation>
    <location>
        <position position="127"/>
    </location>
</feature>
<feature type="sequence variant" id="VAR_058053" description="In HYPOC1; increased G-protein coupled receptor signaling pathway; dbSNP:rs104893696." evidence="74 75">
    <original>F</original>
    <variation>L</variation>
    <location>
        <position position="128"/>
    </location>
</feature>
<feature type="sequence variant" id="VAR_078147" description="In HYPOC1." evidence="36">
    <original>C</original>
    <variation>R</variation>
    <location>
        <position position="129"/>
    </location>
</feature>
<feature type="sequence variant" id="VAR_058054" description="In HYPOC1; patients with clinical features of Bartter syndrome; dbSNP:rs121909267." evidence="15">
    <original>C</original>
    <variation>W</variation>
    <location>
        <position position="131"/>
    </location>
</feature>
<feature type="sequence variant" id="VAR_078148" description="In HYPOC1; increased G-protein coupled receptor signaling pathway; does not affect cell membrane localization." evidence="49">
    <original>P</original>
    <variation>L</variation>
    <location>
        <position position="136"/>
    </location>
</feature>
<feature type="sequence variant" id="VAR_003590" description="In HHC1; decreased G-protein coupled receptor signaling pathway; dbSNP:rs121909263." evidence="36 65 72">
    <original>T</original>
    <variation>M</variation>
    <location>
        <position position="138"/>
    </location>
</feature>
<feature type="sequence variant" id="VAR_003591" description="In HHC1; decreased G-protein coupled receptor signaling pathway; dbSNP:rs121909264." evidence="6 65 72">
    <original>G</original>
    <variation>E</variation>
    <location>
        <position position="143"/>
    </location>
</feature>
<feature type="sequence variant" id="VAR_078149" description="In HHC1; dbSNP:rs769256610." evidence="36">
    <original>G</original>
    <variation>R</variation>
    <location>
        <position position="143"/>
    </location>
</feature>
<feature type="sequence variant" id="VAR_058055" description="In HYPOC1; increased G-protein coupled receptor signaling pathway; dbSNP:rs104893694." evidence="71 74 75">
    <original>T</original>
    <variation>M</variation>
    <location>
        <position position="151"/>
    </location>
</feature>
<feature type="sequence variant" id="VAR_078150" description="In HHC1." evidence="36">
    <original>G</original>
    <variation>R</variation>
    <location>
        <position position="158"/>
    </location>
</feature>
<feature type="sequence variant" id="VAR_078151" description="In HHC1; decreased G-protein coupled receptor signaling pathway." evidence="12 43 53">
    <original>L</original>
    <variation>P</variation>
    <location>
        <position position="159"/>
    </location>
</feature>
<feature type="sequence variant" id="VAR_078152" description="In HHC1; dbSNP:rs193922441." evidence="36">
    <original>S</original>
    <variation>G</variation>
    <location>
        <position position="166"/>
    </location>
</feature>
<feature type="sequence variant" id="VAR_058056" description="In HHC1." evidence="34">
    <original>S</original>
    <variation>N</variation>
    <location>
        <position position="171"/>
    </location>
</feature>
<feature type="sequence variant" id="VAR_078153" description="In HHC1; decreased G-protein coupled receptor signaling pathway; dbSNP:rs201851934." evidence="46 53">
    <original>R</original>
    <variation>G</variation>
    <location>
        <position position="172"/>
    </location>
</feature>
<feature type="sequence variant" id="VAR_003592" description="In HHC1." evidence="78">
    <original>L</original>
    <variation>R</variation>
    <location>
        <position position="174"/>
    </location>
</feature>
<feature type="sequence variant" id="VAR_078154" description="In HHC1; decreased G-protein coupled receptor signaling pathway; dbSNP:rs1060502855." evidence="75">
    <original>N</original>
    <variation>D</variation>
    <location>
        <position position="178"/>
    </location>
</feature>
<feature type="sequence variant" id="VAR_058057" description="In HHC1; although the mutant receptor is expressed normally at the cell surface it is unresponsive with respect to intracellular signaling (MAPK activation) to increases in extracellular calcium concentrations; dbSNP:rs121909268." evidence="32">
    <original>F</original>
    <variation>C</variation>
    <location>
        <position position="180"/>
    </location>
</feature>
<feature type="sequence variant" id="VAR_003593" description="In HHC1; decreased G-protein coupled receptor signaling pathway; dbSNP:rs104893689." evidence="68 69 72">
    <original>R</original>
    <variation>Q</variation>
    <location>
        <position position="185"/>
    </location>
</feature>
<feature type="sequence variant" id="VAR_058058" description="In HYPOC1; increased G-protein coupled receptor signaling pathway; dbSNP:rs104893697." evidence="74 75">
    <original>E</original>
    <variation>K</variation>
    <location>
        <position position="191"/>
    </location>
</feature>
<feature type="sequence variant" id="VAR_078155" description="In HHC1; decreased G-protein coupled receptor signaling pathway." evidence="53 69">
    <original>D</original>
    <variation>G</variation>
    <location>
        <position position="215"/>
    </location>
</feature>
<feature type="sequence variant" id="VAR_078156" description="In HHC1; dbSNP:rs1482119762." evidence="12 36">
    <original>R</original>
    <variation>W</variation>
    <location>
        <position position="220"/>
    </location>
</feature>
<feature type="sequence variant" id="VAR_078157" description="In HYPOC1; dbSNP:rs397514728." evidence="44">
    <original>P</original>
    <variation>L</variation>
    <location>
        <position position="221"/>
    </location>
</feature>
<feature type="sequence variant" id="VAR_058059" description="In HHC1; dbSNP:rs397514728." evidence="34">
    <original>P</original>
    <variation>Q</variation>
    <location>
        <position position="221"/>
    </location>
</feature>
<feature type="sequence variant" id="VAR_078158" description="In HHC1; decreased G-protein coupled receptor signaling pathway." evidence="75">
    <original>P</original>
    <variation>S</variation>
    <location>
        <position position="221"/>
    </location>
</feature>
<feature type="sequence variant" id="VAR_058060" description="In HHC1." evidence="34">
    <original>K</original>
    <variation>T</variation>
    <location>
        <position position="225"/>
    </location>
</feature>
<feature type="sequence variant" id="VAR_003594" description="In NSHPT; decreased G-protein coupled receptor signaling pathway; does not affect cell membrane localization; dbSNP:rs28936684." evidence="22 53 70 75">
    <original>R</original>
    <variation>L</variation>
    <location>
        <position position="227"/>
    </location>
</feature>
<feature type="sequence variant" id="VAR_003595" description="In HHC1; G-protein coupled receptor signaling pathway; less markedly impaired relative to wild-type than L-227; does not affect cell membrane localization; dbSNP:rs28936684." evidence="22 65">
    <original>R</original>
    <variation>Q</variation>
    <location>
        <position position="227"/>
    </location>
</feature>
<feature type="sequence variant" id="VAR_078159" description="In HYPOC1." evidence="36">
    <original>E</original>
    <variation>K</variation>
    <location>
        <position position="228"/>
    </location>
</feature>
<feature type="sequence variant" id="VAR_058061" description="In dbSNP:rs62269092." evidence="12 34">
    <original>E</original>
    <variation>K</variation>
    <location>
        <position position="250"/>
    </location>
</feature>
<feature type="sequence variant" id="VAR_058062" description="In HHC1." evidence="34">
    <original>S</original>
    <variation>F</variation>
    <location>
        <position position="271"/>
    </location>
</feature>
<feature type="sequence variant" id="VAR_003596" description="In HHC1; decreased G-protein coupled receptor signaling pathway; dbSNP:rs121909259." evidence="6 53 59 68 72">
    <original>E</original>
    <variation>K</variation>
    <location>
        <position position="297"/>
    </location>
</feature>
<feature type="sequence variant" id="VAR_065200" description="In NSHPT." evidence="18">
    <location>
        <position position="336"/>
    </location>
</feature>
<feature type="sequence variant" id="VAR_065201" description="Mutation found in a patient with primary hyperparathyroidism detected at adulthood; inactivating mutation; mutant CASR is activated by a higher calcium concentrations than the wild-type." evidence="39">
    <original>P</original>
    <variation>T</variation>
    <location>
        <position position="339"/>
    </location>
</feature>
<feature type="sequence variant" id="VAR_060206" description="In EIG8; patients present juvenile myoclonus epilepsy." evidence="35">
    <original>E</original>
    <variation>A</variation>
    <location>
        <position position="354"/>
    </location>
</feature>
<feature type="sequence variant" id="VAR_058063" description="In HHC1; dbSNP:rs1064794291." evidence="34">
    <original>G</original>
    <variation>R</variation>
    <location>
        <position position="397"/>
    </location>
</feature>
<feature type="sequence variant" id="VAR_090417" description="In HHC1; likely benign." evidence="12">
    <original>T</original>
    <variation>A</variation>
    <location>
        <position position="445"/>
    </location>
</feature>
<feature type="sequence variant" id="VAR_078160" description="In HHC1; decreased G-protein coupled receptor signaling pathway; does not affect cell membrane localization." evidence="37">
    <original>Q</original>
    <variation>R</variation>
    <location>
        <position position="459"/>
    </location>
</feature>
<feature type="sequence variant" id="VAR_058064" description="In HHC1; loss-of-function mutation; the quantity of the mutant receptor is higher than that of the wild-type receptor; dose-response curves show that the mutation significantly reduces the sensitivity of the receptor to extracellular calcium concentrations; dbSNP:rs104893716." evidence="27">
    <original>R</original>
    <variation>Q</variation>
    <location>
        <position position="465"/>
    </location>
</feature>
<feature type="sequence variant" id="VAR_058065" description="In HHC1; dbSNP:rs193922423." evidence="34">
    <original>G</original>
    <variation>R</variation>
    <location>
        <position position="509"/>
    </location>
</feature>
<feature type="sequence variant" id="VAR_078161" description="In HHC1." evidence="36">
    <original>G</original>
    <variation>R</variation>
    <location>
        <position position="549"/>
    </location>
</feature>
<feature type="sequence variant" id="VAR_078162" description="In HHC1; decreased G-protein coupled receptor signaling pathway." evidence="41">
    <original>T</original>
    <variation>I</variation>
    <location>
        <position position="550"/>
    </location>
</feature>
<feature type="sequence variant" id="VAR_078163" description="In NSHPT; decreased G-protein coupled receptor signaling pathway; does not affect cell membrane localization; dbSNP:rs1060502861." evidence="33 53">
    <original>R</original>
    <variation>K</variation>
    <location>
        <position position="551"/>
    </location>
</feature>
<feature type="sequence variant" id="VAR_058066" description="In HHC1; dbSNP:rs104893719." evidence="34">
    <original>G</original>
    <variation>R</variation>
    <location>
        <position position="553"/>
    </location>
</feature>
<feature type="sequence variant" id="VAR_058067" description="In HHC1; dbSNP:rs777646067." evidence="34">
    <original>I</original>
    <variation>V</variation>
    <location>
        <position position="555"/>
    </location>
</feature>
<feature type="sequence variant" id="VAR_012649" description="In HHC1; Abolished G-protein coupled receptor activity." evidence="11 53 57">
    <original>G</original>
    <variation>E</variation>
    <location>
        <position position="557"/>
    </location>
</feature>
<feature type="sequence variant" id="VAR_058068" description="In HHC1." evidence="34 36">
    <original>C</original>
    <variation>Y</variation>
    <location>
        <position position="562"/>
    </location>
</feature>
<feature type="sequence variant" id="VAR_078164" description="In HHC1." evidence="36">
    <original>C</original>
    <variation>G</variation>
    <location>
        <position position="565"/>
    </location>
</feature>
<feature type="sequence variant" id="VAR_078165" description="In HYPOC1; increased G-protein coupled receptor signaling pathway." evidence="46">
    <original>P</original>
    <variation>H</variation>
    <location>
        <position position="569"/>
    </location>
</feature>
<feature type="sequence variant" id="VAR_078166" description="In HHC1; decreased G-protein coupled receptor signaling pathway; does not affect cell membrane localization." evidence="51">
    <original>G</original>
    <variation>W</variation>
    <location>
        <position position="571"/>
    </location>
</feature>
<feature type="sequence variant" id="VAR_058069" description="In HHC1; dbSNP:rs104893690." evidence="34">
    <original>C</original>
    <variation>F</variation>
    <location>
        <position position="582"/>
    </location>
</feature>
<feature type="sequence variant" id="VAR_003597" description="In NSHPT and HHC1; dbSNP:rs104893690." evidence="34 36 70">
    <original>C</original>
    <variation>Y</variation>
    <location>
        <position position="582"/>
    </location>
</feature>
<feature type="sequence variant" id="VAR_078167" description="In HHC1; impaired homodimerization; impaired cell membrane localization." evidence="29 36">
    <location>
        <begin position="583"/>
        <end position="1078"/>
    </location>
</feature>
<feature type="sequence variant" id="VAR_058070" description="In HYPOC1; there is a significant leftward shift in the concentration response curves for the effects of extracellular calcium on both intracellular calcium mobilization and MAPK activity; dbSNP:rs104893712." evidence="16 36">
    <original>E</original>
    <variation>K</variation>
    <location>
        <position position="604"/>
    </location>
</feature>
<feature type="sequence variant" id="VAR_058071" description="In HYPOC1; dbSNP:rs104893698." evidence="74">
    <original>F</original>
    <variation>S</variation>
    <location>
        <position position="612"/>
    </location>
</feature>
<feature type="sequence variant" id="VAR_015414" description="In HYPOC1; does not affect the total accumulation of inositol phosphates as a function of extracellular calcium concentrations in transfected cells; dbSNP:rs104893703." evidence="8">
    <original>L</original>
    <variation>V</variation>
    <location>
        <position position="616"/>
    </location>
</feature>
<feature type="sequence variant" id="VAR_058072" description="In HHC1." evidence="34">
    <original>G</original>
    <variation>D</variation>
    <location>
        <position position="623"/>
    </location>
</feature>
<feature type="sequence variant" id="VAR_065202" description="In NSHPT." evidence="18">
    <original>L</original>
    <variation>P</variation>
    <location>
        <position position="650"/>
    </location>
</feature>
<feature type="sequence variant" id="VAR_078168" description="In HHC1." evidence="69">
    <original>S</original>
    <variation>Y</variation>
    <location>
        <position position="657"/>
    </location>
</feature>
<feature type="sequence variant" id="VAR_078169" description="In HHC1." evidence="36">
    <original>C</original>
    <variation>Y</variation>
    <location>
        <position position="661"/>
    </location>
</feature>
<feature type="sequence variant" id="VAR_058073" description="In NSHPT; dbSNP:rs104893700." evidence="77">
    <original>G</original>
    <variation>E</variation>
    <location>
        <position position="670"/>
    </location>
</feature>
<feature type="sequence variant" id="VAR_058074" description="In HHC1." evidence="34">
    <original>G</original>
    <variation>R</variation>
    <location>
        <position position="670"/>
    </location>
</feature>
<feature type="sequence variant" id="VAR_078170" description="In HHC1; dbSNP:rs773146939." evidence="36">
    <original>R</original>
    <variation>H</variation>
    <location>
        <position position="680"/>
    </location>
</feature>
<feature type="sequence variant" id="VAR_003598" description="In HYPOC1; dbSNP:rs121909261." evidence="73">
    <original>Q</original>
    <variation>H</variation>
    <location>
        <position position="681"/>
    </location>
</feature>
<feature type="sequence variant" id="VAR_078171" description="In HYPOC1; increased G-protein coupled receptor signaling pathway; does not affect cell membrane localization." evidence="44">
    <original>Q</original>
    <variation>R</variation>
    <location>
        <position position="681"/>
    </location>
</feature>
<feature type="sequence variant" id="VAR_060207" description="In EIG8; patients present juvenile myoclonus epilepsy; dbSNP:rs753013993." evidence="35">
    <original>I</original>
    <variation>V</variation>
    <location>
        <position position="686"/>
    </location>
</feature>
<feature type="sequence variant" id="VAR_065203" description="In NSHPT." evidence="18">
    <original>V</original>
    <variation>M</variation>
    <location>
        <position position="689"/>
    </location>
</feature>
<feature type="sequence variant" id="VAR_065494" description="In HHC1." evidence="42">
    <original>V</original>
    <variation>M</variation>
    <location>
        <position position="697"/>
    </location>
</feature>
<feature type="sequence variant" id="VAR_078172" description="In HHC1; decreased protein level." evidence="47">
    <original>E</original>
    <variation>V</variation>
    <location>
        <position position="707"/>
    </location>
</feature>
<feature type="sequence variant" id="VAR_058075" description="In HYPOC1; increased G-protein coupled receptor signaling pathway; does not affect cell membrane localization; dbSNP:rs104893718." evidence="28 44">
    <original>L</original>
    <variation>Q</variation>
    <location>
        <position position="727"/>
    </location>
</feature>
<feature type="sequence variant" id="VAR_058076" description="In HHC1." evidence="34">
    <original>V</original>
    <variation>F</variation>
    <location>
        <position position="728"/>
    </location>
</feature>
<feature type="sequence variant" id="VAR_058077" description="In HHC1." evidence="34">
    <original>W</original>
    <variation>R</variation>
    <location>
        <position position="742"/>
    </location>
</feature>
<feature type="sequence variant" id="VAR_078173" description="In HHC1." evidence="69">
    <original>P</original>
    <variation>R</variation>
    <location>
        <position position="748"/>
    </location>
</feature>
<feature type="sequence variant" id="VAR_078174" description="In HHC1." evidence="36">
    <location>
        <position position="761"/>
    </location>
</feature>
<feature type="sequence variant" id="VAR_021019" description="In HYPOC1." evidence="21">
    <original>E</original>
    <variation>K</variation>
    <location>
        <position position="767"/>
    </location>
</feature>
<feature type="sequence variant" id="VAR_058078" description="In HYPOC1; the mutation shifts the concentration-response curve to the left and increases maximal activity; dbSNP:rs104893699." evidence="76">
    <original>L</original>
    <variation>R</variation>
    <location>
        <position position="773"/>
    </location>
</feature>
<feature type="sequence variant" id="VAR_078175" description="In HHC1; decreased G-protein coupled receptor signaling pathway; does not affect cell membrane localization." evidence="47">
    <original>G</original>
    <variation>S</variation>
    <location>
        <position position="774"/>
    </location>
</feature>
<feature type="sequence variant" id="VAR_058079" description="In HYPOC1; leftward shift in the concentration-response curve for the mutant receptor; cells cotransfected with both the wild-type and the mutant receptor show an EC(50) similar to the mutant; a gain-of-function mutation rendering the receptor more sensitive than normal to activation; dbSNP:rs104893701." evidence="79">
    <original>F</original>
    <variation>C</variation>
    <location>
        <position position="788"/>
    </location>
</feature>
<feature type="sequence variant" id="VAR_058080" description="In HYPOC1; induces a significant shift to the left relative to the wild-type protein in the MAPK response to increasing extracellular calcium concentrations; dbSNP:rs886041537 and dbSNP:rs104893711." evidence="17">
    <original>F</original>
    <variation>L</variation>
    <location>
        <position position="788"/>
    </location>
</feature>
<feature type="sequence variant" id="VAR_003599" description="In HHC1; decreased G-protein coupled receptor signaling pathway; dbSNP:rs121909258." evidence="36 43 68 72">
    <original>R</original>
    <variation>W</variation>
    <location>
        <position position="795"/>
    </location>
</feature>
<feature type="sequence variant" id="VAR_078176" description="In HYPOC1; increased G-protein coupled receptor signaling pathway." evidence="36 45">
    <original>N</original>
    <variation>I</variation>
    <location>
        <position position="802"/>
    </location>
</feature>
<feature type="sequence variant" id="VAR_078177" description="In HHC1; decreased G-protein coupled receptor signaling pathway; dbSNP:rs140022350." evidence="45">
    <original>N</original>
    <variation>S</variation>
    <location>
        <position position="802"/>
    </location>
</feature>
<feature type="sequence variant" id="VAR_003600" description="In HYPOC1; does not produce a significant activating effect; decreased cell surface receptor expression; dbSNP:rs104893693." evidence="73 76">
    <original>F</original>
    <variation>S</variation>
    <location>
        <position position="806"/>
    </location>
</feature>
<feature type="sequence variant" id="VAR_078178" description="In HHC1; decreased G-protein coupled receptor signaling pathway; dbSNP:rs1057518933." evidence="75">
    <original>V</original>
    <variation>I</variation>
    <location>
        <position position="817"/>
    </location>
</feature>
<feature type="sequence variant" id="VAR_058081" description="In HYPOC1; the concentration-response curve of the mutant receptor is left-shifted and its EC(50) is significantly lower than that of the wild-type; dbSNP:rs104893710." evidence="13">
    <original>S</original>
    <variation>F</variation>
    <location>
        <position position="820"/>
    </location>
</feature>
<feature type="sequence variant" id="VAR_078179" description="In HYPOC1." evidence="36">
    <original>G</original>
    <variation>S</variation>
    <location>
        <position position="830"/>
    </location>
</feature>
<feature type="sequence variant" id="VAR_078180" description="In HYPOC1." evidence="36">
    <original>F</original>
    <variation>L</variation>
    <location>
        <position position="832"/>
    </location>
</feature>
<feature type="sequence variant" id="VAR_078181" description="In HYPOC1." evidence="36">
    <original>F</original>
    <variation>S</variation>
    <location>
        <position position="832"/>
    </location>
</feature>
<feature type="sequence variant" id="VAR_078182" description="In HYPOC1; increased G-protein coupled receptor signaling pathway." evidence="46">
    <original>I</original>
    <variation>T</variation>
    <location>
        <position position="839"/>
    </location>
</feature>
<feature type="sequence variant" id="VAR_058082" description="In HYPOC1; some patients have clinical features of Bartter syndrome; shifts the concentration-response curve of calcium ions to the left; dbSNP:rs104893706." evidence="14 15">
    <original>A</original>
    <variation>E</variation>
    <location>
        <position position="843"/>
    </location>
</feature>
<feature type="sequence variant" id="VAR_003601" description="In dbSNP:rs200777304." evidence="73">
    <original>C</original>
    <variation>S</variation>
    <location>
        <position position="851"/>
    </location>
</feature>
<feature type="sequence variant" id="VAR_058083" description="Found in a patient with hypercalciuric hypercalcemia; likely pathogenic; mutant CASR has a right-shifted dose-response to extracellular calcium concentrations; activated by a higher calcium concentrations than the wild-type; dbSNP:rs104893704." evidence="9">
    <original>F</original>
    <variation>L</variation>
    <location>
        <position position="881"/>
    </location>
</feature>
<feature type="sequence variant" id="VAR_090418" description="In HHC1; increased localization to the plasma membrane." evidence="12 38">
    <original>R</original>
    <variation>P</variation>
    <location>
        <position position="886"/>
    </location>
</feature>
<feature type="sequence variant" id="VAR_058084" description="In HHC1." evidence="34">
    <original>R</original>
    <variation>W</variation>
    <location>
        <position position="886"/>
    </location>
</feature>
<feature type="sequence variant" id="VAR_090419" description="Found in patients with chronic pancreatitis; increased localization to the plasma membrane." evidence="25 38">
    <original>R</original>
    <variation>H</variation>
    <location>
        <position position="896"/>
    </location>
</feature>
<feature type="sequence variant" id="VAR_060208" description="In EIG8; increased localization to the plasma membrane; dbSNP:rs121909269." evidence="35 38">
    <original>R</original>
    <variation>Q</variation>
    <location>
        <position position="898"/>
    </location>
</feature>
<feature type="sequence variant" id="VAR_020220" description="In dbSNP:rs4987051.">
    <original>P</original>
    <variation>T</variation>
    <location>
        <position position="951"/>
    </location>
</feature>
<feature type="sequence variant" id="VAR_078183" description="In HHC1; decreased G-protein coupled receptor signaling pathway; dbSNP:rs200620134." evidence="48">
    <original>T</original>
    <variation>M</variation>
    <location>
        <position position="972"/>
    </location>
</feature>
<feature type="sequence variant" id="VAR_014450" description="Correlated with high serum level of calcium; is also a potential predisposing factor in disorders of bone and mineral metabolism; dbSNP:rs1801725." evidence="5 10 12 18 20 27 33 34 35 37 69 82">
    <original>A</original>
    <variation>S</variation>
    <location>
        <position position="986"/>
    </location>
</feature>
<feature type="sequence variant" id="VAR_060209" description="In EIG8; patients present juvenile myoclonus epilepsy." evidence="35">
    <original>A</original>
    <variation>G</variation>
    <location>
        <position position="988"/>
    </location>
</feature>
<feature type="sequence variant" id="VAR_060210" description="In EIG8; patients present juvenile myoclonus epilepsy; dbSNP:rs759027000." evidence="35">
    <original>A</original>
    <variation>V</variation>
    <location>
        <position position="988"/>
    </location>
</feature>
<feature type="sequence variant" id="VAR_020221" description="Correlated with low serum level of calcium; dbSNP:rs1042636." evidence="12 13 18 20 21 34 35 66 69 82">
    <original>R</original>
    <variation>G</variation>
    <location>
        <position position="990"/>
    </location>
</feature>
<feature type="sequence variant" id="VAR_014451" description="In dbSNP:rs1801726." evidence="12 18 20 34 37 69 82">
    <original>E</original>
    <variation>Q</variation>
    <location>
        <position position="1011"/>
    </location>
</feature>
<feature type="mutagenesis site" description="Increased calcium sensitivity." evidence="19">
    <original>K</original>
    <variation>A</variation>
    <variation>N</variation>
    <variation>E</variation>
    <variation>D</variation>
    <location>
        <position position="29"/>
    </location>
</feature>
<feature type="mutagenesis site" description="Does not affect calcium sensitivity." evidence="19">
    <original>K</original>
    <variation>R</variation>
    <location>
        <position position="29"/>
    </location>
</feature>
<feature type="mutagenesis site" description="Decreased calcium-induced G-protein-coupled receptor activity." evidence="57">
    <original>L</original>
    <variation>A</variation>
    <location>
        <position position="51"/>
    </location>
</feature>
<feature type="mutagenesis site" description="Abolishes G-protein coupled receptor signaling pathway." evidence="53">
    <original>R</original>
    <variation>E</variation>
    <location>
        <position position="69"/>
    </location>
</feature>
<feature type="mutagenesis site" description="Abolished calcium-induced G-protein-coupled receptor activity." evidence="57">
    <original>W</original>
    <variation>A</variation>
    <location>
        <position position="70"/>
    </location>
</feature>
<feature type="mutagenesis site" description="Abolishes G-protein coupled receptor activity." evidence="53">
    <original>N</original>
    <variation>I</variation>
    <location>
        <position position="102"/>
    </location>
</feature>
<feature type="mutagenesis site" description="Abolished calcium-induced G-protein-coupled receptor activity." evidence="53 57">
    <original>T</original>
    <variation>A</variation>
    <location>
        <position position="145"/>
    </location>
</feature>
<feature type="mutagenesis site" description="Reduced calcium-induced G-protein-coupled receptor activity." evidence="59">
    <original>T</original>
    <variation>I</variation>
    <location>
        <position position="145"/>
    </location>
</feature>
<feature type="mutagenesis site" description="Abolished calcium-induced G-protein-coupled receptor activity." evidence="53 57 59">
    <original>S</original>
    <variation>A</variation>
    <location>
        <position position="147"/>
    </location>
</feature>
<feature type="mutagenesis site" description="Abolished calcium-induced G-protein-coupled receptor activity." evidence="53 55 57 59">
    <original>S</original>
    <variation>A</variation>
    <location>
        <position position="170"/>
    </location>
</feature>
<feature type="mutagenesis site" description="Reduced calcium-induced G-protein-coupled receptor activity." evidence="59">
    <original>S</original>
    <variation>K</variation>
    <location>
        <position position="170"/>
    </location>
</feature>
<feature type="mutagenesis site" description="Reduced calcium-induced G-protein-coupled receptor activity." evidence="55">
    <original>D</original>
    <variation>A</variation>
    <location>
        <position position="190"/>
    </location>
</feature>
<feature type="mutagenesis site" description="Reduced calcium-induced G-protein-coupled receptor activity." evidence="59">
    <original>D</original>
    <variation>K</variation>
    <location>
        <position position="190"/>
    </location>
</feature>
<feature type="mutagenesis site" description="Reduced calcium-induced G-protein-coupled receptor activity." evidence="55">
    <original>Q</original>
    <variation>A</variation>
    <location>
        <position position="193"/>
    </location>
</feature>
<feature type="mutagenesis site" description="Strongly reduced calcium-induced G-protein-coupled receptor activity." evidence="55">
    <original>D</original>
    <variation>A</variation>
    <location>
        <position position="216"/>
    </location>
</feature>
<feature type="mutagenesis site" description="Abolished calcium-induced G-protein-coupled receptor activity." evidence="55 57">
    <original>Y</original>
    <variation>A</variation>
    <location>
        <position position="218"/>
    </location>
</feature>
<feature type="mutagenesis site" description="Abolished calcium-induced G-protein-coupled receptor activity." evidence="53 59">
    <original>Y</original>
    <variation>S</variation>
    <location>
        <position position="218"/>
    </location>
</feature>
<feature type="mutagenesis site" description="Does not affect calcium-induced G-protein-coupled receptor activity." evidence="55">
    <original>S</original>
    <variation>A</variation>
    <location>
        <position position="272"/>
    </location>
</feature>
<feature type="mutagenesis site" description="Does not affect calcium-induced G-protein-coupled receptor activity." evidence="55">
    <original>D</original>
    <variation>A</variation>
    <location>
        <position position="275"/>
    </location>
</feature>
<feature type="mutagenesis site" description="Abolished calcium-induced G-protein-coupled receptor activity." evidence="55 57">
    <original>E</original>
    <variation>A</variation>
    <location>
        <position position="297"/>
    </location>
</feature>
<feature type="mutagenesis site" description="Abolishes ability to sense calcium or magnesium levels." evidence="52">
    <original>E</original>
    <variation>I</variation>
    <location>
        <position position="297"/>
    </location>
</feature>
<feature type="mutagenesis site" description="Abolishes G-protein coupled receptor signaling pathway." evidence="53">
    <original>S</original>
    <variation>L</variation>
    <location>
        <position position="417"/>
    </location>
</feature>
<feature type="mutagenesis site" description="Decreased calcium-induced G-protein-coupled receptor activity." evidence="57">
    <original>F</original>
    <variation>A</variation>
    <location>
        <position position="444"/>
    </location>
</feature>
<feature type="mutagenesis site" description="Decreased calcium-induced G-protein-coupled receptor activity." evidence="53 57">
    <original>W</original>
    <variation>A</variation>
    <location>
        <position position="458"/>
    </location>
</feature>
<feature type="mutagenesis site" description="Abolishes ability of agonist AMG 416 to activate G-protein-coupled receptor activity." evidence="50">
    <original>C</original>
    <variation>S</variation>
    <variation>Y</variation>
    <location>
        <position position="482"/>
    </location>
</feature>
<feature type="mutagenesis site" description="Reduced calcium-induced G-protein-coupled receptor activity." evidence="59">
    <original>Y</original>
    <variation>F</variation>
    <location>
        <position position="489"/>
    </location>
</feature>
<feature type="mutagenesis site" description="Decreased calcium sensitivity." evidence="57">
    <original>IEF</original>
    <variation>AEA</variation>
    <location>
        <begin position="603"/>
        <end position="605"/>
    </location>
</feature>
<feature type="mutagenesis site" description="Abolished calcium-induced G-protein-coupled receptor activity." evidence="63">
    <original>F</original>
    <variation>A</variation>
    <location>
        <position position="706"/>
    </location>
</feature>
<feature type="mutagenesis site" description="Does not affect G-protein-coupled receptor activity." evidence="62">
    <original>K</original>
    <variation>A</variation>
    <location>
        <position position="709"/>
    </location>
</feature>
<feature type="mutagenesis site" description="Does not affect G-protein-coupled receptor activity." evidence="62">
    <original>I</original>
    <variation>A</variation>
    <location>
        <position position="710"/>
    </location>
</feature>
<feature type="mutagenesis site" description="Does not affect G-protein-coupled receptor activity." evidence="62">
    <original>P</original>
    <variation>A</variation>
    <location>
        <position position="711"/>
    </location>
</feature>
<feature type="mutagenesis site" description="Decreased G(q)-mediated G-protein-coupled receptor activity without affecting G(i)-mediated G-protein-coupled signaling." evidence="62">
    <original>TSF</original>
    <variation>ASA</variation>
    <location>
        <begin position="712"/>
        <end position="714"/>
    </location>
</feature>
<feature type="mutagenesis site" description="Decreased G(i)-mediated G-protein-coupled receptor activity without affecting G(q)-mediated G-protein-coupled signaling." evidence="62">
    <original>RKWW</original>
    <variation>AKWA</variation>
    <location>
        <begin position="716"/>
        <end position="719"/>
    </location>
</feature>
<feature type="mutagenesis site" description="Decreased calcium sensitivity." evidence="57">
    <original>IFI</original>
    <variation>AAA</variation>
    <location>
        <begin position="761"/>
        <end position="763"/>
    </location>
</feature>
<feature type="mutagenesis site" description="Decreased calcium sensitivity." evidence="57">
    <original>F</original>
    <variation>A</variation>
    <location>
        <position position="762"/>
    </location>
</feature>
<feature type="mutagenesis site" description="Decreased activation by positive allosteric modulators; when associated with W-833." evidence="58">
    <original>L</original>
    <variation>W</variation>
    <location>
        <position position="773"/>
    </location>
</feature>
<feature type="mutagenesis site" description="Increased activation by positive allosteric modulators; when associated with W-822." evidence="58">
    <original>C</original>
    <variation>W</variation>
    <location>
        <position position="781"/>
    </location>
</feature>
<feature type="mutagenesis site" description="Abolished G(s)-, G(q)- and G(i)-mediated G-protein-coupled receptor activity." evidence="63">
    <original>F</original>
    <variation>A</variation>
    <location>
        <position position="801"/>
    </location>
</feature>
<feature type="mutagenesis site" description="Strongly decreased G(q)- and G(i)-mediated G-protein-coupled receptor activity." evidence="62">
    <original>K</original>
    <variation>A</variation>
    <location>
        <position position="805"/>
    </location>
</feature>
<feature type="mutagenesis site" description="Strongly decreased G(q)- and G(i)-mediated G-protein-coupled receptor activity." evidence="62">
    <original>F</original>
    <variation>A</variation>
    <location>
        <position position="809"/>
    </location>
</feature>
<feature type="mutagenesis site" description="Abolished calcium-induced G-protein-coupled receptor activity." evidence="63">
    <original>L</original>
    <variation>A</variation>
    <location>
        <position position="812"/>
    </location>
</feature>
<feature type="mutagenesis site" description="Abolished calcium-induced G-protein-coupled receptor activity." evidence="63">
    <original>I</original>
    <variation>A</variation>
    <location>
        <position position="813"/>
    </location>
</feature>
<feature type="mutagenesis site" description="Abolished calcium-induced G-protein-coupled receptor activity." evidence="63">
    <original>I</original>
    <variation>A</variation>
    <location>
        <position position="816"/>
    </location>
</feature>
<feature type="mutagenesis site" description="Increased activation by positive allosteric modulators; when associated with W-781." evidence="58">
    <original>I</original>
    <variation>W</variation>
    <location>
        <position position="822"/>
    </location>
</feature>
<feature type="mutagenesis site" description="Does not affect G-protein-coupled receptor activity." evidence="62">
    <original>Y</original>
    <variation>A</variation>
    <location>
        <position position="825"/>
    </location>
</feature>
<feature type="mutagenesis site" description="Does not affect G-protein-coupled receptor activity." evidence="62">
    <original>Y</original>
    <variation>A</variation>
    <location>
        <position position="829"/>
    </location>
</feature>
<feature type="mutagenesis site" description="Does not affect G-protein-coupled receptor activity." evidence="62">
    <original>V</original>
    <variation>A</variation>
    <location>
        <position position="833"/>
    </location>
</feature>
<feature type="mutagenesis site" description="Decreased activation by positive allosteric modulators; when associated with W-833." evidence="58">
    <original>V</original>
    <variation>W</variation>
    <location>
        <position position="833"/>
    </location>
</feature>
<feature type="mutagenesis site" description="Abolished G(s)-, G(q)- and G(i)-mediated G-protein-coupled receptor activity." evidence="63">
    <original>RCST</original>
    <variation>ACSA</variation>
    <location>
        <begin position="873"/>
        <end position="876"/>
    </location>
</feature>
<feature type="mutagenesis site" description="Decreased G(q)-mediated G-protein-coupled receptor activity without affecting G(i)-mediated G-protein-coupled signaling." evidence="62">
    <original>FKVAARAT</original>
    <variation>AKVAARAD</variation>
    <location>
        <begin position="881"/>
        <end position="888"/>
    </location>
</feature>
<feature type="mutagenesis site" description="Decreased G(q)-mediated G-protein-coupled receptor activity." evidence="62">
    <original>A</original>
    <variation>W</variation>
    <location>
        <position position="884"/>
    </location>
</feature>
<feature type="mutagenesis site" description="Decreased G(q)-mediated G-protein-coupled receptor activity without affecting G(i)-mediated G-protein-coupled signaling." evidence="62">
    <location>
        <position position="887"/>
    </location>
</feature>
<feature type="mutagenesis site" description="Mimics phosphorylation; strongly decreased calcium-induced G-protein-coupled receptor activity." evidence="31">
    <original>T</original>
    <variation>D</variation>
    <location>
        <position position="888"/>
    </location>
</feature>
<feature type="mutagenesis site" description="Does not affect calcium-induced G-protein-coupled receptor activity." evidence="31">
    <original>T</original>
    <variation>N</variation>
    <variation>Q</variation>
    <variation>K</variation>
    <location>
        <position position="888"/>
    </location>
</feature>
<feature type="mutagenesis site" description="Decreased calcium-induced G-protein-coupled receptor activity. Strongly decreased calcium-induced G-protein-coupled receptor activity; when associated with A-895 and A-915." evidence="80">
    <original>T</original>
    <variation>V</variation>
    <location>
        <position position="888"/>
    </location>
</feature>
<feature type="mutagenesis site" description="Increased localization to the plasma membrane." evidence="38">
    <original>RRSNVSRKR</original>
    <variation>AASNVSAAA</variation>
    <location>
        <begin position="890"/>
        <end position="898"/>
    </location>
</feature>
<feature type="mutagenesis site" description="Slightly decreased calcium-induced G-protein-coupled receptor activity. Strongly decreased calcium-induced G-protein-coupled receptor activity; when associated with A-888 and A-915." evidence="80">
    <original>S</original>
    <variation>A</variation>
    <location>
        <position position="895"/>
    </location>
</feature>
<feature type="mutagenesis site" description="Slightly decreased calcium-induced G-protein-coupled receptor activity. Strongly decreased calcium-induced G-protein-coupled receptor activity; when associated with A-888 and A-895." evidence="80">
    <original>S</original>
    <variation>A</variation>
    <location>
        <position position="915"/>
    </location>
</feature>
<feature type="sequence conflict" description="In Ref. 3; BAA09453." evidence="91" ref="3">
    <original>I</original>
    <variation>T</variation>
    <location>
        <position position="857"/>
    </location>
</feature>
<feature type="sequence conflict" description="In Ref. 3; BAA09453." evidence="91" ref="3">
    <original>A</original>
    <variation>R</variation>
    <location>
        <position position="878"/>
    </location>
</feature>
<feature type="sequence conflict" description="In Ref. 2; AAA86503." evidence="91" ref="2">
    <original>Q</original>
    <variation>R</variation>
    <location>
        <position position="926"/>
    </location>
</feature>
<feature type="strand" evidence="131">
    <location>
        <begin position="22"/>
        <end position="24"/>
    </location>
</feature>
<feature type="strand" evidence="123">
    <location>
        <begin position="26"/>
        <end position="28"/>
    </location>
</feature>
<feature type="strand" evidence="123">
    <location>
        <begin position="31"/>
        <end position="38"/>
    </location>
</feature>
<feature type="strand" evidence="123">
    <location>
        <begin position="40"/>
        <end position="44"/>
    </location>
</feature>
<feature type="strand" evidence="128">
    <location>
        <begin position="51"/>
        <end position="53"/>
    </location>
</feature>
<feature type="strand" evidence="123">
    <location>
        <begin position="60"/>
        <end position="63"/>
    </location>
</feature>
<feature type="helix" evidence="123">
    <location>
        <begin position="65"/>
        <end position="82"/>
    </location>
</feature>
<feature type="strand" evidence="123">
    <location>
        <begin position="85"/>
        <end position="90"/>
    </location>
</feature>
<feature type="strand" evidence="123">
    <location>
        <begin position="93"/>
        <end position="99"/>
    </location>
</feature>
<feature type="helix" evidence="123">
    <location>
        <begin position="104"/>
        <end position="114"/>
    </location>
</feature>
<feature type="helix" evidence="123">
    <location>
        <begin position="116"/>
        <end position="123"/>
    </location>
</feature>
<feature type="helix" evidence="123">
    <location>
        <begin position="125"/>
        <end position="128"/>
    </location>
</feature>
<feature type="strand" evidence="126">
    <location>
        <begin position="129"/>
        <end position="131"/>
    </location>
</feature>
<feature type="strand" evidence="126">
    <location>
        <begin position="133"/>
        <end position="135"/>
    </location>
</feature>
<feature type="strand" evidence="123">
    <location>
        <begin position="138"/>
        <end position="142"/>
    </location>
</feature>
<feature type="helix" evidence="123">
    <location>
        <begin position="147"/>
        <end position="159"/>
    </location>
</feature>
<feature type="strand" evidence="123">
    <location>
        <begin position="164"/>
        <end position="168"/>
    </location>
</feature>
<feature type="helix" evidence="123">
    <location>
        <begin position="172"/>
        <end position="175"/>
    </location>
</feature>
<feature type="turn" evidence="123">
    <location>
        <begin position="177"/>
        <end position="179"/>
    </location>
</feature>
<feature type="strand" evidence="123">
    <location>
        <begin position="183"/>
        <end position="187"/>
    </location>
</feature>
<feature type="helix" evidence="123">
    <location>
        <begin position="191"/>
        <end position="203"/>
    </location>
</feature>
<feature type="strand" evidence="123">
    <location>
        <begin position="208"/>
        <end position="216"/>
    </location>
</feature>
<feature type="helix" evidence="123">
    <location>
        <begin position="219"/>
        <end position="232"/>
    </location>
</feature>
<feature type="strand" evidence="123">
    <location>
        <begin position="237"/>
        <end position="243"/>
    </location>
</feature>
<feature type="helix" evidence="123">
    <location>
        <begin position="249"/>
        <end position="261"/>
    </location>
</feature>
<feature type="strand" evidence="123">
    <location>
        <begin position="266"/>
        <end position="270"/>
    </location>
</feature>
<feature type="helix" evidence="123">
    <location>
        <begin position="273"/>
        <end position="285"/>
    </location>
</feature>
<feature type="strand" evidence="123">
    <location>
        <begin position="292"/>
        <end position="295"/>
    </location>
</feature>
<feature type="helix" evidence="123">
    <location>
        <begin position="297"/>
        <end position="300"/>
    </location>
</feature>
<feature type="turn" evidence="123">
    <location>
        <begin position="303"/>
        <end position="305"/>
    </location>
</feature>
<feature type="helix" evidence="123">
    <location>
        <begin position="308"/>
        <end position="310"/>
    </location>
</feature>
<feature type="helix" evidence="123">
    <location>
        <begin position="311"/>
        <end position="314"/>
    </location>
</feature>
<feature type="strand" evidence="123">
    <location>
        <begin position="318"/>
        <end position="322"/>
    </location>
</feature>
<feature type="helix" evidence="123">
    <location>
        <begin position="330"/>
        <end position="335"/>
    </location>
</feature>
<feature type="turn" evidence="123">
    <location>
        <begin position="339"/>
        <end position="341"/>
    </location>
</feature>
<feature type="strand" evidence="123">
    <location>
        <begin position="343"/>
        <end position="345"/>
    </location>
</feature>
<feature type="helix" evidence="123">
    <location>
        <begin position="348"/>
        <end position="356"/>
    </location>
</feature>
<feature type="strand" evidence="124">
    <location>
        <begin position="358"/>
        <end position="360"/>
    </location>
</feature>
<feature type="helix" evidence="124">
    <location>
        <begin position="374"/>
        <end position="378"/>
    </location>
</feature>
<feature type="strand" evidence="124">
    <location>
        <begin position="384"/>
        <end position="386"/>
    </location>
</feature>
<feature type="helix" evidence="124">
    <location>
        <begin position="387"/>
        <end position="389"/>
    </location>
</feature>
<feature type="helix" evidence="123">
    <location>
        <begin position="401"/>
        <end position="403"/>
    </location>
</feature>
<feature type="turn" evidence="123">
    <location>
        <begin position="407"/>
        <end position="409"/>
    </location>
</feature>
<feature type="helix" evidence="123">
    <location>
        <begin position="416"/>
        <end position="435"/>
    </location>
</feature>
<feature type="strand" evidence="123">
    <location>
        <begin position="441"/>
        <end position="444"/>
    </location>
</feature>
<feature type="helix" evidence="123">
    <location>
        <begin position="445"/>
        <end position="447"/>
    </location>
</feature>
<feature type="helix" evidence="123">
    <location>
        <begin position="452"/>
        <end position="454"/>
    </location>
</feature>
<feature type="helix" evidence="123">
    <location>
        <begin position="457"/>
        <end position="465"/>
    </location>
</feature>
<feature type="strand" evidence="123">
    <location>
        <begin position="468"/>
        <end position="470"/>
    </location>
</feature>
<feature type="strand" evidence="125">
    <location>
        <begin position="472"/>
        <end position="474"/>
    </location>
</feature>
<feature type="strand" evidence="123">
    <location>
        <begin position="476"/>
        <end position="478"/>
    </location>
</feature>
<feature type="strand" evidence="124">
    <location>
        <begin position="481"/>
        <end position="485"/>
    </location>
</feature>
<feature type="strand" evidence="123">
    <location>
        <begin position="489"/>
        <end position="496"/>
    </location>
</feature>
<feature type="turn" evidence="123">
    <location>
        <begin position="498"/>
        <end position="500"/>
    </location>
</feature>
<feature type="strand" evidence="123">
    <location>
        <begin position="502"/>
        <end position="511"/>
    </location>
</feature>
<feature type="strand" evidence="122">
    <location>
        <begin position="513"/>
        <end position="515"/>
    </location>
</feature>
<feature type="strand" evidence="123">
    <location>
        <begin position="519"/>
        <end position="523"/>
    </location>
</feature>
<feature type="helix" evidence="123">
    <location>
        <begin position="525"/>
        <end position="527"/>
    </location>
</feature>
<feature type="turn" evidence="123">
    <location>
        <begin position="531"/>
        <end position="533"/>
    </location>
</feature>
<feature type="strand" evidence="127">
    <location>
        <begin position="550"/>
        <end position="554"/>
    </location>
</feature>
<feature type="strand" evidence="124">
    <location>
        <begin position="556"/>
        <end position="558"/>
    </location>
</feature>
<feature type="strand" evidence="127">
    <location>
        <begin position="563"/>
        <end position="567"/>
    </location>
</feature>
<feature type="strand" evidence="127">
    <location>
        <begin position="576"/>
        <end position="578"/>
    </location>
</feature>
<feature type="strand" evidence="126">
    <location>
        <begin position="579"/>
        <end position="581"/>
    </location>
</feature>
<feature type="strand" evidence="127">
    <location>
        <begin position="587"/>
        <end position="591"/>
    </location>
</feature>
<feature type="strand" evidence="127">
    <location>
        <begin position="596"/>
        <end position="600"/>
    </location>
</feature>
<feature type="strand" evidence="127">
    <location>
        <begin position="602"/>
        <end position="604"/>
    </location>
</feature>
<feature type="strand" evidence="128">
    <location>
        <begin position="608"/>
        <end position="610"/>
    </location>
</feature>
<feature type="helix" evidence="127">
    <location>
        <begin position="611"/>
        <end position="636"/>
    </location>
</feature>
<feature type="turn" evidence="128">
    <location>
        <begin position="637"/>
        <end position="639"/>
    </location>
</feature>
<feature type="helix" evidence="127">
    <location>
        <begin position="641"/>
        <end position="645"/>
    </location>
</feature>
<feature type="helix" evidence="127">
    <location>
        <begin position="650"/>
        <end position="663"/>
    </location>
</feature>
<feature type="helix" evidence="127">
    <location>
        <begin position="664"/>
        <end position="668"/>
    </location>
</feature>
<feature type="strand" evidence="128">
    <location>
        <begin position="669"/>
        <end position="671"/>
    </location>
</feature>
<feature type="turn" evidence="127">
    <location>
        <begin position="674"/>
        <end position="678"/>
    </location>
</feature>
<feature type="helix" evidence="127">
    <location>
        <begin position="681"/>
        <end position="696"/>
    </location>
</feature>
<feature type="turn" evidence="127">
    <location>
        <begin position="701"/>
        <end position="705"/>
    </location>
</feature>
<feature type="helix" evidence="130">
    <location>
        <begin position="715"/>
        <end position="718"/>
    </location>
</feature>
<feature type="helix" evidence="129">
    <location>
        <begin position="721"/>
        <end position="724"/>
    </location>
</feature>
<feature type="helix" evidence="127">
    <location>
        <begin position="725"/>
        <end position="745"/>
    </location>
</feature>
<feature type="strand" evidence="127">
    <location>
        <begin position="749"/>
        <end position="753"/>
    </location>
</feature>
<feature type="turn" evidence="126">
    <location>
        <begin position="755"/>
        <end position="757"/>
    </location>
</feature>
<feature type="strand" evidence="127">
    <location>
        <begin position="758"/>
        <end position="766"/>
    </location>
</feature>
<feature type="helix" evidence="127">
    <location>
        <begin position="771"/>
        <end position="793"/>
    </location>
</feature>
<feature type="turn" evidence="127">
    <location>
        <begin position="794"/>
        <end position="796"/>
    </location>
</feature>
<feature type="turn" evidence="127">
    <location>
        <begin position="800"/>
        <end position="802"/>
    </location>
</feature>
<feature type="helix" evidence="127">
    <location>
        <begin position="803"/>
        <end position="820"/>
    </location>
</feature>
<feature type="helix" evidence="127">
    <location>
        <begin position="822"/>
        <end position="827"/>
    </location>
</feature>
<feature type="helix" evidence="131">
    <location>
        <begin position="831"/>
        <end position="833"/>
    </location>
</feature>
<feature type="helix" evidence="127">
    <location>
        <begin position="834"/>
        <end position="852"/>
    </location>
</feature>
<feature type="helix" evidence="127">
    <location>
        <begin position="854"/>
        <end position="862"/>
    </location>
</feature>
<feature type="strand" evidence="129">
    <location>
        <begin position="865"/>
        <end position="868"/>
    </location>
</feature>
<feature type="helix" evidence="127">
    <location>
        <begin position="869"/>
        <end position="872"/>
    </location>
</feature>
<feature type="helix" evidence="127">
    <location>
        <begin position="880"/>
        <end position="885"/>
    </location>
</feature>
<organism>
    <name type="scientific">Homo sapiens</name>
    <name type="common">Human</name>
    <dbReference type="NCBI Taxonomy" id="9606"/>
    <lineage>
        <taxon>Eukaryota</taxon>
        <taxon>Metazoa</taxon>
        <taxon>Chordata</taxon>
        <taxon>Craniata</taxon>
        <taxon>Vertebrata</taxon>
        <taxon>Euteleostomi</taxon>
        <taxon>Mammalia</taxon>
        <taxon>Eutheria</taxon>
        <taxon>Euarchontoglires</taxon>
        <taxon>Primates</taxon>
        <taxon>Haplorrhini</taxon>
        <taxon>Catarrhini</taxon>
        <taxon>Hominidae</taxon>
        <taxon>Homo</taxon>
    </lineage>
</organism>
<gene>
    <name evidence="83 93" type="primary">CASR</name>
    <name type="synonym">GPRC2A</name>
    <name evidence="89" type="synonym">PCAR1</name>
</gene>